<sequence length="505" mass="57620">MGETLGDSPIDPESDSFTDTLSANISQEMTMVDTEMPFWPTNFGISSVDLSVMEDHSHSFDIKPFTTVDFSSISTPHYEDIPFTRTDPVVADYKYDLKLQEYQSAIKVEPASPPYYSEKTQLYNKPHEEPSNSLMAIECRVCGDKASGFHYGVHACEGCKGFFRRTIRLKLIYDRCDLNCRIHKKSRNKCQYCRFQKCLAVGMSHNAIRFGRMPQAEKEKLLAEISSDIDQLNPESADLRALAKHLYDSYIKSFPLTKAKARAILTGKTTDKSPFVIYDMNSLMMGEDKIKFKHITPLQEQSKEVAIRIFQGCQFRSVEAVQEITEYAKSIPGFVNLDLNDQVTLLKYGVHEIIYTMLASLMNKDGVLISEGQGFMTREFLKSLRKPFGDFMEPKFEFAVKFNALELDDSDLAIFIAVIILSGDRPGLLNVKPIEDIQDNLLQALELQLKLNHPESSQLFAKLLQKMTDLRQIVTEHVQLLQVIKKTETDMSLHPLLQEIYKDLY</sequence>
<comment type="function">
    <text evidence="2 26 33 36 40">Nuclear receptor that binds peroxisome proliferators such as hypolipidemic drugs and fatty acids. Once activated by a ligand, the nuclear receptor binds to DNA specific PPAR response elements (PPRE) and modulates the transcription of its target genes, such as acyl-CoA oxidase. It therefore controls the peroxisomal beta-oxidation pathway of fatty acids. Key regulator of adipocyte differentiation and glucose homeostasis. ARF6 acts as a key regulator of the tissue-specific adipocyte P2 (aP2) enhancer. Acts as a critical regulator of gut homeostasis by suppressing NF-kappa-B-mediated pro-inflammatory responses. Plays a role in the regulation of cardiovascular circadian rhythms by regulating the transcription of BMAL1 in the blood vessels (By similarity).</text>
</comment>
<comment type="function">
    <text evidence="37">(Microbial infection) Upon treatment with M.tuberculosis or its lipoprotein LpqH, phosphorylation of MAPK p38 and IL-6 production are modulated, probably via this protein.</text>
</comment>
<comment type="activity regulation">
    <text evidence="26">PDPK1 activates its transcriptional activity independently of its kinase activity.</text>
</comment>
<comment type="subunit">
    <text evidence="2 9 11 13 14 16 18 19 20 23 24 25 26 27 28 29 30 31 32 34 35 36 42">Interacts with FOXO1 (acetylated form) (By similarity). Heterodimer with other nuclear receptors, such as RXRA. The heterodimer with the retinoic acid receptor RXRA is called adipocyte-specific transcription factor ARF6. Interacts with NCOA6 coactivator, leading to a strong increase in transcription of target genes. Interacts with coactivator PPARBP, leading to a mild increase in transcription of target genes. Interacts with NOCA7 in a ligand-inducible manner. Interacts with NCOA1 and NCOA2 LXXLL motifs. Interacts with ASXL1, ASXL2, DNTTIP2, FAM120B, MAP2K1/MEK1, NR0B2, PDPK1, PRDM16, PRMT2 and TGFB1I1. Interacts (when activated by agonist) with PPP5C. Interacts with HELZ2 and THRAP3; the interaction stimulates the transcriptional activity of PPARG. Interacts with PER2, the interaction is ligand dependent and blocks PPARG recruitment to target promoters. Interacts with NOCT. Interacts with ACTN4. Interacts (when in the liganded conformation) with GPS2 (By similarity). Interacts with CRY1 and CRY2 in a ligand-dependent manner (By similarity). In the absence of hormonal ligand, interacts with TACC1 (PubMed:20078863). In macrophages, interacts with PAQR3 and STUB1; the interactions promote PPARG poylubiquitination and STUB1-mediated degradation (By similarity).</text>
</comment>
<comment type="interaction">
    <interactant intactId="EBI-781384">
        <id>P37231</id>
    </interactant>
    <interactant intactId="EBI-2838710">
        <id>Q8NFM4</id>
        <label>ADCY4</label>
    </interactant>
    <organismsDiffer>false</organismsDiffer>
    <experiments>3</experiments>
</comment>
<comment type="interaction">
    <interactant intactId="EBI-781384">
        <id>P37231</id>
    </interactant>
    <interactant intactId="EBI-1104674">
        <id>P10909</id>
        <label>CLU</label>
    </interactant>
    <organismsDiffer>false</organismsDiffer>
    <experiments>3</experiments>
</comment>
<comment type="interaction">
    <interactant intactId="EBI-781384">
        <id>P37231</id>
    </interactant>
    <interactant intactId="EBI-781301">
        <id>O60869</id>
        <label>EDF1</label>
    </interactant>
    <organismsDiffer>false</organismsDiffer>
    <experiments>4</experiments>
</comment>
<comment type="interaction">
    <interactant intactId="EBI-781384">
        <id>P37231</id>
    </interactant>
    <interactant intactId="EBI-12132270">
        <id>Q9BWX5</id>
        <label>GATA5</label>
    </interactant>
    <organismsDiffer>false</organismsDiffer>
    <experiments>3</experiments>
</comment>
<comment type="interaction">
    <interactant intactId="EBI-781384">
        <id>P37231</id>
    </interactant>
    <interactant intactId="EBI-466029">
        <id>P42858</id>
        <label>HTT</label>
    </interactant>
    <organismsDiffer>false</organismsDiffer>
    <experiments>16</experiments>
</comment>
<comment type="interaction">
    <interactant intactId="EBI-781384">
        <id>P37231</id>
    </interactant>
    <interactant intactId="EBI-713568">
        <id>P45984</id>
        <label>MAPK9</label>
    </interactant>
    <organismsDiffer>false</organismsDiffer>
    <experiments>3</experiments>
</comment>
<comment type="interaction">
    <interactant intactId="EBI-781384">
        <id>P37231</id>
    </interactant>
    <interactant intactId="EBI-347233">
        <id>O75376</id>
        <label>NCOR1</label>
    </interactant>
    <organismsDiffer>false</organismsDiffer>
    <experiments>2</experiments>
</comment>
<comment type="interaction">
    <interactant intactId="EBI-781384">
        <id>P37231</id>
    </interactant>
    <interactant intactId="EBI-21458417">
        <id>P55055-1</id>
        <label>NR1H2</label>
    </interactant>
    <organismsDiffer>false</organismsDiffer>
    <experiments>2</experiments>
</comment>
<comment type="interaction">
    <interactant intactId="EBI-781384">
        <id>P37231</id>
    </interactant>
    <interactant intactId="EBI-781356">
        <id>Q13133</id>
        <label>NR1H3</label>
    </interactant>
    <organismsDiffer>false</organismsDiffer>
    <experiments>2</experiments>
</comment>
<comment type="interaction">
    <interactant intactId="EBI-781384">
        <id>P37231</id>
    </interactant>
    <interactant intactId="EBI-781384">
        <id>P37231</id>
        <label>PPARG</label>
    </interactant>
    <organismsDiffer>false</organismsDiffer>
    <experiments>2</experiments>
</comment>
<comment type="interaction">
    <interactant intactId="EBI-781384">
        <id>P37231</id>
    </interactant>
    <interactant intactId="EBI-765486">
        <id>Q9UBK2</id>
        <label>PPARGC1A</label>
    </interactant>
    <organismsDiffer>false</organismsDiffer>
    <experiments>2</experiments>
</comment>
<comment type="interaction">
    <interactant intactId="EBI-781384">
        <id>P37231</id>
    </interactant>
    <interactant intactId="EBI-413374">
        <id>P10276</id>
        <label>RARA</label>
    </interactant>
    <organismsDiffer>false</organismsDiffer>
    <experiments>3</experiments>
</comment>
<comment type="interaction">
    <interactant intactId="EBI-781384">
        <id>P37231</id>
    </interactant>
    <interactant intactId="EBI-78598">
        <id>P19793</id>
        <label>RXRA</label>
    </interactant>
    <organismsDiffer>false</organismsDiffer>
    <experiments>3</experiments>
</comment>
<comment type="interaction">
    <interactant intactId="EBI-781384">
        <id>P37231</id>
    </interactant>
    <interactant intactId="EBI-748576">
        <id>P28702</id>
        <label>RXRB</label>
    </interactant>
    <organismsDiffer>false</organismsDiffer>
    <experiments>5</experiments>
</comment>
<comment type="interaction">
    <interactant intactId="EBI-781384">
        <id>P37231</id>
    </interactant>
    <interactant intactId="EBI-1802965">
        <id>Q96EB6</id>
        <label>SIRT1</label>
    </interactant>
    <organismsDiffer>false</organismsDiffer>
    <experiments>5</experiments>
</comment>
<comment type="interaction">
    <interactant intactId="EBI-781384">
        <id>P37231</id>
    </interactant>
    <interactant intactId="EBI-488506">
        <id>Q6STE5-1</id>
        <label>SMARCD3</label>
    </interactant>
    <organismsDiffer>false</organismsDiffer>
    <experiments>3</experiments>
</comment>
<comment type="interaction">
    <interactant intactId="EBI-781384">
        <id>P37231</id>
    </interactant>
    <interactant intactId="EBI-488511">
        <id>Q6STE5-2</id>
        <label>SMARCD3</label>
    </interactant>
    <organismsDiffer>false</organismsDiffer>
    <experiments>3</experiments>
</comment>
<comment type="interaction">
    <interactant intactId="EBI-15664691">
        <id>P37231-1</id>
    </interactant>
    <interactant intactId="EBI-15664691">
        <id>P37231-1</id>
        <label>PPARG</label>
    </interactant>
    <organismsDiffer>false</organismsDiffer>
    <experiments>2</experiments>
</comment>
<comment type="interaction">
    <interactant intactId="EBI-15664691">
        <id>P37231-1</id>
    </interactant>
    <interactant intactId="EBI-78598">
        <id>P19793</id>
        <label>RXRA</label>
    </interactant>
    <organismsDiffer>false</organismsDiffer>
    <experiments>6</experiments>
</comment>
<comment type="interaction">
    <interactant intactId="EBI-781416">
        <id>P37231-2</id>
    </interactant>
    <interactant intactId="EBI-1041567">
        <id>Q00535</id>
        <label>CDK5</label>
    </interactant>
    <organismsDiffer>false</organismsDiffer>
    <experiments>2</experiments>
</comment>
<comment type="subcellular location">
    <subcellularLocation>
        <location>Nucleus</location>
    </subcellularLocation>
    <subcellularLocation>
        <location>Cytoplasm</location>
    </subcellularLocation>
    <text>Redistributed from the nucleus to the cytosol through a MAP2K1/MEK1-dependent manner. NOCT enhances its nuclear translocation.</text>
</comment>
<comment type="alternative products">
    <event type="alternative splicing"/>
    <isoform>
        <id>P37231-1</id>
        <name>2</name>
        <sequence type="displayed"/>
    </isoform>
    <isoform>
        <id>P37231-2</id>
        <name>1</name>
        <name>PPARgamma1(wt)</name>
        <sequence type="described" ref="VSP_003645"/>
    </isoform>
    <isoform>
        <id>P37231-3</id>
        <name>3</name>
        <name>PPARgamma1(tr)</name>
        <sequence type="described" ref="VSP_003645 VSP_043906 VSP_043907"/>
    </isoform>
    <text>Additional isoforms seem to exist.</text>
</comment>
<comment type="tissue specificity">
    <text evidence="40">Highest expression in adipose tissue. Lower in skeletal muscle, spleen, heart and liver. Also detectable in placenta, lung and ovary.</text>
</comment>
<comment type="induction">
    <text evidence="37">(Microbial infection) Expression increases when incubated with M.tuberculosis or its lipoprotein LpqH; induction is TLR2-dependent (at protein level).</text>
</comment>
<comment type="domain">
    <text evidence="53">The 9aaTAD motif is a transactivation domain present in a large number of yeast and animal transcription factors.</text>
</comment>
<comment type="PTM">
    <text evidence="2">O-GlcNAcylation at Thr-84 reduces transcriptional activity in adipocytes.</text>
</comment>
<comment type="PTM">
    <text evidence="1">Phosphorylated in basal conditions and dephosphorylated when treated with the ligand. May be dephosphorylated by PPP5C. The phosphorylated form may be inactive and dephosphorylation at Ser-112 induces adipogenic activity (By similarity).</text>
</comment>
<comment type="PTM">
    <text evidence="2 39">Ubiquitinated by E3 ubiquitin-protein ligase complex containing FBXO9; leading to proteasomal degradation (By similarity). Ubiquitinated at Lys-252 by TRIM55 leading to proteasomal degradation (PubMed:36737649). Ubiquitinated by E3 ubiquitin-protein ligase STUB1/CHIP; leading to proteasomal degradation (By similarity).</text>
</comment>
<comment type="polymorphism">
    <text evidence="7 17">Genetic variations in PPARG define the body mass index quantitative trait locus 1 (BMIQ1) [MIM:606641]. The body max index (BMI) reflects the amount of fat, lean mass, and body build.</text>
</comment>
<comment type="disease">
    <text evidence="5">Defects in PPARG can lead to type 2 insulin-resistant diabetes and hyptertension. PPARG mutations may be associated with colon cancer.</text>
</comment>
<comment type="disease" evidence="43">
    <disease id="DI-01221">
        <name>Obesity</name>
        <acronym>OBESITY</acronym>
        <description>A condition characterized by an increase of body weight beyond the limitation of skeletal and physical requirements, as the result of excessive accumulation of body fat.</description>
        <dbReference type="MIM" id="601665"/>
    </disease>
    <text>Disease susceptibility may be associated with variants affecting the gene represented in this entry.</text>
</comment>
<comment type="disease" evidence="12 15">
    <disease id="DI-01596">
        <name>Lipodystrophy, familial partial, 3</name>
        <acronym>FPLD3</acronym>
        <description>A form of lipodystrophy characterized by marked loss of subcutaneous fat from the extremities. Facial adipose tissue may be increased, decreased or normal. Affected individuals show an increased preponderance of insulin resistance, diabetes mellitus and dyslipidemia.</description>
        <dbReference type="MIM" id="604367"/>
    </disease>
    <text>The disease is caused by variants affecting the gene represented in this entry.</text>
</comment>
<comment type="disease" evidence="10">
    <disease id="DI-01665">
        <name>Glioma 1</name>
        <acronym>GLM1</acronym>
        <description>Gliomas are benign or malignant central nervous system neoplasms derived from glial cells. They comprise astrocytomas and glioblastoma multiforme that are derived from astrocytes, oligodendrogliomas derived from oligodendrocytes and ependymomas derived from ependymocytes.</description>
        <dbReference type="MIM" id="137800"/>
    </disease>
    <text>Disease susceptibility may be associated with variants affecting the gene represented in this entry. Polymorphic PPARG alleles have been found to be significantly over-represented among a cohort of American patients with sporadic glioblastoma multiforme suggesting a possible contribution to disease susceptibility.</text>
</comment>
<comment type="miscellaneous">
    <molecule>Isoform 3</molecule>
    <text evidence="52">Exhibits dominant negative activity over isoform 1.</text>
</comment>
<comment type="similarity">
    <text evidence="52">Belongs to the nuclear hormone receptor family. NR1 subfamily.</text>
</comment>
<comment type="sequence caution" evidence="52">
    <conflict type="erroneous initiation">
        <sequence resource="EMBL-CDS" id="AAN38992"/>
    </conflict>
    <text>Truncated N-terminus.</text>
</comment>
<comment type="sequence caution" evidence="52">
    <conflict type="erroneous gene model prediction">
        <sequence resource="EMBL-CDS" id="BAA23354"/>
    </conflict>
</comment>
<comment type="sequence caution" evidence="52">
    <conflict type="erroneous initiation">
        <sequence resource="EMBL-CDS" id="BAF83270"/>
    </conflict>
    <text>Truncated N-terminus.</text>
</comment>
<comment type="sequence caution" evidence="52">
    <conflict type="erroneous initiation">
        <sequence resource="EMBL-CDS" id="CAA62153"/>
    </conflict>
    <text>Truncated N-terminus.</text>
</comment>
<comment type="online information" name="Atlas of Genetics and Cytogenetics in Oncology and Haematology">
    <link uri="https://atlasgeneticsoncology.org/gene/383/PPARG"/>
</comment>
<comment type="online information" name="Wikipedia">
    <link uri="https://en.wikipedia.org/wiki/Peroxisome_proliferator-activated_receptor"/>
    <text>Peroxisome proliferator-activated receptor entry</text>
</comment>
<accession>P37231</accession>
<accession>A8K3G6</accession>
<accession>B5BUA1</accession>
<accession>O00684</accession>
<accession>O00710</accession>
<accession>O14515</accession>
<accession>Q0QJH8</accession>
<accession>Q15178</accession>
<accession>Q15179</accession>
<accession>Q15180</accession>
<accession>Q15832</accession>
<accession>Q86U60</accession>
<accession>Q96J12</accession>
<evidence type="ECO:0000250" key="1"/>
<evidence type="ECO:0000250" key="2">
    <source>
        <dbReference type="UniProtKB" id="P37238"/>
    </source>
</evidence>
<evidence type="ECO:0000255" key="3">
    <source>
        <dbReference type="PROSITE-ProRule" id="PRU00407"/>
    </source>
</evidence>
<evidence type="ECO:0000255" key="4">
    <source>
        <dbReference type="PROSITE-ProRule" id="PRU01189"/>
    </source>
</evidence>
<evidence type="ECO:0000269" key="5">
    <source>
    </source>
</evidence>
<evidence type="ECO:0000269" key="6">
    <source>
    </source>
</evidence>
<evidence type="ECO:0000269" key="7">
    <source>
    </source>
</evidence>
<evidence type="ECO:0000269" key="8">
    <source>
    </source>
</evidence>
<evidence type="ECO:0000269" key="9">
    <source>
    </source>
</evidence>
<evidence type="ECO:0000269" key="10">
    <source>
    </source>
</evidence>
<evidence type="ECO:0000269" key="11">
    <source>
    </source>
</evidence>
<evidence type="ECO:0000269" key="12">
    <source>
    </source>
</evidence>
<evidence type="ECO:0000269" key="13">
    <source>
    </source>
</evidence>
<evidence type="ECO:0000269" key="14">
    <source>
    </source>
</evidence>
<evidence type="ECO:0000269" key="15">
    <source>
    </source>
</evidence>
<evidence type="ECO:0000269" key="16">
    <source>
    </source>
</evidence>
<evidence type="ECO:0000269" key="17">
    <source>
    </source>
</evidence>
<evidence type="ECO:0000269" key="18">
    <source>
    </source>
</evidence>
<evidence type="ECO:0000269" key="19">
    <source>
    </source>
</evidence>
<evidence type="ECO:0000269" key="20">
    <source>
    </source>
</evidence>
<evidence type="ECO:0000269" key="21">
    <source>
    </source>
</evidence>
<evidence type="ECO:0000269" key="22">
    <source>
    </source>
</evidence>
<evidence type="ECO:0000269" key="23">
    <source>
    </source>
</evidence>
<evidence type="ECO:0000269" key="24">
    <source>
    </source>
</evidence>
<evidence type="ECO:0000269" key="25">
    <source>
    </source>
</evidence>
<evidence type="ECO:0000269" key="26">
    <source>
    </source>
</evidence>
<evidence type="ECO:0000269" key="27">
    <source>
    </source>
</evidence>
<evidence type="ECO:0000269" key="28">
    <source>
    </source>
</evidence>
<evidence type="ECO:0000269" key="29">
    <source>
    </source>
</evidence>
<evidence type="ECO:0000269" key="30">
    <source>
    </source>
</evidence>
<evidence type="ECO:0000269" key="31">
    <source>
    </source>
</evidence>
<evidence type="ECO:0000269" key="32">
    <source>
    </source>
</evidence>
<evidence type="ECO:0000269" key="33">
    <source>
    </source>
</evidence>
<evidence type="ECO:0000269" key="34">
    <source>
    </source>
</evidence>
<evidence type="ECO:0000269" key="35">
    <source>
    </source>
</evidence>
<evidence type="ECO:0000269" key="36">
    <source>
    </source>
</evidence>
<evidence type="ECO:0000269" key="37">
    <source>
    </source>
</evidence>
<evidence type="ECO:0000269" key="38">
    <source>
    </source>
</evidence>
<evidence type="ECO:0000269" key="39">
    <source>
    </source>
</evidence>
<evidence type="ECO:0000269" key="40">
    <source>
    </source>
</evidence>
<evidence type="ECO:0000269" key="41">
    <source>
    </source>
</evidence>
<evidence type="ECO:0000269" key="42">
    <source>
    </source>
</evidence>
<evidence type="ECO:0000269" key="43">
    <source>
    </source>
</evidence>
<evidence type="ECO:0000269" key="44">
    <source ref="12"/>
</evidence>
<evidence type="ECO:0000303" key="45">
    <source>
    </source>
</evidence>
<evidence type="ECO:0000303" key="46">
    <source>
    </source>
</evidence>
<evidence type="ECO:0000303" key="47">
    <source>
    </source>
</evidence>
<evidence type="ECO:0000303" key="48">
    <source>
    </source>
</evidence>
<evidence type="ECO:0000303" key="49">
    <source>
    </source>
</evidence>
<evidence type="ECO:0000303" key="50">
    <source>
    </source>
</evidence>
<evidence type="ECO:0000303" key="51">
    <source>
    </source>
</evidence>
<evidence type="ECO:0000305" key="52"/>
<evidence type="ECO:0000305" key="53">
    <source>
    </source>
</evidence>
<evidence type="ECO:0007744" key="54">
    <source>
        <dbReference type="PDB" id="1FM6"/>
    </source>
</evidence>
<evidence type="ECO:0007744" key="55">
    <source>
        <dbReference type="PDB" id="1FM9"/>
    </source>
</evidence>
<evidence type="ECO:0007744" key="56">
    <source>
        <dbReference type="PDB" id="1I7I"/>
    </source>
</evidence>
<evidence type="ECO:0007744" key="57">
    <source>
        <dbReference type="PDB" id="1K74"/>
    </source>
</evidence>
<evidence type="ECO:0007744" key="58">
    <source>
        <dbReference type="PDB" id="1NYX"/>
    </source>
</evidence>
<evidence type="ECO:0007744" key="59">
    <source>
        <dbReference type="PDB" id="1RDT"/>
    </source>
</evidence>
<evidence type="ECO:0007744" key="60">
    <source>
        <dbReference type="PDB" id="1WM0"/>
    </source>
</evidence>
<evidence type="ECO:0007744" key="61">
    <source>
        <dbReference type="PDB" id="1ZEO"/>
    </source>
</evidence>
<evidence type="ECO:0007744" key="62">
    <source>
        <dbReference type="PDB" id="1ZGY"/>
    </source>
</evidence>
<evidence type="ECO:0007744" key="63">
    <source>
        <dbReference type="PDB" id="2F4B"/>
    </source>
</evidence>
<evidence type="ECO:0007744" key="64">
    <source>
        <dbReference type="PDB" id="2G0G"/>
    </source>
</evidence>
<evidence type="ECO:0007744" key="65">
    <source>
        <dbReference type="PDB" id="2G0H"/>
    </source>
</evidence>
<evidence type="ECO:0007744" key="66">
    <source>
        <dbReference type="PDB" id="2HFP"/>
    </source>
</evidence>
<evidence type="ECO:0007744" key="67">
    <source>
        <dbReference type="PDB" id="2PRG"/>
    </source>
</evidence>
<evidence type="ECO:0007744" key="68">
    <source>
        <dbReference type="PDB" id="3PRG"/>
    </source>
</evidence>
<evidence type="ECO:0007744" key="69">
    <source>
    </source>
</evidence>
<evidence type="ECO:0007829" key="70">
    <source>
        <dbReference type="PDB" id="1ZGY"/>
    </source>
</evidence>
<evidence type="ECO:0007829" key="71">
    <source>
        <dbReference type="PDB" id="3DZU"/>
    </source>
</evidence>
<evidence type="ECO:0007829" key="72">
    <source>
        <dbReference type="PDB" id="3DZY"/>
    </source>
</evidence>
<evidence type="ECO:0007829" key="73">
    <source>
        <dbReference type="PDB" id="3NOA"/>
    </source>
</evidence>
<evidence type="ECO:0007829" key="74">
    <source>
        <dbReference type="PDB" id="3U9Q"/>
    </source>
</evidence>
<evidence type="ECO:0007829" key="75">
    <source>
        <dbReference type="PDB" id="4L98"/>
    </source>
</evidence>
<evidence type="ECO:0007829" key="76">
    <source>
        <dbReference type="PDB" id="4R2U"/>
    </source>
</evidence>
<evidence type="ECO:0007829" key="77">
    <source>
        <dbReference type="PDB" id="6FZP"/>
    </source>
</evidence>
<evidence type="ECO:0007829" key="78">
    <source>
        <dbReference type="PDB" id="6IJR"/>
    </source>
</evidence>
<evidence type="ECO:0007829" key="79">
    <source>
        <dbReference type="PDB" id="6T1S"/>
    </source>
</evidence>
<evidence type="ECO:0007829" key="80">
    <source>
        <dbReference type="PDB" id="6ZLY"/>
    </source>
</evidence>
<evidence type="ECO:0007829" key="81">
    <source>
        <dbReference type="PDB" id="7AWC"/>
    </source>
</evidence>
<evidence type="ECO:0007829" key="82">
    <source>
        <dbReference type="PDB" id="7CXK"/>
    </source>
</evidence>
<evidence type="ECO:0007829" key="83">
    <source>
        <dbReference type="PDB" id="7WGO"/>
    </source>
</evidence>
<evidence type="ECO:0007829" key="84">
    <source>
        <dbReference type="PDB" id="8BF1"/>
    </source>
</evidence>
<evidence type="ECO:0007829" key="85">
    <source>
        <dbReference type="PDB" id="8CPJ"/>
    </source>
</evidence>
<evidence type="ECO:0007829" key="86">
    <source>
        <dbReference type="PDB" id="8DKV"/>
    </source>
</evidence>
<evidence type="ECO:0007829" key="87">
    <source>
        <dbReference type="PDB" id="8FKC"/>
    </source>
</evidence>
<evidence type="ECO:0007829" key="88">
    <source>
        <dbReference type="PDB" id="8U57"/>
    </source>
</evidence>
<gene>
    <name type="primary">PPARG</name>
    <name type="synonym">NR1C3</name>
</gene>
<reference key="1">
    <citation type="journal article" date="1997" name="J. Biol. Chem.">
        <title>Identification, characterization, and tissue distribution of human peroxisome proliferator-activated receptor (PPAR) isoforms PPARgamma2 versus PPARgamma1 and activation with retinoid X receptor agonists and antagonists.</title>
        <authorList>
            <person name="Mukherjee R."/>
            <person name="Jow L."/>
            <person name="Croston G.E."/>
            <person name="Paterniti J.R. Jr."/>
        </authorList>
    </citation>
    <scope>NUCLEOTIDE SEQUENCE [MRNA] (ISOFORMS 1 AND 2)</scope>
    <scope>FUNCTION</scope>
    <scope>TISSUE SPECIFICITY</scope>
    <source>
        <tissue>Heart</tissue>
    </source>
</reference>
<reference key="2">
    <citation type="journal article" date="1996" name="Biochem. Biophys. Res. Commun.">
        <title>Molecular cloning, expression and characterization of human peroxisome proliferator activated receptors gamma 1 and gamma 2.</title>
        <authorList>
            <person name="Elbrecht A."/>
            <person name="Chen Y."/>
            <person name="Cullinan C.A."/>
            <person name="Hayes N."/>
            <person name="Leibowitz M.D."/>
            <person name="Moller D.E."/>
            <person name="Berger J."/>
        </authorList>
    </citation>
    <scope>NUCLEOTIDE SEQUENCE [MRNA] (ISOFORMS 1 AND 2)</scope>
    <source>
        <tissue>Adipose tissue</tissue>
    </source>
</reference>
<reference key="3">
    <citation type="journal article" date="1997" name="Biochem. Biophys. Res. Commun.">
        <title>Differential expression of PPAR gamma1 and gamma2 isoforms in human adipose tissue.</title>
        <authorList>
            <person name="Yanase T."/>
            <person name="Yashiro T."/>
            <person name="Takitani K."/>
            <person name="Kato S."/>
            <person name="Taniguchi S."/>
            <person name="Takayanagi R."/>
            <person name="Nawata H."/>
        </authorList>
    </citation>
    <scope>NUCLEOTIDE SEQUENCE [MRNA] (ISOFORM 2)</scope>
    <source>
        <tissue>Adipose tissue</tissue>
    </source>
</reference>
<reference key="4">
    <citation type="journal article" date="1995" name="Gene Expr.">
        <title>Isolation of the human peroxisome proliferator activated receptor gamma cDNA: expression in hematopoietic cells and chromosomal mapping.</title>
        <authorList>
            <person name="Greene M.E."/>
            <person name="Blumberg B."/>
            <person name="McBride O.W."/>
            <person name="Yi H.F."/>
            <person name="Kronquist K."/>
            <person name="Kwan K."/>
            <person name="Hsieh L."/>
            <person name="Greene G."/>
            <person name="Nimer S.D."/>
        </authorList>
    </citation>
    <scope>NUCLEOTIDE SEQUENCE [MRNA] (ISOFORM 1)</scope>
    <source>
        <tissue>Bone marrow</tissue>
    </source>
</reference>
<reference key="5">
    <citation type="submission" date="2001-12" db="EMBL/GenBank/DDBJ databases">
        <authorList>
            <person name="Greene M.E."/>
        </authorList>
    </citation>
    <scope>SEQUENCE REVISION TO 36; 37; 213; 214 AND 240</scope>
</reference>
<reference key="6">
    <citation type="journal article" date="1997" name="Diabetes">
        <title>No coding mutations are detected in the peroxisome proliferator-activated receptor-gamma gene in Japanese patients with lipoatrophic diabetes.</title>
        <authorList>
            <person name="Okazawa H."/>
            <person name="Mori H."/>
            <person name="Tamori Y."/>
            <person name="Araki S."/>
            <person name="Niki T."/>
            <person name="Masugi J."/>
            <person name="Kawanishi M."/>
            <person name="Kubota T."/>
            <person name="Shinoda H."/>
            <person name="Kasuga M."/>
        </authorList>
    </citation>
    <scope>NUCLEOTIDE SEQUENCE [GENOMIC DNA] (ISOFORM 1)</scope>
    <source>
        <tissue>Placenta</tissue>
    </source>
</reference>
<reference key="7">
    <citation type="journal article" date="1996" name="Eur. J. Biochem.">
        <title>A human peroxisome-proliferator-activated receptor-gamma is activated by inducers of adipogenesis, including thiazolidinedione drugs.</title>
        <authorList>
            <person name="Lambe K.G."/>
            <person name="Tugwood J.D."/>
        </authorList>
    </citation>
    <scope>NUCLEOTIDE SEQUENCE [MRNA] (ISOFORM 1)</scope>
    <source>
        <tissue>Placenta</tissue>
    </source>
</reference>
<reference key="8">
    <citation type="journal article" date="2006" name="Biochem. Biophys. Res. Commun.">
        <title>Identification of a truncated alternative splicing variant of human PPARgamma1 that exhibits dominant negative activity.</title>
        <authorList>
            <person name="Kim H.J."/>
            <person name="Woo I.S."/>
            <person name="Kang E.S."/>
            <person name="Eun S.Y."/>
            <person name="Kim H.J."/>
            <person name="Lee J.H."/>
            <person name="Chang K.C."/>
            <person name="Kim J.H."/>
            <person name="Seo H.G."/>
        </authorList>
    </citation>
    <scope>NUCLEOTIDE SEQUENCE [MRNA] (ISOFORM 3)</scope>
</reference>
<reference key="9">
    <citation type="submission" date="2003-05" db="EMBL/GenBank/DDBJ databases">
        <title>Cloning of human full-length CDSs in BD Creator(TM) system donor vector.</title>
        <authorList>
            <person name="Kalnine N."/>
            <person name="Chen X."/>
            <person name="Rolfs A."/>
            <person name="Halleck A."/>
            <person name="Hines L."/>
            <person name="Eisenstein S."/>
            <person name="Koundinya M."/>
            <person name="Raphael J."/>
            <person name="Moreira D."/>
            <person name="Kelley T."/>
            <person name="LaBaer J."/>
            <person name="Lin Y."/>
            <person name="Phelan M."/>
            <person name="Farmer A."/>
        </authorList>
    </citation>
    <scope>NUCLEOTIDE SEQUENCE [LARGE SCALE MRNA] (ISOFORM 2)</scope>
</reference>
<reference key="10">
    <citation type="journal article" date="2004" name="Nat. Genet.">
        <title>Complete sequencing and characterization of 21,243 full-length human cDNAs.</title>
        <authorList>
            <person name="Ota T."/>
            <person name="Suzuki Y."/>
            <person name="Nishikawa T."/>
            <person name="Otsuki T."/>
            <person name="Sugiyama T."/>
            <person name="Irie R."/>
            <person name="Wakamatsu A."/>
            <person name="Hayashi K."/>
            <person name="Sato H."/>
            <person name="Nagai K."/>
            <person name="Kimura K."/>
            <person name="Makita H."/>
            <person name="Sekine M."/>
            <person name="Obayashi M."/>
            <person name="Nishi T."/>
            <person name="Shibahara T."/>
            <person name="Tanaka T."/>
            <person name="Ishii S."/>
            <person name="Yamamoto J."/>
            <person name="Saito K."/>
            <person name="Kawai Y."/>
            <person name="Isono Y."/>
            <person name="Nakamura Y."/>
            <person name="Nagahari K."/>
            <person name="Murakami K."/>
            <person name="Yasuda T."/>
            <person name="Iwayanagi T."/>
            <person name="Wagatsuma M."/>
            <person name="Shiratori A."/>
            <person name="Sudo H."/>
            <person name="Hosoiri T."/>
            <person name="Kaku Y."/>
            <person name="Kodaira H."/>
            <person name="Kondo H."/>
            <person name="Sugawara M."/>
            <person name="Takahashi M."/>
            <person name="Kanda K."/>
            <person name="Yokoi T."/>
            <person name="Furuya T."/>
            <person name="Kikkawa E."/>
            <person name="Omura Y."/>
            <person name="Abe K."/>
            <person name="Kamihara K."/>
            <person name="Katsuta N."/>
            <person name="Sato K."/>
            <person name="Tanikawa M."/>
            <person name="Yamazaki M."/>
            <person name="Ninomiya K."/>
            <person name="Ishibashi T."/>
            <person name="Yamashita H."/>
            <person name="Murakawa K."/>
            <person name="Fujimori K."/>
            <person name="Tanai H."/>
            <person name="Kimata M."/>
            <person name="Watanabe M."/>
            <person name="Hiraoka S."/>
            <person name="Chiba Y."/>
            <person name="Ishida S."/>
            <person name="Ono Y."/>
            <person name="Takiguchi S."/>
            <person name="Watanabe S."/>
            <person name="Yosida M."/>
            <person name="Hotuta T."/>
            <person name="Kusano J."/>
            <person name="Kanehori K."/>
            <person name="Takahashi-Fujii A."/>
            <person name="Hara H."/>
            <person name="Tanase T.-O."/>
            <person name="Nomura Y."/>
            <person name="Togiya S."/>
            <person name="Komai F."/>
            <person name="Hara R."/>
            <person name="Takeuchi K."/>
            <person name="Arita M."/>
            <person name="Imose N."/>
            <person name="Musashino K."/>
            <person name="Yuuki H."/>
            <person name="Oshima A."/>
            <person name="Sasaki N."/>
            <person name="Aotsuka S."/>
            <person name="Yoshikawa Y."/>
            <person name="Matsunawa H."/>
            <person name="Ichihara T."/>
            <person name="Shiohata N."/>
            <person name="Sano S."/>
            <person name="Moriya S."/>
            <person name="Momiyama H."/>
            <person name="Satoh N."/>
            <person name="Takami S."/>
            <person name="Terashima Y."/>
            <person name="Suzuki O."/>
            <person name="Nakagawa S."/>
            <person name="Senoh A."/>
            <person name="Mizoguchi H."/>
            <person name="Goto Y."/>
            <person name="Shimizu F."/>
            <person name="Wakebe H."/>
            <person name="Hishigaki H."/>
            <person name="Watanabe T."/>
            <person name="Sugiyama A."/>
            <person name="Takemoto M."/>
            <person name="Kawakami B."/>
            <person name="Yamazaki M."/>
            <person name="Watanabe K."/>
            <person name="Kumagai A."/>
            <person name="Itakura S."/>
            <person name="Fukuzumi Y."/>
            <person name="Fujimori Y."/>
            <person name="Komiyama M."/>
            <person name="Tashiro H."/>
            <person name="Tanigami A."/>
            <person name="Fujiwara T."/>
            <person name="Ono T."/>
            <person name="Yamada K."/>
            <person name="Fujii Y."/>
            <person name="Ozaki K."/>
            <person name="Hirao M."/>
            <person name="Ohmori Y."/>
            <person name="Kawabata A."/>
            <person name="Hikiji T."/>
            <person name="Kobatake N."/>
            <person name="Inagaki H."/>
            <person name="Ikema Y."/>
            <person name="Okamoto S."/>
            <person name="Okitani R."/>
            <person name="Kawakami T."/>
            <person name="Noguchi S."/>
            <person name="Itoh T."/>
            <person name="Shigeta K."/>
            <person name="Senba T."/>
            <person name="Matsumura K."/>
            <person name="Nakajima Y."/>
            <person name="Mizuno T."/>
            <person name="Morinaga M."/>
            <person name="Sasaki M."/>
            <person name="Togashi T."/>
            <person name="Oyama M."/>
            <person name="Hata H."/>
            <person name="Watanabe M."/>
            <person name="Komatsu T."/>
            <person name="Mizushima-Sugano J."/>
            <person name="Satoh T."/>
            <person name="Shirai Y."/>
            <person name="Takahashi Y."/>
            <person name="Nakagawa K."/>
            <person name="Okumura K."/>
            <person name="Nagase T."/>
            <person name="Nomura N."/>
            <person name="Kikuchi H."/>
            <person name="Masuho Y."/>
            <person name="Yamashita R."/>
            <person name="Nakai K."/>
            <person name="Yada T."/>
            <person name="Nakamura Y."/>
            <person name="Ohara O."/>
            <person name="Isogai T."/>
            <person name="Sugano S."/>
        </authorList>
    </citation>
    <scope>NUCLEOTIDE SEQUENCE [LARGE SCALE MRNA] (ISOFORM 1)</scope>
</reference>
<reference key="11">
    <citation type="submission" date="2008-07" db="EMBL/GenBank/DDBJ databases">
        <title>Human Protein Factory: an infrastructure to convert the human transcriptome into the in vitro-expressed human proteome of versatile utility.</title>
        <authorList>
            <person name="Goshima N."/>
            <person name="Kawamura Y."/>
            <person name="Fukumoto A."/>
            <person name="Miura A."/>
            <person name="Honma R."/>
            <person name="Satoh R."/>
            <person name="Wakamatsu A."/>
            <person name="Yamamoto J."/>
            <person name="Kimura K."/>
            <person name="Nishikawa T."/>
            <person name="Andoh T."/>
            <person name="Iida Y."/>
            <person name="Ishikawa K."/>
            <person name="Ito E."/>
            <person name="Kagawa N."/>
            <person name="Kaminaga C."/>
            <person name="Kanehori K."/>
            <person name="Kawakami B."/>
            <person name="Kenmochi K."/>
            <person name="Kimura R."/>
            <person name="Kobayashi M."/>
            <person name="Kuroita T."/>
            <person name="Kuwayama H."/>
            <person name="Maruyama Y."/>
            <person name="Matsuo K."/>
            <person name="Minami K."/>
            <person name="Mitsubori M."/>
            <person name="Mori M."/>
            <person name="Morishita R."/>
            <person name="Murase A."/>
            <person name="Nishikawa A."/>
            <person name="Nishikawa S."/>
            <person name="Okamoto T."/>
            <person name="Sakagami N."/>
            <person name="Sakamoto Y."/>
            <person name="Sasaki Y."/>
            <person name="Seki T."/>
            <person name="Sono S."/>
            <person name="Sugiyama A."/>
            <person name="Sumiya T."/>
            <person name="Takayama T."/>
            <person name="Takayama Y."/>
            <person name="Takeda H."/>
            <person name="Togashi T."/>
            <person name="Yahata K."/>
            <person name="Yamada H."/>
            <person name="Yanagisawa Y."/>
            <person name="Endo Y."/>
            <person name="Imamoto F."/>
            <person name="Kisu Y."/>
            <person name="Tanaka S."/>
            <person name="Isogai T."/>
            <person name="Imai J."/>
            <person name="Watanabe S."/>
            <person name="Nomura N."/>
        </authorList>
    </citation>
    <scope>NUCLEOTIDE SEQUENCE [LARGE SCALE MRNA] (ISOFORM 2)</scope>
</reference>
<reference key="12">
    <citation type="submission" date="2004-06" db="EMBL/GenBank/DDBJ databases">
        <authorList>
            <consortium name="SeattleSNPs variation discovery resource"/>
        </authorList>
    </citation>
    <scope>NUCLEOTIDE SEQUENCE [GENOMIC DNA]</scope>
    <scope>VARIANT ALA-12</scope>
</reference>
<reference key="13">
    <citation type="journal article" date="2006" name="Nature">
        <title>The DNA sequence, annotation and analysis of human chromosome 3.</title>
        <authorList>
            <person name="Muzny D.M."/>
            <person name="Scherer S.E."/>
            <person name="Kaul R."/>
            <person name="Wang J."/>
            <person name="Yu J."/>
            <person name="Sudbrak R."/>
            <person name="Buhay C.J."/>
            <person name="Chen R."/>
            <person name="Cree A."/>
            <person name="Ding Y."/>
            <person name="Dugan-Rocha S."/>
            <person name="Gill R."/>
            <person name="Gunaratne P."/>
            <person name="Harris R.A."/>
            <person name="Hawes A.C."/>
            <person name="Hernandez J."/>
            <person name="Hodgson A.V."/>
            <person name="Hume J."/>
            <person name="Jackson A."/>
            <person name="Khan Z.M."/>
            <person name="Kovar-Smith C."/>
            <person name="Lewis L.R."/>
            <person name="Lozado R.J."/>
            <person name="Metzker M.L."/>
            <person name="Milosavljevic A."/>
            <person name="Miner G.R."/>
            <person name="Morgan M.B."/>
            <person name="Nazareth L.V."/>
            <person name="Scott G."/>
            <person name="Sodergren E."/>
            <person name="Song X.-Z."/>
            <person name="Steffen D."/>
            <person name="Wei S."/>
            <person name="Wheeler D.A."/>
            <person name="Wright M.W."/>
            <person name="Worley K.C."/>
            <person name="Yuan Y."/>
            <person name="Zhang Z."/>
            <person name="Adams C.Q."/>
            <person name="Ansari-Lari M.A."/>
            <person name="Ayele M."/>
            <person name="Brown M.J."/>
            <person name="Chen G."/>
            <person name="Chen Z."/>
            <person name="Clendenning J."/>
            <person name="Clerc-Blankenburg K.P."/>
            <person name="Chen R."/>
            <person name="Chen Z."/>
            <person name="Davis C."/>
            <person name="Delgado O."/>
            <person name="Dinh H.H."/>
            <person name="Dong W."/>
            <person name="Draper H."/>
            <person name="Ernst S."/>
            <person name="Fu G."/>
            <person name="Gonzalez-Garay M.L."/>
            <person name="Garcia D.K."/>
            <person name="Gillett W."/>
            <person name="Gu J."/>
            <person name="Hao B."/>
            <person name="Haugen E."/>
            <person name="Havlak P."/>
            <person name="He X."/>
            <person name="Hennig S."/>
            <person name="Hu S."/>
            <person name="Huang W."/>
            <person name="Jackson L.R."/>
            <person name="Jacob L.S."/>
            <person name="Kelly S.H."/>
            <person name="Kube M."/>
            <person name="Levy R."/>
            <person name="Li Z."/>
            <person name="Liu B."/>
            <person name="Liu J."/>
            <person name="Liu W."/>
            <person name="Lu J."/>
            <person name="Maheshwari M."/>
            <person name="Nguyen B.-V."/>
            <person name="Okwuonu G.O."/>
            <person name="Palmeiri A."/>
            <person name="Pasternak S."/>
            <person name="Perez L.M."/>
            <person name="Phelps K.A."/>
            <person name="Plopper F.J."/>
            <person name="Qiang B."/>
            <person name="Raymond C."/>
            <person name="Rodriguez R."/>
            <person name="Saenphimmachak C."/>
            <person name="Santibanez J."/>
            <person name="Shen H."/>
            <person name="Shen Y."/>
            <person name="Subramanian S."/>
            <person name="Tabor P.E."/>
            <person name="Verduzco D."/>
            <person name="Waldron L."/>
            <person name="Wang J."/>
            <person name="Wang J."/>
            <person name="Wang Q."/>
            <person name="Williams G.A."/>
            <person name="Wong G.K.-S."/>
            <person name="Yao Z."/>
            <person name="Zhang J."/>
            <person name="Zhang X."/>
            <person name="Zhao G."/>
            <person name="Zhou J."/>
            <person name="Zhou Y."/>
            <person name="Nelson D."/>
            <person name="Lehrach H."/>
            <person name="Reinhardt R."/>
            <person name="Naylor S.L."/>
            <person name="Yang H."/>
            <person name="Olson M."/>
            <person name="Weinstock G."/>
            <person name="Gibbs R.A."/>
        </authorList>
    </citation>
    <scope>NUCLEOTIDE SEQUENCE [LARGE SCALE GENOMIC DNA]</scope>
</reference>
<reference key="14">
    <citation type="submission" date="2005-07" db="EMBL/GenBank/DDBJ databases">
        <authorList>
            <person name="Mural R.J."/>
            <person name="Istrail S."/>
            <person name="Sutton G.G."/>
            <person name="Florea L."/>
            <person name="Halpern A.L."/>
            <person name="Mobarry C.M."/>
            <person name="Lippert R."/>
            <person name="Walenz B."/>
            <person name="Shatkay H."/>
            <person name="Dew I."/>
            <person name="Miller J.R."/>
            <person name="Flanigan M.J."/>
            <person name="Edwards N.J."/>
            <person name="Bolanos R."/>
            <person name="Fasulo D."/>
            <person name="Halldorsson B.V."/>
            <person name="Hannenhalli S."/>
            <person name="Turner R."/>
            <person name="Yooseph S."/>
            <person name="Lu F."/>
            <person name="Nusskern D.R."/>
            <person name="Shue B.C."/>
            <person name="Zheng X.H."/>
            <person name="Zhong F."/>
            <person name="Delcher A.L."/>
            <person name="Huson D.H."/>
            <person name="Kravitz S.A."/>
            <person name="Mouchard L."/>
            <person name="Reinert K."/>
            <person name="Remington K.A."/>
            <person name="Clark A.G."/>
            <person name="Waterman M.S."/>
            <person name="Eichler E.E."/>
            <person name="Adams M.D."/>
            <person name="Hunkapiller M.W."/>
            <person name="Myers E.W."/>
            <person name="Venter J.C."/>
        </authorList>
    </citation>
    <scope>NUCLEOTIDE SEQUENCE [LARGE SCALE GENOMIC DNA]</scope>
</reference>
<reference key="15">
    <citation type="journal article" date="2004" name="Genome Res.">
        <title>The status, quality, and expansion of the NIH full-length cDNA project: the Mammalian Gene Collection (MGC).</title>
        <authorList>
            <consortium name="The MGC Project Team"/>
        </authorList>
    </citation>
    <scope>NUCLEOTIDE SEQUENCE [LARGE SCALE MRNA] (ISOFORM 1)</scope>
    <source>
        <tissue>Placenta</tissue>
    </source>
</reference>
<reference key="16">
    <citation type="journal article" date="2000" name="J. Biol. Chem.">
        <title>Cloning and characterization of RAP250, a nuclear receptor coactivator.</title>
        <authorList>
            <person name="Caira F."/>
            <person name="Antonson P."/>
            <person name="Pelto-Huikko M."/>
            <person name="Treuter E."/>
            <person name="Gustafsson J.-A."/>
        </authorList>
    </citation>
    <scope>INTERACTION WITH NCOA6</scope>
</reference>
<reference key="17">
    <citation type="journal article" date="2000" name="J. Med. Genet.">
        <title>Over-representation of PPARgamma sequence variants in sporadic cases of glioblastoma multiforme: preliminary evidence for common low penetrance modifiers for brain tumour risk in the general population.</title>
        <authorList>
            <person name="Zhou X.P."/>
            <person name="Smith W.M."/>
            <person name="Gimm O."/>
            <person name="Mueller E."/>
            <person name="Gao X."/>
            <person name="Sarraf P."/>
            <person name="Prior T.W."/>
            <person name="Plass C."/>
            <person name="von Deimling A."/>
            <person name="Black P.M."/>
            <person name="Yates A.J."/>
            <person name="Eng C."/>
        </authorList>
    </citation>
    <scope>POSSIBLE INVOLVEMENT IN SUSCEPTIBILITY TO GLIOMA</scope>
</reference>
<reference key="18">
    <citation type="journal article" date="2002" name="J. Biol. Chem.">
        <title>Identification of protein arginine methyltransferase 2 as a coactivator for estrogen receptor alpha.</title>
        <authorList>
            <person name="Qi C."/>
            <person name="Chang J."/>
            <person name="Zhu Y."/>
            <person name="Yeldandi A.V."/>
            <person name="Rao S.M."/>
            <person name="Zhu Y.-J."/>
        </authorList>
    </citation>
    <scope>INTERACTION WITH PRMT2</scope>
</reference>
<reference key="19">
    <citation type="journal article" date="2002" name="Mol. Cell. Biol.">
        <title>ERAP140, a conserved tissue-specific nuclear receptor coactivator.</title>
        <authorList>
            <person name="Shao W."/>
            <person name="Halachmi S."/>
            <person name="Brown M."/>
        </authorList>
    </citation>
    <scope>INTERACTION WITH NOCA7</scope>
</reference>
<reference key="20">
    <citation type="journal article" date="2004" name="Biochem. Biophys. Res. Commun.">
        <title>ERBP, a novel estrogen receptor binding protein enhancing the activity of estrogen receptor.</title>
        <authorList>
            <person name="Bu H."/>
            <person name="Kashireddy P."/>
            <person name="Chang J."/>
            <person name="Zhu Y.T."/>
            <person name="Zhang Z."/>
            <person name="Zheng W."/>
            <person name="Rao S.M."/>
            <person name="Zhu Y.-J."/>
        </authorList>
    </citation>
    <scope>INTERACTION WITH DNTTIP2</scope>
</reference>
<reference key="21">
    <citation type="journal article" date="2005" name="Genes Dev.">
        <title>Hic-5 regulates an epithelial program mediated by PPARgamma.</title>
        <authorList>
            <person name="Drori S."/>
            <person name="Girnun G.D."/>
            <person name="Tou L."/>
            <person name="Szwaya J.D."/>
            <person name="Mueller E."/>
            <person name="Xia K."/>
            <person name="Shivdasani R.A."/>
            <person name="Spiegelman B.M."/>
        </authorList>
    </citation>
    <scope>INTERACTION WITH TGFB1I1</scope>
</reference>
<reference key="22">
    <citation type="journal article" date="2006" name="Endocrinology">
        <title>Isolation and characterization of a transcriptional cofactor and its novel isoform that bind the DNA-binding domain of peroxisome proliferator-activated receptor gamma.</title>
        <authorList>
            <person name="Tomaru T."/>
            <person name="Satoh T."/>
            <person name="Yoshino S."/>
            <person name="Ishizuka T."/>
            <person name="Hashimoto K."/>
            <person name="Monden T."/>
            <person name="Yamada M."/>
            <person name="Mori M."/>
        </authorList>
    </citation>
    <scope>INTERACTION WITH HELZ2</scope>
</reference>
<reference key="23">
    <citation type="journal article" date="2006" name="Mol. Endocrinol.">
        <title>3-phosphoinositide-dependent protein kinase-1 activates the peroxisome proliferator-activated receptor-gamma and promotes adipocyte differentiation.</title>
        <authorList>
            <person name="Yin Y."/>
            <person name="Yuan H."/>
            <person name="Wang C."/>
            <person name="Pattabiraman N."/>
            <person name="Rao M."/>
            <person name="Pestell R.G."/>
            <person name="Glazer R.I."/>
        </authorList>
    </citation>
    <scope>FUNCTION</scope>
    <scope>INTERACTION WITH PDPK1</scope>
    <scope>ACTIVITY REGULATION</scope>
</reference>
<reference key="24">
    <citation type="journal article" date="2007" name="Mol. Cell. Biol.">
        <title>Interaction with MEK causes nuclear export and downregulation of peroxisome proliferator-activated receptor gamma.</title>
        <authorList>
            <person name="Burgermeister E."/>
            <person name="Chuderland D."/>
            <person name="Hanoch T."/>
            <person name="Meyer M."/>
            <person name="Liscovitch M."/>
            <person name="Seger R."/>
        </authorList>
    </citation>
    <scope>INTERACTION WITH MAP2K1/MEK1</scope>
    <scope>SUBCELLULAR LOCATION</scope>
</reference>
<reference key="25">
    <citation type="journal article" date="2010" name="BMC Mol. Biol.">
        <title>The transforming acidic coiled coil (TACC1) protein modulates the transcriptional activity of the nuclear receptors TR and RAR.</title>
        <authorList>
            <person name="Guyot R."/>
            <person name="Vincent S."/>
            <person name="Bertin J."/>
            <person name="Samarut J."/>
            <person name="Ravel-Chapuis P."/>
        </authorList>
    </citation>
    <scope>INTERACTION WITH TACC1</scope>
</reference>
<reference key="26">
    <citation type="journal article" date="2010" name="J. Biol. Chem.">
        <title>Endoplasmic reticulum stress-activated C/EBP homologous protein enhances nuclear factor-kappaB signals via repression of peroxisome proliferator-activated receptor gamma.</title>
        <authorList>
            <person name="Park S.H."/>
            <person name="Choi H.J."/>
            <person name="Yang H."/>
            <person name="Do K.H."/>
            <person name="Kim J."/>
            <person name="Lee D.W."/>
            <person name="Moon Y."/>
        </authorList>
    </citation>
    <scope>FUNCTION</scope>
</reference>
<reference key="27">
    <citation type="journal article" date="2011" name="J. Biol. Chem.">
        <title>Additional sex comb-like (ASXL) proteins 1 and 2 play opposite roles in adipogenesis via reciprocal regulation of peroxisome proliferator-activated receptor {gamma}.</title>
        <authorList>
            <person name="Park U.H."/>
            <person name="Yoon S.K."/>
            <person name="Park T."/>
            <person name="Kim E.J."/>
            <person name="Um S.J."/>
        </authorList>
    </citation>
    <scope>INTERACTION WITH ASXL1 AND ASXL2</scope>
</reference>
<reference key="28">
    <citation type="journal article" date="2012" name="J. Biol. Chem.">
        <title>Familial focal segmental glomerulosclerosis (FSGS)-linked alpha-actinin 4 (ACTN4) protein mutants lose ability to activate transcription by nuclear hormone receptors.</title>
        <authorList>
            <person name="Khurana S."/>
            <person name="Chakraborty S."/>
            <person name="Lam M."/>
            <person name="Liu Y."/>
            <person name="Su Y.T."/>
            <person name="Zhao X."/>
            <person name="Saleem M.A."/>
            <person name="Mathieson P.W."/>
            <person name="Bruggeman L.A."/>
            <person name="Kao H.Y."/>
        </authorList>
    </citation>
    <scope>INTERACTION WITH ACTN4</scope>
</reference>
<reference key="29">
    <citation type="journal article" date="2013" name="J. Proteome Res.">
        <title>Toward a comprehensive characterization of a human cancer cell phosphoproteome.</title>
        <authorList>
            <person name="Zhou H."/>
            <person name="Di Palma S."/>
            <person name="Preisinger C."/>
            <person name="Peng M."/>
            <person name="Polat A.N."/>
            <person name="Heck A.J."/>
            <person name="Mohammed S."/>
        </authorList>
    </citation>
    <scope>PHOSPHORYLATION [LARGE SCALE ANALYSIS] AT SER-112</scope>
    <scope>IDENTIFICATION BY MASS SPECTROMETRY [LARGE SCALE ANALYSIS]</scope>
    <source>
        <tissue>Cervix carcinoma</tissue>
    </source>
</reference>
<reference key="30">
    <citation type="journal article" date="2013" name="Mol. Endocrinol.">
        <title>THRAP3 interacts with HELZ2 and plays a novel role in adipocyte differentiation.</title>
        <authorList>
            <person name="Katano-Toki A."/>
            <person name="Satoh T."/>
            <person name="Tomaru T."/>
            <person name="Yoshino S."/>
            <person name="Ishizuka T."/>
            <person name="Ishii S."/>
            <person name="Ozawa A."/>
            <person name="Shibusawa N."/>
            <person name="Tsuchiya T."/>
            <person name="Saito T."/>
            <person name="Shimizu H."/>
            <person name="Hashimoto K."/>
            <person name="Okada S."/>
            <person name="Yamada M."/>
            <person name="Mori M."/>
        </authorList>
    </citation>
    <scope>FUNCTION</scope>
    <scope>INTERACTION WITH HELZ2 AND THRAP3</scope>
    <scope>SUBCELLULAR LOCATION</scope>
</reference>
<reference key="31">
    <citation type="journal article" date="2015" name="Mol. Med. Report.">
        <title>Mycobacterium tuberculosis 19-kDa lipoprotein induces Toll-like receptor 2-dependent peroxisome proliferator-activated receptor gamma expression and promotes inflammatory responses in human macrophages.</title>
        <authorList>
            <person name="Liu L."/>
            <person name="Liu J."/>
            <person name="Niu G."/>
            <person name="Xu Q."/>
            <person name="Chen Q."/>
        </authorList>
    </citation>
    <scope>FUNCTION (MICROBIAL INFECTION)</scope>
    <scope>INDUCTION (MICROBIAL INFECTION)</scope>
    <source>
        <tissue>Macrophage</tissue>
    </source>
</reference>
<reference key="32">
    <citation type="journal article" date="2019" name="J. Steroid Biochem. Mol. Biol.">
        <title>Nuclear hormone receptors: Ancient 9aaTAD and evolutionally gained NCoA activation pathways.</title>
        <authorList>
            <person name="Piskacek M."/>
            <person name="Havelka M."/>
            <person name="Jendruchova K."/>
            <person name="Knight A."/>
        </authorList>
    </citation>
    <scope>9AATAD MOTIF</scope>
</reference>
<reference key="33">
    <citation type="journal article" date="2023" name="Sci. Rep.">
        <title>Lysine 222 in PPAR gamma1 functions as the key site of MuRF2-mediated ubiquitination modification.</title>
        <authorList>
            <person name="Fan Y."/>
            <person name="Xu F."/>
            <person name="Wang R."/>
            <person name="He J."/>
        </authorList>
    </citation>
    <scope>UBIQUITINATION AT LYS-252</scope>
    <scope>MUTAGENESIS OF LYS-252</scope>
</reference>
<reference evidence="68" key="34">
    <citation type="journal article" date="1998" name="J. Biol. Chem.">
        <title>Crystal structure of the ligand binding domain of the human nuclear receptor PPARgamma.</title>
        <authorList>
            <person name="Uppenberg J."/>
            <person name="Svensson C."/>
            <person name="Jaki M."/>
            <person name="Bertilsson G."/>
            <person name="Jendeberg L."/>
            <person name="Berkenstam A."/>
        </authorList>
    </citation>
    <scope>X-RAY CRYSTALLOGRAPHY (2.2 ANGSTROMS) OF 232-505</scope>
</reference>
<reference evidence="67" key="35">
    <citation type="journal article" date="1998" name="Nature">
        <title>Ligand binding and co-activator assembly of the peroxisome proliferator-activated receptor-gamma.</title>
        <authorList>
            <person name="Nolte R.T."/>
            <person name="Wisely G.B."/>
            <person name="Westin S."/>
            <person name="Cobb J.E."/>
            <person name="Lambert M.H."/>
            <person name="Kurokawa R."/>
            <person name="Rosenfeld M.G."/>
            <person name="Willson T.M."/>
            <person name="Glass C.K."/>
            <person name="Milburn M.V."/>
        </authorList>
    </citation>
    <scope>X-RAY CRYSTALLOGRAPHY (2.2 ANGSTROMS) OF 235-504 IN COMPLEXES WITH THE SYNTHETIC AGONIST ROSIGLITAZONE AND NCOA1</scope>
    <scope>SUBUNIT</scope>
</reference>
<reference evidence="54 55" key="36">
    <citation type="journal article" date="2000" name="Mol. Cell">
        <title>Asymmetry in the PPARgamma/RXRalpha crystal structure reveals the molecular basis of heterodimerization among nuclear receptors.</title>
        <authorList>
            <person name="Gampe R.T. Jr."/>
            <person name="Montana V.G."/>
            <person name="Lambert M.H."/>
            <person name="Miller A.B."/>
            <person name="Bledsoe R.K."/>
            <person name="Milburn M.V."/>
            <person name="Kliewer S.A."/>
            <person name="Willson T.M."/>
            <person name="Xu H.E."/>
        </authorList>
    </citation>
    <scope>X-RAY CRYSTALLOGRAPHY (2.1 ANGSTROMS) IN COMPLEXES WITH RXRA AND SYNTHETIC AGONISTS</scope>
</reference>
<reference evidence="57" key="37">
    <citation type="journal article" date="2001" name="Proc. Natl. Acad. Sci. U.S.A.">
        <title>Structural determinants of ligand binding selectivity between the peroxisome proliferator-activated receptors.</title>
        <authorList>
            <person name="Xu H.E."/>
            <person name="Lambert M.H."/>
            <person name="Montana V.G."/>
            <person name="Plunket K.D."/>
            <person name="Moore L.B."/>
            <person name="Collins J.L."/>
            <person name="Oplinger J.A."/>
            <person name="Kliewer S.A."/>
            <person name="Gampe R.T. Jr."/>
            <person name="McKee D.D."/>
            <person name="Moore J.T."/>
            <person name="Willson T.M."/>
        </authorList>
    </citation>
    <scope>X-RAY CRYSTALLOGRAPHY (2.3 ANGSTROMS) OF 234-505 IN COMPLEXES WITH SYNTHETIC AGONIST AND NCOA1</scope>
</reference>
<reference evidence="56" key="38">
    <citation type="journal article" date="2001" name="Structure">
        <title>Structure of the PPARalpha and -gamma ligand binding domain in complex with AZ 242; ligand selectivity and agonist activation in the PPAR family.</title>
        <authorList>
            <person name="Cronet P."/>
            <person name="Petersen J.F.W."/>
            <person name="Folmer R."/>
            <person name="Blomberg N."/>
            <person name="Sjoeblom K."/>
            <person name="Karlsson U."/>
            <person name="Lindstedt E.-L."/>
            <person name="Bamberg K."/>
        </authorList>
    </citation>
    <scope>X-RAY CRYSTALLOGRAPHY (2.35 ANGSTROMS) OF 225-505 IN COMPLEX WITH SYNTHETIC AGONIST</scope>
</reference>
<reference evidence="58" key="39">
    <citation type="journal article" date="2003" name="J. Med. Chem.">
        <title>Synthesis and biological and structural characterization of the dual-acting peroxisome proliferator-activated receptor alpha/gamma agonist ragaglitazar.</title>
        <authorList>
            <person name="Ebdrup S."/>
            <person name="Pettersson I."/>
            <person name="Rasmussen H.B."/>
            <person name="Deussen H.-J."/>
            <person name="Frost Jensen A."/>
            <person name="Mortensen S.B."/>
            <person name="Fleckner J."/>
            <person name="Pridal L."/>
            <person name="Nygaard L."/>
            <person name="Sauerberg P."/>
        </authorList>
    </citation>
    <scope>X-RAY CRYSTALLOGRAPHY (2.65 ANGSTROMS) OF 230-505 IN COMPLEX WITH SYNTHETIC AGONIST</scope>
</reference>
<reference evidence="60" key="40">
    <citation type="journal article" date="2004" name="J. Biol. Chem.">
        <title>A new class of peroxisome proliferator-activated receptor agonists with a novel binding epitope shows antidiabetic effects.</title>
        <authorList>
            <person name="Oestberg T."/>
            <person name="Svensson S."/>
            <person name="Selen G."/>
            <person name="Uppenberg J."/>
            <person name="Thor M."/>
            <person name="Sundbom M."/>
            <person name="Sydow-Baeckman M."/>
            <person name="Gustavsson A.-L."/>
            <person name="Jendeberg L."/>
        </authorList>
    </citation>
    <scope>X-RAY CRYSTALLOGRAPHY (2.9 ANGSTROMS) OF 232-505 IN COMPLEX WITH NCOA2 AND SYNTHETIC AGONIST</scope>
</reference>
<reference evidence="59" key="41">
    <citation type="journal article" date="2004" name="J. Med. Chem.">
        <title>Structure-based design of potent retinoid X receptor alpha agonists.</title>
        <authorList>
            <person name="Haffner C.D."/>
            <person name="Lenhard J.M."/>
            <person name="Miller A.B."/>
            <person name="McDougald D.L."/>
            <person name="Dwornik K."/>
            <person name="Ittoop O.R."/>
            <person name="Gampe R.T. Jr."/>
            <person name="Xu H.E."/>
            <person name="Blanchard S."/>
            <person name="Montana V.G."/>
            <person name="Consler T.G."/>
            <person name="Bledsoe R.K."/>
            <person name="Ayscue A."/>
            <person name="Croom D."/>
        </authorList>
    </citation>
    <scope>X-RAY CRYSTALLOGRAPHY (2.4 ANGSTROMS) OF 235-505 IN COMPLEX WITH RXRA; NCOA1 AND SYNTHETIC AGONIST</scope>
</reference>
<reference evidence="61" key="42">
    <citation type="journal article" date="2005" name="J. Med. Chem.">
        <title>Design and synthesis of alpha-aryloxyphenylacetic acid derivatives: a novel class of PPARalpha/gamma dual agonists with potent antihyperglycemic and lipid modulating activity.</title>
        <authorList>
            <person name="Shi G.Q."/>
            <person name="Dropinski J.F."/>
            <person name="McKeever B.M."/>
            <person name="Xu S."/>
            <person name="Becker J.W."/>
            <person name="Berger J.P."/>
            <person name="MacNaul K.L."/>
            <person name="Elbrecht A."/>
            <person name="Zhou G."/>
            <person name="Doebber T.W."/>
            <person name="Wang P."/>
            <person name="Chao Y.-S."/>
            <person name="Forrest M."/>
            <person name="Heck J.V."/>
            <person name="Moller D.E."/>
            <person name="Jones A.B."/>
        </authorList>
    </citation>
    <scope>X-RAY CRYSTALLOGRAPHY (2.5 ANGSTROMS) OF 231-505 IN COMPLEX WITH SYNTHETIC AGONIST</scope>
</reference>
<reference evidence="62" key="43">
    <citation type="journal article" date="2005" name="Proc. Natl. Acad. Sci. U.S.A.">
        <title>Structural and biochemical basis for selective repression of the orphan nuclear receptor liver receptor homolog 1 by small heterodimer partner.</title>
        <authorList>
            <person name="Li Y."/>
            <person name="Choi M."/>
            <person name="Suino K."/>
            <person name="Kovach A."/>
            <person name="Daugherty J."/>
            <person name="Kliewer S.A."/>
            <person name="Xu H.E."/>
        </authorList>
    </citation>
    <scope>X-RAY CRYSTALLOGRAPHY (1.8 ANGSTROMS) OF 234-505 IN COMPLEX WITH SYNTHETIC AGONIST AND NR0B2</scope>
</reference>
<reference evidence="66" key="44">
    <citation type="journal article" date="2006" name="Bioorg. Med. Chem. Lett.">
        <title>Design and synthesis of novel N-sulfonyl-2-indole carboxamides as potent PPAR-gamma binding agents with potential application to the treatment of osteoporosis.</title>
        <authorList>
            <person name="Hopkins C.R."/>
            <person name="O'neil S.V."/>
            <person name="Laufersweiler M.C."/>
            <person name="Wang Y."/>
            <person name="Pokross M."/>
            <person name="Mekel M."/>
            <person name="Evdokimov A."/>
            <person name="Walter R."/>
            <person name="Kontoyianni M."/>
            <person name="Petrey M.E."/>
            <person name="Sabatakos G."/>
            <person name="Roesgen J.T."/>
            <person name="Richardson E."/>
            <person name="Demuth T.P. Jr."/>
        </authorList>
    </citation>
    <scope>X-RAY CRYSTALLOGRAPHY (2.0 ANGSTROMS) OF 234-505 IN COMPLEX WITH SYNTHETIC AGONIST AND NCOA1</scope>
</reference>
<reference evidence="63" key="45">
    <citation type="journal article" date="2006" name="J. Med. Chem.">
        <title>Indol-1-yl acetic acids as peroxisome proliferator-activated receptor agonists: design, synthesis, structural biology, and molecular docking studies.</title>
        <authorList>
            <person name="Mahindroo N."/>
            <person name="Wang C.-C."/>
            <person name="Liao C.-C."/>
            <person name="Huang C.-F."/>
            <person name="Lu I.-L."/>
            <person name="Lien T.-W."/>
            <person name="Peng Y.-H."/>
            <person name="Huang W.-J."/>
            <person name="Lin Y.-T."/>
            <person name="Hsu M.-C."/>
            <person name="Lin C.-H."/>
            <person name="Tsai C.-H."/>
            <person name="Hsu J.-T."/>
            <person name="Chen X."/>
            <person name="Lyu P.-C."/>
            <person name="Chao Y.-S."/>
            <person name="Wu S.-Y."/>
            <person name="Hsieh H.-P."/>
        </authorList>
    </citation>
    <scope>X-RAY CRYSTALLOGRAPHY (2.07 ANGSTROMS) OF 235-505 IN COMPLEX WITH SYNTHETIC AGONIST</scope>
</reference>
<reference evidence="64 65" key="46">
    <citation type="journal article" date="2006" name="J. Med. Chem.">
        <title>Structure-based drug design of a novel family of PPARgamma partial agonists: virtual screening, X-ray crystallography, and in vitro/in vivo biological activities.</title>
        <authorList>
            <person name="Lu I.-L."/>
            <person name="Huang C.-F."/>
            <person name="Peng Y.-H."/>
            <person name="Lin Y.-T."/>
            <person name="Hsieh H.-P."/>
            <person name="Chen C.-T."/>
            <person name="Lien T.-W."/>
            <person name="Lee H.-J."/>
            <person name="Mahindroo N."/>
            <person name="Prakash E."/>
            <person name="Yueh A."/>
            <person name="Chen H.-Y."/>
            <person name="Goparaju C.M.V."/>
            <person name="Chen X."/>
            <person name="Liao C.-C."/>
            <person name="Chao Y.-S."/>
            <person name="Hsu J.-T."/>
            <person name="Wu S.-Y."/>
        </authorList>
    </citation>
    <scope>X-RAY CRYSTALLOGRAPHY (2.54 ANGSTROMS) OF 235-505 IN COMPLEX WITH SYNTHETIC AGONIST</scope>
</reference>
<reference key="47">
    <citation type="journal article" date="1997" name="Biochem. Biophys. Res. Commun.">
        <title>Molecular scanning of the human peroxisome proliferator activated receptor gamma (hPPAR-gamma) gene in diabetic Caucasians: identification of a pro12ala PPAR-gamma-2 missense mutation.</title>
        <authorList>
            <person name="Yen C.-J."/>
            <person name="Beamer B.A."/>
            <person name="Negri C."/>
            <person name="Silver K."/>
            <person name="Brown K.A."/>
            <person name="Yarnall D.P."/>
            <person name="Burns D.K."/>
            <person name="Roth J."/>
            <person name="Shuldiner A.R."/>
        </authorList>
    </citation>
    <scope>VARIANT ALA-12</scope>
</reference>
<reference key="48">
    <citation type="journal article" date="1998" name="N. Engl. J. Med.">
        <title>Obesity associated with a mutation in a genetic regulator of adipocyte differentiation.</title>
        <authorList>
            <person name="Ristow M."/>
            <person name="Muller-Wieland D."/>
            <person name="Pfeiffer A."/>
            <person name="Krone W."/>
            <person name="Kahn C.R."/>
        </authorList>
    </citation>
    <scope>VARIANT OBESITY GLN-113</scope>
</reference>
<reference key="49">
    <citation type="journal article" date="1998" name="Nat. Genet.">
        <title>A Pro12Ala substitution in PPARgamma2 associated with decreased receptor activity, lower body mass index and improved insulin sensitivity.</title>
        <authorList>
            <person name="Deeb S.S."/>
            <person name="Fajas L."/>
            <person name="Nemoto M."/>
            <person name="Pihlajamaeki J."/>
            <person name="Mykkaenen L."/>
            <person name="Kuusisto J."/>
            <person name="Laakso M."/>
            <person name="Fujimoto W."/>
            <person name="Auwerx J."/>
        </authorList>
    </citation>
    <scope>INVOLVEMENT IN BMIQ1</scope>
    <scope>VARIANT ALA-12</scope>
</reference>
<reference key="50">
    <citation type="journal article" date="1999" name="Eur. J. Endocrinol.">
        <title>Missense variants in the human peroxisome proliferator-activated receptor-gamma2 gene in lean and obese subjects.</title>
        <authorList>
            <person name="Hamann A."/>
            <person name="Munzberg H."/>
            <person name="Buttron P."/>
            <person name="Busing B."/>
            <person name="Hinney A."/>
            <person name="Mayer H."/>
            <person name="Siegfried W."/>
            <person name="Hebebrand J."/>
            <person name="Greten H."/>
        </authorList>
    </citation>
    <scope>VARIANT ALA-12</scope>
</reference>
<reference key="51">
    <citation type="journal article" date="1999" name="J. Clin. Endocrinol. Metab.">
        <title>Two polymorphisms in the peroxisome proliferator-activated receptor-gamma gene are associated with severe overweight among obese women.</title>
        <authorList>
            <person name="Valve R."/>
            <person name="Sivenius K."/>
            <person name="Miettinen R."/>
            <person name="Pihlajamaeki J."/>
            <person name="Rissanen A."/>
            <person name="Deeb S.S."/>
            <person name="Auwerx J."/>
            <person name="Uusitupa M."/>
            <person name="Laakso M."/>
        </authorList>
    </citation>
    <scope>INVOLVEMENT IN BMIQ1</scope>
    <scope>VARIANT ALA-12</scope>
</reference>
<reference key="52">
    <citation type="journal article" date="1999" name="Mol. Cell">
        <title>Loss-of-function mutations in PPAR-gamma associated with human colon cancer.</title>
        <authorList>
            <person name="Sarraf P."/>
            <person name="Mueller E."/>
            <person name="Smith W.M."/>
            <person name="Wright H.M."/>
            <person name="Kum J.B."/>
            <person name="Aaltonen L.A."/>
            <person name="de la Chapelle A."/>
            <person name="Spiegelman B.M."/>
            <person name="Eng C."/>
        </authorList>
    </citation>
    <scope>VARIANTS COLON CANCER PRO-314 AND HIS-316</scope>
    <scope>VARIANT ALA-12</scope>
</reference>
<reference key="53">
    <citation type="journal article" date="1999" name="Nature">
        <title>Dominant negative mutations in human PPAR-gamma associated with severe insulin resistance, diabetes mellitus and hypertension.</title>
        <authorList>
            <person name="Barroso I."/>
            <person name="Gurnell M."/>
            <person name="Crowley V.E.F."/>
            <person name="Agostini M."/>
            <person name="Schwabel J.W."/>
            <person name="Soos M.A."/>
            <person name="Masien G.L."/>
            <person name="Williams T.D.M."/>
            <person name="Lewis H."/>
            <person name="Schafer A.J."/>
            <person name="Chatterjee V.K.K."/>
            <person name="O'Rahilly S."/>
        </authorList>
    </citation>
    <scope>VARIANTS DIABETES MET-318 AND LEU-495</scope>
</reference>
<reference key="54">
    <citation type="journal article" date="2002" name="Diabetes">
        <title>PPARG F388L, a transactivation-deficient mutant, in familial partial lipodystrophy.</title>
        <authorList>
            <person name="Hegele R.A."/>
            <person name="Cao H."/>
            <person name="Frankowski C."/>
            <person name="Mathews S.T."/>
            <person name="Leff T."/>
        </authorList>
    </citation>
    <scope>VARIANT FPLD3 LEU-388</scope>
</reference>
<reference key="55">
    <citation type="journal article" date="2002" name="J. Clin. Endocrinol. Metab.">
        <title>A novel heterozygous mutation in peroxisome proliferator-activated receptor-gamma gene in a patient with familial partial lipodystrophy.</title>
        <authorList>
            <person name="Agarwal A.K."/>
            <person name="Garg A."/>
        </authorList>
    </citation>
    <scope>VARIANT FPLD3 CYS-425</scope>
</reference>
<reference key="56">
    <citation type="journal article" date="2003" name="J. Med. Genet.">
        <title>Effect of the peroxisome proliferator activated receptor-gamma gene Pro12Ala variant on body mass index: a meta-analysis.</title>
        <authorList>
            <person name="Masud S."/>
            <person name="Ye S."/>
        </authorList>
    </citation>
    <scope>ASSOCIATION OF VARIANT ALA-12 WITH BMI</scope>
</reference>
<reference key="57">
    <citation type="journal article" date="2004" name="J. Clin. Endocrinol. Metab.">
        <title>Ala12Ala genotype of the peroxisome proliferator-activated receptor gamma2 protects against atherosclerosis.</title>
        <authorList>
            <person name="Temelkova-Kurktschiev T."/>
            <person name="Hanefeld M."/>
            <person name="Chinetti G."/>
            <person name="Zawadzki C."/>
            <person name="Haulon S."/>
            <person name="Kubaszek A."/>
            <person name="Koehler C."/>
            <person name="Leonhardt W."/>
            <person name="Staels B."/>
            <person name="Laakso M."/>
        </authorList>
    </citation>
    <scope>VARIANT ALA-12</scope>
</reference>
<reference key="58">
    <citation type="journal article" date="2004" name="Metabolism">
        <title>Effects of peroxisome proliferator-activated receptor-gamma 2 Pro12Ala polymorphism on body fat distribution in female Korean subjects.</title>
        <authorList>
            <person name="Kim K.S."/>
            <person name="Choi S.M."/>
            <person name="Shin S.U."/>
            <person name="Yang H.S."/>
            <person name="Yoon Y."/>
        </authorList>
    </citation>
    <scope>VARIANT ALA-12</scope>
</reference>
<protein>
    <recommendedName>
        <fullName>Peroxisome proliferator-activated receptor gamma</fullName>
        <shortName>PPAR-gamma</shortName>
    </recommendedName>
    <alternativeName>
        <fullName>Nuclear receptor subfamily 1 group C member 3</fullName>
    </alternativeName>
</protein>
<organism>
    <name type="scientific">Homo sapiens</name>
    <name type="common">Human</name>
    <dbReference type="NCBI Taxonomy" id="9606"/>
    <lineage>
        <taxon>Eukaryota</taxon>
        <taxon>Metazoa</taxon>
        <taxon>Chordata</taxon>
        <taxon>Craniata</taxon>
        <taxon>Vertebrata</taxon>
        <taxon>Euteleostomi</taxon>
        <taxon>Mammalia</taxon>
        <taxon>Eutheria</taxon>
        <taxon>Euarchontoglires</taxon>
        <taxon>Primates</taxon>
        <taxon>Haplorrhini</taxon>
        <taxon>Catarrhini</taxon>
        <taxon>Hominidae</taxon>
        <taxon>Homo</taxon>
    </lineage>
</organism>
<feature type="chain" id="PRO_0000053492" description="Peroxisome proliferator-activated receptor gamma">
    <location>
        <begin position="1"/>
        <end position="505"/>
    </location>
</feature>
<feature type="domain" description="NR LBD" evidence="4">
    <location>
        <begin position="238"/>
        <end position="503"/>
    </location>
</feature>
<feature type="DNA-binding region" description="Nuclear receptor" evidence="3">
    <location>
        <begin position="136"/>
        <end position="210"/>
    </location>
</feature>
<feature type="zinc finger region" description="NR C4-type" evidence="3">
    <location>
        <begin position="139"/>
        <end position="159"/>
    </location>
</feature>
<feature type="zinc finger region" description="NR C4-type" evidence="3">
    <location>
        <begin position="176"/>
        <end position="198"/>
    </location>
</feature>
<feature type="region of interest" description="Interaction with FAM120B" evidence="1">
    <location>
        <begin position="205"/>
        <end position="280"/>
    </location>
</feature>
<feature type="short sequence motif" description="9aaTAD" evidence="38">
    <location>
        <begin position="495"/>
        <end position="503"/>
    </location>
</feature>
<feature type="binding site" evidence="42 67">
    <location>
        <begin position="314"/>
        <end position="317"/>
    </location>
    <ligand>
        <name>rosiglitazone</name>
        <dbReference type="ChEBI" id="CHEBI:188074"/>
        <note>agonist</note>
    </ligand>
</feature>
<feature type="binding site" evidence="42 67">
    <location>
        <position position="351"/>
    </location>
    <ligand>
        <name>rosiglitazone</name>
        <dbReference type="ChEBI" id="CHEBI:188074"/>
        <note>agonist</note>
    </ligand>
</feature>
<feature type="binding site" evidence="42 67">
    <location>
        <position position="477"/>
    </location>
    <ligand>
        <name>rosiglitazone</name>
        <dbReference type="ChEBI" id="CHEBI:188074"/>
        <note>agonist</note>
    </ligand>
</feature>
<feature type="binding site" evidence="42 67">
    <location>
        <position position="501"/>
    </location>
    <ligand>
        <name>rosiglitazone</name>
        <dbReference type="ChEBI" id="CHEBI:188074"/>
        <note>agonist</note>
    </ligand>
</feature>
<feature type="modified residue" description="Phosphoserine" evidence="69">
    <location>
        <position position="112"/>
    </location>
</feature>
<feature type="glycosylation site" description="O-linked (GlcNAc) threonine" evidence="1">
    <location>
        <position position="84"/>
    </location>
</feature>
<feature type="cross-link" description="Glycyl lysine isopeptide (Lys-Gly) (interchain with G-Cter in ubiquitin)" evidence="39">
    <location>
        <position position="252"/>
    </location>
</feature>
<feature type="splice variant" id="VSP_003645" description="In isoform 1 and isoform 3." evidence="45 46 47 48 49 50 51">
    <location>
        <begin position="1"/>
        <end position="28"/>
    </location>
</feature>
<feature type="splice variant" id="VSP_043906" description="In isoform 3." evidence="47">
    <original>AIRFGRM</original>
    <variation>EELQKDS</variation>
    <location>
        <begin position="207"/>
        <end position="213"/>
    </location>
</feature>
<feature type="splice variant" id="VSP_043907" description="In isoform 3." evidence="47">
    <location>
        <begin position="214"/>
        <end position="504"/>
    </location>
</feature>
<feature type="sequence variant" id="VAR_010723" description="May protect from early atherosclerosis in subject at risk for diabetes; correlated with BMI; dbSNP:rs1801282." evidence="5 6 21 22 41 44">
    <original>P</original>
    <variation>A</variation>
    <location>
        <position position="12"/>
    </location>
</feature>
<feature type="sequence variant" id="VAR_016116" description="In dbSNP:rs1805192.">
    <original>P</original>
    <variation>A</variation>
    <location>
        <position position="40"/>
    </location>
</feature>
<feature type="sequence variant" id="VAR_010724" description="In obesity; dbSNP:rs1800571." evidence="43">
    <original>P</original>
    <variation>Q</variation>
    <location>
        <position position="113"/>
    </location>
</feature>
<feature type="sequence variant" id="VAR_010725" description="In colon cancer; sporadic; somatic mutation; loss of ligand-binding; dbSNP:rs121909242." evidence="5">
    <original>Q</original>
    <variation>P</variation>
    <location>
        <position position="314"/>
    </location>
</feature>
<feature type="sequence variant" id="VAR_010726" description="In colon cancer; sporadic; somatic mutation; partial loss of ligand-binding; dbSNP:rs28936407." evidence="5">
    <original>R</original>
    <variation>H</variation>
    <location>
        <position position="316"/>
    </location>
</feature>
<feature type="sequence variant" id="VAR_010727" description="In diabetes; dbSNP:rs72551362." evidence="8">
    <original>V</original>
    <variation>M</variation>
    <location>
        <position position="318"/>
    </location>
</feature>
<feature type="sequence variant" id="VAR_022700" description="In FPLD3; dbSNP:rs72551363." evidence="15">
    <original>F</original>
    <variation>L</variation>
    <location>
        <position position="388"/>
    </location>
</feature>
<feature type="sequence variant" id="VAR_022701" description="In FPLD3; dbSNP:rs72551364." evidence="12">
    <original>R</original>
    <variation>C</variation>
    <location>
        <position position="425"/>
    </location>
</feature>
<feature type="sequence variant" id="VAR_010728" description="In diabetes; dbSNP:rs121909244." evidence="8">
    <original>P</original>
    <variation>L</variation>
    <location>
        <position position="495"/>
    </location>
</feature>
<feature type="mutagenesis site" description="More than 50% loss of ubiquitination." evidence="39">
    <original>K</original>
    <variation>R</variation>
    <location>
        <position position="252"/>
    </location>
</feature>
<feature type="sequence conflict" description="In Ref. 3; BAA18949." evidence="52" ref="3">
    <original>MP</original>
    <variation>IA</variation>
    <location>
        <begin position="36"/>
        <end position="37"/>
    </location>
</feature>
<feature type="sequence conflict" description="In Ref. 3; BAA18949." evidence="52" ref="3">
    <original>MP</original>
    <variation>IA</variation>
    <location>
        <begin position="213"/>
        <end position="214"/>
    </location>
</feature>
<feature type="sequence conflict" description="In Ref. 3; BAA18949." evidence="52" ref="3">
    <original>R</original>
    <variation>RQ</variation>
    <location>
        <position position="240"/>
    </location>
</feature>
<feature type="strand" evidence="72">
    <location>
        <begin position="140"/>
        <end position="142"/>
    </location>
</feature>
<feature type="strand" evidence="71">
    <location>
        <begin position="148"/>
        <end position="150"/>
    </location>
</feature>
<feature type="strand" evidence="72">
    <location>
        <begin position="151"/>
        <end position="154"/>
    </location>
</feature>
<feature type="helix" evidence="72">
    <location>
        <begin position="157"/>
        <end position="167"/>
    </location>
</feature>
<feature type="turn" evidence="72">
    <location>
        <begin position="168"/>
        <end position="170"/>
    </location>
</feature>
<feature type="helix" evidence="72">
    <location>
        <begin position="186"/>
        <end position="188"/>
    </location>
</feature>
<feature type="helix" evidence="72">
    <location>
        <begin position="191"/>
        <end position="200"/>
    </location>
</feature>
<feature type="helix" evidence="72">
    <location>
        <begin position="205"/>
        <end position="207"/>
    </location>
</feature>
<feature type="turn" evidence="72">
    <location>
        <begin position="214"/>
        <end position="217"/>
    </location>
</feature>
<feature type="helix" evidence="72">
    <location>
        <begin position="218"/>
        <end position="220"/>
    </location>
</feature>
<feature type="turn" evidence="78">
    <location>
        <begin position="226"/>
        <end position="229"/>
    </location>
</feature>
<feature type="helix" evidence="84">
    <location>
        <begin position="235"/>
        <end position="253"/>
    </location>
</feature>
<feature type="strand" evidence="83">
    <location>
        <begin position="254"/>
        <end position="256"/>
    </location>
</feature>
<feature type="helix" evidence="84">
    <location>
        <begin position="258"/>
        <end position="265"/>
    </location>
</feature>
<feature type="strand" evidence="80">
    <location>
        <begin position="266"/>
        <end position="268"/>
    </location>
</feature>
<feature type="strand" evidence="74">
    <location>
        <begin position="269"/>
        <end position="271"/>
    </location>
</feature>
<feature type="strand" evidence="84">
    <location>
        <begin position="275"/>
        <end position="277"/>
    </location>
</feature>
<feature type="helix" evidence="84">
    <location>
        <begin position="280"/>
        <end position="290"/>
    </location>
</feature>
<feature type="strand" evidence="73">
    <location>
        <begin position="291"/>
        <end position="293"/>
    </location>
</feature>
<feature type="strand" evidence="70">
    <location>
        <begin position="294"/>
        <end position="296"/>
    </location>
</feature>
<feature type="strand" evidence="79">
    <location>
        <begin position="297"/>
        <end position="299"/>
    </location>
</feature>
<feature type="helix" evidence="86">
    <location>
        <begin position="302"/>
        <end position="304"/>
    </location>
</feature>
<feature type="helix" evidence="84">
    <location>
        <begin position="305"/>
        <end position="329"/>
    </location>
</feature>
<feature type="helix" evidence="87">
    <location>
        <begin position="334"/>
        <end position="336"/>
    </location>
</feature>
<feature type="helix" evidence="84">
    <location>
        <begin position="339"/>
        <end position="360"/>
    </location>
</feature>
<feature type="strand" evidence="71">
    <location>
        <begin position="361"/>
        <end position="363"/>
    </location>
</feature>
<feature type="strand" evidence="84">
    <location>
        <begin position="366"/>
        <end position="369"/>
    </location>
</feature>
<feature type="turn" evidence="84">
    <location>
        <begin position="370"/>
        <end position="373"/>
    </location>
</feature>
<feature type="strand" evidence="84">
    <location>
        <begin position="374"/>
        <end position="377"/>
    </location>
</feature>
<feature type="helix" evidence="84">
    <location>
        <begin position="378"/>
        <end position="382"/>
    </location>
</feature>
<feature type="strand" evidence="77">
    <location>
        <begin position="383"/>
        <end position="385"/>
    </location>
</feature>
<feature type="turn" evidence="84">
    <location>
        <begin position="386"/>
        <end position="390"/>
    </location>
</feature>
<feature type="helix" evidence="84">
    <location>
        <begin position="393"/>
        <end position="403"/>
    </location>
</feature>
<feature type="helix" evidence="84">
    <location>
        <begin position="409"/>
        <end position="420"/>
    </location>
</feature>
<feature type="strand" evidence="85">
    <location>
        <begin position="423"/>
        <end position="427"/>
    </location>
</feature>
<feature type="helix" evidence="84">
    <location>
        <begin position="431"/>
        <end position="452"/>
    </location>
</feature>
<feature type="strand" evidence="76">
    <location>
        <begin position="453"/>
        <end position="455"/>
    </location>
</feature>
<feature type="strand" evidence="82">
    <location>
        <begin position="456"/>
        <end position="458"/>
    </location>
</feature>
<feature type="helix" evidence="84">
    <location>
        <begin position="459"/>
        <end position="487"/>
    </location>
</feature>
<feature type="turn" evidence="81">
    <location>
        <begin position="488"/>
        <end position="490"/>
    </location>
</feature>
<feature type="helix" evidence="75">
    <location>
        <begin position="491"/>
        <end position="493"/>
    </location>
</feature>
<feature type="helix" evidence="84">
    <location>
        <begin position="495"/>
        <end position="501"/>
    </location>
</feature>
<feature type="turn" evidence="88">
    <location>
        <begin position="502"/>
        <end position="504"/>
    </location>
</feature>
<keyword id="KW-0002">3D-structure</keyword>
<keyword id="KW-0010">Activator</keyword>
<keyword id="KW-0025">Alternative splicing</keyword>
<keyword id="KW-0090">Biological rhythms</keyword>
<keyword id="KW-0963">Cytoplasm</keyword>
<keyword id="KW-0219">Diabetes mellitus</keyword>
<keyword id="KW-0225">Disease variant</keyword>
<keyword id="KW-0238">DNA-binding</keyword>
<keyword id="KW-0325">Glycoprotein</keyword>
<keyword id="KW-1017">Isopeptide bond</keyword>
<keyword id="KW-0479">Metal-binding</keyword>
<keyword id="KW-0539">Nucleus</keyword>
<keyword id="KW-0550">Obesity</keyword>
<keyword id="KW-0597">Phosphoprotein</keyword>
<keyword id="KW-1267">Proteomics identification</keyword>
<keyword id="KW-0675">Receptor</keyword>
<keyword id="KW-1185">Reference proteome</keyword>
<keyword id="KW-0804">Transcription</keyword>
<keyword id="KW-0805">Transcription regulation</keyword>
<keyword id="KW-0832">Ubl conjugation</keyword>
<keyword id="KW-0862">Zinc</keyword>
<keyword id="KW-0863">Zinc-finger</keyword>
<proteinExistence type="evidence at protein level"/>
<dbReference type="EMBL" id="U79012">
    <property type="protein sequence ID" value="AAC51248.1"/>
    <property type="molecule type" value="mRNA"/>
</dbReference>
<dbReference type="EMBL" id="U63415">
    <property type="protein sequence ID" value="AAB04028.1"/>
    <property type="molecule type" value="mRNA"/>
</dbReference>
<dbReference type="EMBL" id="D83233">
    <property type="protein sequence ID" value="BAA18949.1"/>
    <property type="molecule type" value="mRNA"/>
</dbReference>
<dbReference type="EMBL" id="L40904">
    <property type="protein sequence ID" value="AAA80314.2"/>
    <property type="molecule type" value="mRNA"/>
</dbReference>
<dbReference type="EMBL" id="AB005526">
    <property type="protein sequence ID" value="BAA23354.1"/>
    <property type="status" value="ALT_SEQ"/>
    <property type="molecule type" value="Genomic_DNA"/>
</dbReference>
<dbReference type="EMBL" id="X90563">
    <property type="protein sequence ID" value="CAA62152.1"/>
    <property type="molecule type" value="mRNA"/>
</dbReference>
<dbReference type="EMBL" id="X90563">
    <property type="protein sequence ID" value="CAA62153.1"/>
    <property type="status" value="ALT_INIT"/>
    <property type="molecule type" value="mRNA"/>
</dbReference>
<dbReference type="EMBL" id="DQ356894">
    <property type="protein sequence ID" value="ABC97372.1"/>
    <property type="molecule type" value="mRNA"/>
</dbReference>
<dbReference type="EMBL" id="BT007281">
    <property type="protein sequence ID" value="AAP35945.1"/>
    <property type="molecule type" value="mRNA"/>
</dbReference>
<dbReference type="EMBL" id="AK290581">
    <property type="protein sequence ID" value="BAF83270.1"/>
    <property type="status" value="ALT_INIT"/>
    <property type="molecule type" value="mRNA"/>
</dbReference>
<dbReference type="EMBL" id="AB451337">
    <property type="protein sequence ID" value="BAG70151.1"/>
    <property type="molecule type" value="mRNA"/>
</dbReference>
<dbReference type="EMBL" id="AB451486">
    <property type="protein sequence ID" value="BAG70300.1"/>
    <property type="molecule type" value="mRNA"/>
</dbReference>
<dbReference type="EMBL" id="AY157024">
    <property type="protein sequence ID" value="AAN38992.2"/>
    <property type="status" value="ALT_INIT"/>
    <property type="molecule type" value="Genomic_DNA"/>
</dbReference>
<dbReference type="EMBL" id="AC090947">
    <property type="status" value="NOT_ANNOTATED_CDS"/>
    <property type="molecule type" value="Genomic_DNA"/>
</dbReference>
<dbReference type="EMBL" id="AC091492">
    <property type="status" value="NOT_ANNOTATED_CDS"/>
    <property type="molecule type" value="Genomic_DNA"/>
</dbReference>
<dbReference type="EMBL" id="AC093174">
    <property type="status" value="NOT_ANNOTATED_CDS"/>
    <property type="molecule type" value="Genomic_DNA"/>
</dbReference>
<dbReference type="EMBL" id="CH471055">
    <property type="protein sequence ID" value="EAW64124.1"/>
    <property type="molecule type" value="Genomic_DNA"/>
</dbReference>
<dbReference type="EMBL" id="BC006811">
    <property type="protein sequence ID" value="AAH06811.1"/>
    <property type="molecule type" value="mRNA"/>
</dbReference>
<dbReference type="CCDS" id="CCDS2609.1">
    <molecule id="P37231-1"/>
</dbReference>
<dbReference type="PIR" id="JC4859">
    <property type="entry name" value="JC4859"/>
</dbReference>
<dbReference type="PIR" id="PC4290">
    <property type="entry name" value="PC4290"/>
</dbReference>
<dbReference type="PIR" id="PC4429">
    <property type="entry name" value="PC4429"/>
</dbReference>
<dbReference type="RefSeq" id="NP_005028.4">
    <property type="nucleotide sequence ID" value="NM_005037.5"/>
</dbReference>
<dbReference type="RefSeq" id="NP_056953.2">
    <molecule id="P37231-1"/>
    <property type="nucleotide sequence ID" value="NM_015869.4"/>
</dbReference>
<dbReference type="RefSeq" id="NP_619725.2">
    <property type="nucleotide sequence ID" value="NM_138711.3"/>
</dbReference>
<dbReference type="RefSeq" id="NP_619726.2">
    <property type="nucleotide sequence ID" value="NM_138712.3"/>
</dbReference>
<dbReference type="RefSeq" id="XP_011532143.1">
    <property type="nucleotide sequence ID" value="XM_011533841.2"/>
</dbReference>
<dbReference type="PDB" id="1FM6">
    <property type="method" value="X-ray"/>
    <property type="resolution" value="2.10 A"/>
    <property type="chains" value="D/X=234-505"/>
</dbReference>
<dbReference type="PDB" id="1FM9">
    <property type="method" value="X-ray"/>
    <property type="resolution" value="2.10 A"/>
    <property type="chains" value="D=234-505"/>
</dbReference>
<dbReference type="PDB" id="1I7I">
    <property type="method" value="X-ray"/>
    <property type="resolution" value="2.35 A"/>
    <property type="chains" value="A/B=225-505"/>
</dbReference>
<dbReference type="PDB" id="1K74">
    <property type="method" value="X-ray"/>
    <property type="resolution" value="2.30 A"/>
    <property type="chains" value="D=234-505"/>
</dbReference>
<dbReference type="PDB" id="1KNU">
    <property type="method" value="X-ray"/>
    <property type="resolution" value="2.50 A"/>
    <property type="chains" value="A/B=232-505"/>
</dbReference>
<dbReference type="PDB" id="1NYX">
    <property type="method" value="X-ray"/>
    <property type="resolution" value="2.65 A"/>
    <property type="chains" value="A/B=230-505"/>
</dbReference>
<dbReference type="PDB" id="1PRG">
    <property type="method" value="X-ray"/>
    <property type="resolution" value="2.20 A"/>
    <property type="chains" value="A/B=235-504"/>
</dbReference>
<dbReference type="PDB" id="1RDT">
    <property type="method" value="X-ray"/>
    <property type="resolution" value="2.40 A"/>
    <property type="chains" value="D=235-505"/>
</dbReference>
<dbReference type="PDB" id="1WM0">
    <property type="method" value="X-ray"/>
    <property type="resolution" value="2.90 A"/>
    <property type="chains" value="X=232-505"/>
</dbReference>
<dbReference type="PDB" id="1ZEO">
    <property type="method" value="X-ray"/>
    <property type="resolution" value="2.50 A"/>
    <property type="chains" value="A/B=231-505"/>
</dbReference>
<dbReference type="PDB" id="1ZGY">
    <property type="method" value="X-ray"/>
    <property type="resolution" value="1.80 A"/>
    <property type="chains" value="A=234-505"/>
</dbReference>
<dbReference type="PDB" id="2ATH">
    <property type="method" value="X-ray"/>
    <property type="resolution" value="2.28 A"/>
    <property type="chains" value="A/B=235-505"/>
</dbReference>
<dbReference type="PDB" id="2F4B">
    <property type="method" value="X-ray"/>
    <property type="resolution" value="2.07 A"/>
    <property type="chains" value="A/B=235-505"/>
</dbReference>
<dbReference type="PDB" id="2FVJ">
    <property type="method" value="X-ray"/>
    <property type="resolution" value="1.99 A"/>
    <property type="chains" value="A=235-505"/>
</dbReference>
<dbReference type="PDB" id="2G0G">
    <property type="method" value="X-ray"/>
    <property type="resolution" value="2.54 A"/>
    <property type="chains" value="A/B=235-505"/>
</dbReference>
<dbReference type="PDB" id="2G0H">
    <property type="method" value="X-ray"/>
    <property type="resolution" value="2.30 A"/>
    <property type="chains" value="A/B=235-505"/>
</dbReference>
<dbReference type="PDB" id="2GTK">
    <property type="method" value="X-ray"/>
    <property type="resolution" value="2.10 A"/>
    <property type="chains" value="A=235-505"/>
</dbReference>
<dbReference type="PDB" id="2HFP">
    <property type="method" value="X-ray"/>
    <property type="resolution" value="2.00 A"/>
    <property type="chains" value="A=234-505"/>
</dbReference>
<dbReference type="PDB" id="2HWQ">
    <property type="method" value="X-ray"/>
    <property type="resolution" value="1.97 A"/>
    <property type="chains" value="A/B=235-505"/>
</dbReference>
<dbReference type="PDB" id="2HWR">
    <property type="method" value="X-ray"/>
    <property type="resolution" value="2.34 A"/>
    <property type="chains" value="A/B=235-505"/>
</dbReference>
<dbReference type="PDB" id="2I4J">
    <property type="method" value="X-ray"/>
    <property type="resolution" value="2.10 A"/>
    <property type="chains" value="A/B=223-504"/>
</dbReference>
<dbReference type="PDB" id="2I4P">
    <property type="method" value="X-ray"/>
    <property type="resolution" value="2.10 A"/>
    <property type="chains" value="A/B=223-504"/>
</dbReference>
<dbReference type="PDB" id="2I4Z">
    <property type="method" value="X-ray"/>
    <property type="resolution" value="2.25 A"/>
    <property type="chains" value="A/B=223-504"/>
</dbReference>
<dbReference type="PDB" id="2OM9">
    <property type="method" value="X-ray"/>
    <property type="resolution" value="2.80 A"/>
    <property type="chains" value="A/B/C/D=232-505"/>
</dbReference>
<dbReference type="PDB" id="2P4Y">
    <property type="method" value="X-ray"/>
    <property type="resolution" value="2.25 A"/>
    <property type="chains" value="A/B=231-505"/>
</dbReference>
<dbReference type="PDB" id="2POB">
    <property type="method" value="X-ray"/>
    <property type="resolution" value="2.30 A"/>
    <property type="chains" value="A/B=234-505"/>
</dbReference>
<dbReference type="PDB" id="2PRG">
    <property type="method" value="X-ray"/>
    <property type="resolution" value="2.30 A"/>
    <property type="chains" value="A/B=235-505"/>
</dbReference>
<dbReference type="PDB" id="2Q59">
    <property type="method" value="X-ray"/>
    <property type="resolution" value="2.20 A"/>
    <property type="chains" value="A/B=233-505"/>
</dbReference>
<dbReference type="PDB" id="2Q5P">
    <property type="method" value="X-ray"/>
    <property type="resolution" value="2.30 A"/>
    <property type="chains" value="A/B=233-505"/>
</dbReference>
<dbReference type="PDB" id="2Q5S">
    <property type="method" value="X-ray"/>
    <property type="resolution" value="2.05 A"/>
    <property type="chains" value="A/B=233-505"/>
</dbReference>
<dbReference type="PDB" id="2Q61">
    <property type="method" value="X-ray"/>
    <property type="resolution" value="2.20 A"/>
    <property type="chains" value="A/B=233-505"/>
</dbReference>
<dbReference type="PDB" id="2Q6R">
    <property type="method" value="X-ray"/>
    <property type="resolution" value="2.41 A"/>
    <property type="chains" value="A/B=233-505"/>
</dbReference>
<dbReference type="PDB" id="2Q6S">
    <property type="method" value="X-ray"/>
    <property type="resolution" value="2.40 A"/>
    <property type="chains" value="A/B=233-505"/>
</dbReference>
<dbReference type="PDB" id="2Q8S">
    <property type="method" value="X-ray"/>
    <property type="resolution" value="2.30 A"/>
    <property type="chains" value="A/B=235-505"/>
</dbReference>
<dbReference type="PDB" id="2QMV">
    <property type="method" value="NMR"/>
    <property type="chains" value="A=235-504"/>
</dbReference>
<dbReference type="PDB" id="2VSR">
    <property type="method" value="X-ray"/>
    <property type="resolution" value="2.05 A"/>
    <property type="chains" value="A/B=232-505"/>
</dbReference>
<dbReference type="PDB" id="2VST">
    <property type="method" value="X-ray"/>
    <property type="resolution" value="2.35 A"/>
    <property type="chains" value="A/B=232-505"/>
</dbReference>
<dbReference type="PDB" id="2VV0">
    <property type="method" value="X-ray"/>
    <property type="resolution" value="2.55 A"/>
    <property type="chains" value="A/B=232-505"/>
</dbReference>
<dbReference type="PDB" id="2VV1">
    <property type="method" value="X-ray"/>
    <property type="resolution" value="2.20 A"/>
    <property type="chains" value="A/B=232-505"/>
</dbReference>
<dbReference type="PDB" id="2VV2">
    <property type="method" value="X-ray"/>
    <property type="resolution" value="2.75 A"/>
    <property type="chains" value="A/B=232-505"/>
</dbReference>
<dbReference type="PDB" id="2VV3">
    <property type="method" value="X-ray"/>
    <property type="resolution" value="2.85 A"/>
    <property type="chains" value="A/B=232-505"/>
</dbReference>
<dbReference type="PDB" id="2VV4">
    <property type="method" value="X-ray"/>
    <property type="resolution" value="2.35 A"/>
    <property type="chains" value="A/B=232-505"/>
</dbReference>
<dbReference type="PDB" id="2XKW">
    <property type="method" value="X-ray"/>
    <property type="resolution" value="2.02 A"/>
    <property type="chains" value="A/B=232-505"/>
</dbReference>
<dbReference type="PDB" id="2YFE">
    <property type="method" value="X-ray"/>
    <property type="resolution" value="2.00 A"/>
    <property type="chains" value="A/B=223-505"/>
</dbReference>
<dbReference type="PDB" id="2ZK0">
    <property type="method" value="X-ray"/>
    <property type="resolution" value="2.36 A"/>
    <property type="chains" value="A/B=223-504"/>
</dbReference>
<dbReference type="PDB" id="2ZK1">
    <property type="method" value="X-ray"/>
    <property type="resolution" value="2.61 A"/>
    <property type="chains" value="A/B=223-504"/>
</dbReference>
<dbReference type="PDB" id="2ZK2">
    <property type="method" value="X-ray"/>
    <property type="resolution" value="2.26 A"/>
    <property type="chains" value="A/B=223-504"/>
</dbReference>
<dbReference type="PDB" id="2ZK3">
    <property type="method" value="X-ray"/>
    <property type="resolution" value="2.58 A"/>
    <property type="chains" value="A/B=223-504"/>
</dbReference>
<dbReference type="PDB" id="2ZK4">
    <property type="method" value="X-ray"/>
    <property type="resolution" value="2.57 A"/>
    <property type="chains" value="A/B=223-504"/>
</dbReference>
<dbReference type="PDB" id="2ZK5">
    <property type="method" value="X-ray"/>
    <property type="resolution" value="2.45 A"/>
    <property type="chains" value="A/B=223-504"/>
</dbReference>
<dbReference type="PDB" id="2ZK6">
    <property type="method" value="X-ray"/>
    <property type="resolution" value="2.41 A"/>
    <property type="chains" value="A/B=223-504"/>
</dbReference>
<dbReference type="PDB" id="2ZNO">
    <property type="method" value="X-ray"/>
    <property type="resolution" value="2.40 A"/>
    <property type="chains" value="A/B=223-504"/>
</dbReference>
<dbReference type="PDB" id="2ZVT">
    <property type="method" value="X-ray"/>
    <property type="resolution" value="1.90 A"/>
    <property type="chains" value="A/B=223-504"/>
</dbReference>
<dbReference type="PDB" id="3ADS">
    <property type="method" value="X-ray"/>
    <property type="resolution" value="2.25 A"/>
    <property type="chains" value="A/B=223-505"/>
</dbReference>
<dbReference type="PDB" id="3ADT">
    <property type="method" value="X-ray"/>
    <property type="resolution" value="2.70 A"/>
    <property type="chains" value="A/B=223-505"/>
</dbReference>
<dbReference type="PDB" id="3ADU">
    <property type="method" value="X-ray"/>
    <property type="resolution" value="2.77 A"/>
    <property type="chains" value="A/B=223-505"/>
</dbReference>
<dbReference type="PDB" id="3ADV">
    <property type="method" value="X-ray"/>
    <property type="resolution" value="2.27 A"/>
    <property type="chains" value="A/B=223-505"/>
</dbReference>
<dbReference type="PDB" id="3ADW">
    <property type="method" value="X-ray"/>
    <property type="resolution" value="2.07 A"/>
    <property type="chains" value="A/B=223-505"/>
</dbReference>
<dbReference type="PDB" id="3ADX">
    <property type="method" value="X-ray"/>
    <property type="resolution" value="1.95 A"/>
    <property type="chains" value="A/B=223-505"/>
</dbReference>
<dbReference type="PDB" id="3AN3">
    <property type="method" value="X-ray"/>
    <property type="resolution" value="2.30 A"/>
    <property type="chains" value="A/B=223-504"/>
</dbReference>
<dbReference type="PDB" id="3AN4">
    <property type="method" value="X-ray"/>
    <property type="resolution" value="2.30 A"/>
    <property type="chains" value="A/B=223-504"/>
</dbReference>
<dbReference type="PDB" id="3B0Q">
    <property type="method" value="X-ray"/>
    <property type="resolution" value="2.10 A"/>
    <property type="chains" value="A/B=231-504"/>
</dbReference>
<dbReference type="PDB" id="3B0R">
    <property type="method" value="X-ray"/>
    <property type="resolution" value="2.15 A"/>
    <property type="chains" value="A/B=231-504"/>
</dbReference>
<dbReference type="PDB" id="3B1M">
    <property type="method" value="X-ray"/>
    <property type="resolution" value="1.60 A"/>
    <property type="chains" value="A=234-505"/>
</dbReference>
<dbReference type="PDB" id="3B3K">
    <property type="method" value="X-ray"/>
    <property type="resolution" value="2.60 A"/>
    <property type="chains" value="A/B=223-504"/>
</dbReference>
<dbReference type="PDB" id="3BC5">
    <property type="method" value="X-ray"/>
    <property type="resolution" value="2.27 A"/>
    <property type="chains" value="A=231-505"/>
</dbReference>
<dbReference type="PDB" id="3CDP">
    <property type="method" value="X-ray"/>
    <property type="resolution" value="2.80 A"/>
    <property type="chains" value="A/B=223-504"/>
</dbReference>
<dbReference type="PDB" id="3CDS">
    <property type="method" value="X-ray"/>
    <property type="resolution" value="2.65 A"/>
    <property type="chains" value="A/B=223-504"/>
</dbReference>
<dbReference type="PDB" id="3CS8">
    <property type="method" value="X-ray"/>
    <property type="resolution" value="2.30 A"/>
    <property type="chains" value="A=234-504"/>
</dbReference>
<dbReference type="PDB" id="3CWD">
    <property type="method" value="X-ray"/>
    <property type="resolution" value="2.40 A"/>
    <property type="chains" value="A/B=236-505"/>
</dbReference>
<dbReference type="PDB" id="3D6D">
    <property type="method" value="X-ray"/>
    <property type="resolution" value="2.40 A"/>
    <property type="chains" value="A/B=223-504"/>
</dbReference>
<dbReference type="PDB" id="3DZU">
    <property type="method" value="X-ray"/>
    <property type="resolution" value="3.20 A"/>
    <property type="chains" value="D=102-505"/>
</dbReference>
<dbReference type="PDB" id="3DZY">
    <property type="method" value="X-ray"/>
    <property type="resolution" value="3.10 A"/>
    <property type="chains" value="D=102-505"/>
</dbReference>
<dbReference type="PDB" id="3E00">
    <property type="method" value="X-ray"/>
    <property type="resolution" value="3.10 A"/>
    <property type="chains" value="D=102-505"/>
</dbReference>
<dbReference type="PDB" id="3ET0">
    <property type="method" value="X-ray"/>
    <property type="resolution" value="2.40 A"/>
    <property type="chains" value="A/B=235-505"/>
</dbReference>
<dbReference type="PDB" id="3ET3">
    <property type="method" value="X-ray"/>
    <property type="resolution" value="1.95 A"/>
    <property type="chains" value="A=235-505"/>
</dbReference>
<dbReference type="PDB" id="3FEJ">
    <property type="method" value="X-ray"/>
    <property type="resolution" value="2.01 A"/>
    <property type="chains" value="A=235-505"/>
</dbReference>
<dbReference type="PDB" id="3FUR">
    <property type="method" value="X-ray"/>
    <property type="resolution" value="2.30 A"/>
    <property type="chains" value="A=234-505"/>
</dbReference>
<dbReference type="PDB" id="3G9E">
    <property type="method" value="X-ray"/>
    <property type="resolution" value="2.30 A"/>
    <property type="chains" value="A=235-505"/>
</dbReference>
<dbReference type="PDB" id="3GBK">
    <property type="method" value="X-ray"/>
    <property type="resolution" value="2.30 A"/>
    <property type="chains" value="A/B=235-505"/>
</dbReference>
<dbReference type="PDB" id="3H0A">
    <property type="method" value="X-ray"/>
    <property type="resolution" value="2.10 A"/>
    <property type="chains" value="D=234-505"/>
</dbReference>
<dbReference type="PDB" id="3HO0">
    <property type="method" value="X-ray"/>
    <property type="resolution" value="2.60 A"/>
    <property type="chains" value="A/B=223-504"/>
</dbReference>
<dbReference type="PDB" id="3HOD">
    <property type="method" value="X-ray"/>
    <property type="resolution" value="2.10 A"/>
    <property type="chains" value="A/B=223-504"/>
</dbReference>
<dbReference type="PDB" id="3IA6">
    <property type="method" value="X-ray"/>
    <property type="resolution" value="2.31 A"/>
    <property type="chains" value="A/B=235-505"/>
</dbReference>
<dbReference type="PDB" id="3K8S">
    <property type="method" value="X-ray"/>
    <property type="resolution" value="2.55 A"/>
    <property type="chains" value="A/B=234-505"/>
</dbReference>
<dbReference type="PDB" id="3KMG">
    <property type="method" value="X-ray"/>
    <property type="resolution" value="2.10 A"/>
    <property type="chains" value="A/D=234-505"/>
</dbReference>
<dbReference type="PDB" id="3LMP">
    <property type="method" value="X-ray"/>
    <property type="resolution" value="1.90 A"/>
    <property type="chains" value="A=234-505"/>
</dbReference>
<dbReference type="PDB" id="3NOA">
    <property type="method" value="X-ray"/>
    <property type="resolution" value="1.98 A"/>
    <property type="chains" value="A/B=235-505"/>
</dbReference>
<dbReference type="PDB" id="3OSI">
    <property type="method" value="X-ray"/>
    <property type="resolution" value="2.70 A"/>
    <property type="chains" value="A/B=224-504"/>
</dbReference>
<dbReference type="PDB" id="3OSW">
    <property type="method" value="X-ray"/>
    <property type="resolution" value="2.55 A"/>
    <property type="chains" value="A/B=224-504"/>
</dbReference>
<dbReference type="PDB" id="3PBA">
    <property type="method" value="X-ray"/>
    <property type="resolution" value="2.30 A"/>
    <property type="chains" value="A/B=224-505"/>
</dbReference>
<dbReference type="PDB" id="3PO9">
    <property type="method" value="X-ray"/>
    <property type="resolution" value="2.35 A"/>
    <property type="chains" value="A/B=224-505"/>
</dbReference>
<dbReference type="PDB" id="3PRG">
    <property type="method" value="X-ray"/>
    <property type="resolution" value="2.90 A"/>
    <property type="chains" value="A=232-505"/>
</dbReference>
<dbReference type="PDB" id="3QT0">
    <property type="method" value="X-ray"/>
    <property type="resolution" value="2.50 A"/>
    <property type="chains" value="A=235-505"/>
</dbReference>
<dbReference type="PDB" id="3R5N">
    <property type="method" value="X-ray"/>
    <property type="resolution" value="2.00 A"/>
    <property type="chains" value="A=232-505"/>
</dbReference>
<dbReference type="PDB" id="3R8A">
    <property type="method" value="X-ray"/>
    <property type="resolution" value="2.41 A"/>
    <property type="chains" value="A/B=235-505"/>
</dbReference>
<dbReference type="PDB" id="3R8I">
    <property type="method" value="X-ray"/>
    <property type="resolution" value="2.30 A"/>
    <property type="chains" value="A/B=223-505"/>
</dbReference>
<dbReference type="PDB" id="3S9S">
    <property type="method" value="X-ray"/>
    <property type="resolution" value="2.55 A"/>
    <property type="chains" value="A=234-505"/>
</dbReference>
<dbReference type="PDB" id="3SZ1">
    <property type="method" value="X-ray"/>
    <property type="resolution" value="2.30 A"/>
    <property type="chains" value="A/B=232-505"/>
</dbReference>
<dbReference type="PDB" id="3T03">
    <property type="method" value="X-ray"/>
    <property type="resolution" value="2.10 A"/>
    <property type="chains" value="A/B=234-505"/>
</dbReference>
<dbReference type="PDB" id="3TY0">
    <property type="method" value="X-ray"/>
    <property type="resolution" value="2.00 A"/>
    <property type="chains" value="A/B=231-505"/>
</dbReference>
<dbReference type="PDB" id="3U9Q">
    <property type="method" value="X-ray"/>
    <property type="resolution" value="1.52 A"/>
    <property type="chains" value="A=236-504"/>
</dbReference>
<dbReference type="PDB" id="3V9T">
    <property type="method" value="X-ray"/>
    <property type="resolution" value="1.65 A"/>
    <property type="chains" value="A=234-505"/>
</dbReference>
<dbReference type="PDB" id="3V9V">
    <property type="method" value="X-ray"/>
    <property type="resolution" value="1.60 A"/>
    <property type="chains" value="A=234-505"/>
</dbReference>
<dbReference type="PDB" id="3V9Y">
    <property type="method" value="X-ray"/>
    <property type="resolution" value="2.10 A"/>
    <property type="chains" value="A=234-505"/>
</dbReference>
<dbReference type="PDB" id="3VJH">
    <property type="method" value="X-ray"/>
    <property type="resolution" value="2.22 A"/>
    <property type="chains" value="A/B=223-504"/>
</dbReference>
<dbReference type="PDB" id="3VJI">
    <property type="method" value="X-ray"/>
    <property type="resolution" value="2.61 A"/>
    <property type="chains" value="A/B=223-504"/>
</dbReference>
<dbReference type="PDB" id="3VN2">
    <property type="method" value="X-ray"/>
    <property type="resolution" value="2.18 A"/>
    <property type="chains" value="A=225-505"/>
</dbReference>
<dbReference type="PDB" id="3VSO">
    <property type="method" value="X-ray"/>
    <property type="resolution" value="2.00 A"/>
    <property type="chains" value="A/B=223-504"/>
</dbReference>
<dbReference type="PDB" id="3VSP">
    <property type="method" value="X-ray"/>
    <property type="resolution" value="2.40 A"/>
    <property type="chains" value="A/B=223-504"/>
</dbReference>
<dbReference type="PDB" id="3WJ4">
    <property type="method" value="X-ray"/>
    <property type="resolution" value="1.95 A"/>
    <property type="chains" value="A/B=235-505"/>
</dbReference>
<dbReference type="PDB" id="3WJ5">
    <property type="method" value="X-ray"/>
    <property type="resolution" value="1.89 A"/>
    <property type="chains" value="A/B=235-505"/>
</dbReference>
<dbReference type="PDB" id="3WMH">
    <property type="method" value="X-ray"/>
    <property type="resolution" value="2.10 A"/>
    <property type="chains" value="A/B=223-504"/>
</dbReference>
<dbReference type="PDB" id="3X1H">
    <property type="method" value="X-ray"/>
    <property type="resolution" value="2.30 A"/>
    <property type="chains" value="A/B=232-505"/>
</dbReference>
<dbReference type="PDB" id="3X1I">
    <property type="method" value="X-ray"/>
    <property type="resolution" value="2.40 A"/>
    <property type="chains" value="A/B=232-505"/>
</dbReference>
<dbReference type="PDB" id="4A4V">
    <property type="method" value="X-ray"/>
    <property type="resolution" value="2.00 A"/>
    <property type="chains" value="A/B=223-505"/>
</dbReference>
<dbReference type="PDB" id="4A4W">
    <property type="method" value="X-ray"/>
    <property type="resolution" value="2.00 A"/>
    <property type="chains" value="A/B=223-505"/>
</dbReference>
<dbReference type="PDB" id="4CI5">
    <property type="method" value="X-ray"/>
    <property type="resolution" value="1.77 A"/>
    <property type="chains" value="A/B=234-505"/>
</dbReference>
<dbReference type="PDB" id="4E4K">
    <property type="method" value="X-ray"/>
    <property type="resolution" value="2.50 A"/>
    <property type="chains" value="A/B=223-505"/>
</dbReference>
<dbReference type="PDB" id="4E4Q">
    <property type="method" value="X-ray"/>
    <property type="resolution" value="2.50 A"/>
    <property type="chains" value="A/B=223-505"/>
</dbReference>
<dbReference type="PDB" id="4EM9">
    <property type="method" value="X-ray"/>
    <property type="resolution" value="2.10 A"/>
    <property type="chains" value="A/B=235-505"/>
</dbReference>
<dbReference type="PDB" id="4EMA">
    <property type="method" value="X-ray"/>
    <property type="resolution" value="2.54 A"/>
    <property type="chains" value="A/B=235-505"/>
</dbReference>
<dbReference type="PDB" id="4F9M">
    <property type="method" value="X-ray"/>
    <property type="resolution" value="1.90 A"/>
    <property type="chains" value="A=234-505"/>
</dbReference>
<dbReference type="PDB" id="4FGY">
    <property type="method" value="X-ray"/>
    <property type="resolution" value="2.84 A"/>
    <property type="chains" value="A=235-504"/>
</dbReference>
<dbReference type="PDB" id="4HEE">
    <property type="method" value="X-ray"/>
    <property type="resolution" value="2.50 A"/>
    <property type="chains" value="X=235-505"/>
</dbReference>
<dbReference type="PDB" id="4JAZ">
    <property type="method" value="X-ray"/>
    <property type="resolution" value="2.85 A"/>
    <property type="chains" value="A/B=223-505"/>
</dbReference>
<dbReference type="PDB" id="4JL4">
    <property type="method" value="X-ray"/>
    <property type="resolution" value="2.50 A"/>
    <property type="chains" value="A/B=223-505"/>
</dbReference>
<dbReference type="PDB" id="4L96">
    <property type="method" value="X-ray"/>
    <property type="resolution" value="2.38 A"/>
    <property type="chains" value="A=235-505"/>
</dbReference>
<dbReference type="PDB" id="4L98">
    <property type="method" value="X-ray"/>
    <property type="resolution" value="2.28 A"/>
    <property type="chains" value="A/B=235-505"/>
</dbReference>
<dbReference type="PDB" id="4O8F">
    <property type="method" value="X-ray"/>
    <property type="resolution" value="2.60 A"/>
    <property type="chains" value="A/B=223-505"/>
</dbReference>
<dbReference type="PDB" id="4OJ4">
    <property type="method" value="X-ray"/>
    <property type="resolution" value="2.30 A"/>
    <property type="chains" value="A=232-505"/>
</dbReference>
<dbReference type="PDB" id="4PRG">
    <property type="method" value="X-ray"/>
    <property type="resolution" value="2.90 A"/>
    <property type="chains" value="A/B/C/D=235-504"/>
</dbReference>
<dbReference type="PDB" id="4PVU">
    <property type="method" value="X-ray"/>
    <property type="resolution" value="2.60 A"/>
    <property type="chains" value="A/B=223-505"/>
</dbReference>
<dbReference type="PDB" id="4PWL">
    <property type="method" value="X-ray"/>
    <property type="resolution" value="2.60 A"/>
    <property type="chains" value="A/B=223-505"/>
</dbReference>
<dbReference type="PDB" id="4R06">
    <property type="method" value="X-ray"/>
    <property type="resolution" value="2.22 A"/>
    <property type="chains" value="A/B=233-505"/>
</dbReference>
<dbReference type="PDB" id="4R2U">
    <property type="method" value="X-ray"/>
    <property type="resolution" value="2.30 A"/>
    <property type="chains" value="A/D=231-505"/>
</dbReference>
<dbReference type="PDB" id="4R6S">
    <property type="method" value="X-ray"/>
    <property type="resolution" value="2.30 A"/>
    <property type="chains" value="A/B=231-505"/>
</dbReference>
<dbReference type="PDB" id="4XLD">
    <property type="method" value="X-ray"/>
    <property type="resolution" value="2.45 A"/>
    <property type="chains" value="A=231-505"/>
</dbReference>
<dbReference type="PDB" id="4XTA">
    <property type="method" value="X-ray"/>
    <property type="resolution" value="2.50 A"/>
    <property type="chains" value="A/B=232-505"/>
</dbReference>
<dbReference type="PDB" id="4XUH">
    <property type="method" value="X-ray"/>
    <property type="resolution" value="2.22 A"/>
    <property type="chains" value="A/B=232-505"/>
</dbReference>
<dbReference type="PDB" id="4XUM">
    <property type="method" value="X-ray"/>
    <property type="resolution" value="2.40 A"/>
    <property type="chains" value="A/B=232-505"/>
</dbReference>
<dbReference type="PDB" id="4Y29">
    <property type="method" value="X-ray"/>
    <property type="resolution" value="1.98 A"/>
    <property type="chains" value="A=236-504"/>
</dbReference>
<dbReference type="PDB" id="4YT1">
    <property type="method" value="X-ray"/>
    <property type="resolution" value="2.20 A"/>
    <property type="chains" value="A/B=223-504"/>
</dbReference>
<dbReference type="PDB" id="5AZV">
    <property type="method" value="X-ray"/>
    <property type="resolution" value="2.70 A"/>
    <property type="chains" value="A/B=232-505"/>
</dbReference>
<dbReference type="PDB" id="5DSH">
    <property type="method" value="X-ray"/>
    <property type="resolution" value="2.95 A"/>
    <property type="chains" value="A=223-505"/>
</dbReference>
<dbReference type="PDB" id="5DV3">
    <property type="method" value="X-ray"/>
    <property type="resolution" value="2.75 A"/>
    <property type="chains" value="A=223-505"/>
</dbReference>
<dbReference type="PDB" id="5DV6">
    <property type="method" value="X-ray"/>
    <property type="resolution" value="2.80 A"/>
    <property type="chains" value="A=223-505"/>
</dbReference>
<dbReference type="PDB" id="5DV8">
    <property type="method" value="X-ray"/>
    <property type="resolution" value="2.75 A"/>
    <property type="chains" value="A=223-505"/>
</dbReference>
<dbReference type="PDB" id="5DVC">
    <property type="method" value="X-ray"/>
    <property type="resolution" value="2.30 A"/>
    <property type="chains" value="A=223-505"/>
</dbReference>
<dbReference type="PDB" id="5DWL">
    <property type="method" value="X-ray"/>
    <property type="resolution" value="2.20 A"/>
    <property type="chains" value="A=223-505"/>
</dbReference>
<dbReference type="PDB" id="5F9B">
    <property type="method" value="X-ray"/>
    <property type="resolution" value="2.25 A"/>
    <property type="chains" value="A/B=223-505"/>
</dbReference>
<dbReference type="PDB" id="5GTN">
    <property type="method" value="X-ray"/>
    <property type="resolution" value="1.85 A"/>
    <property type="chains" value="A=223-505"/>
</dbReference>
<dbReference type="PDB" id="5GTO">
    <property type="method" value="X-ray"/>
    <property type="resolution" value="2.10 A"/>
    <property type="chains" value="A=223-505"/>
</dbReference>
<dbReference type="PDB" id="5GTP">
    <property type="method" value="X-ray"/>
    <property type="resolution" value="2.35 A"/>
    <property type="chains" value="A=223-505"/>
</dbReference>
<dbReference type="PDB" id="5HZC">
    <property type="method" value="X-ray"/>
    <property type="resolution" value="2.00 A"/>
    <property type="chains" value="A/B=223-505"/>
</dbReference>
<dbReference type="PDB" id="5JI0">
    <property type="method" value="X-ray"/>
    <property type="resolution" value="1.98 A"/>
    <property type="chains" value="D=234-505"/>
</dbReference>
<dbReference type="PDB" id="5LSG">
    <property type="method" value="X-ray"/>
    <property type="resolution" value="2.00 A"/>
    <property type="chains" value="A/B=223-505"/>
</dbReference>
<dbReference type="PDB" id="5TTO">
    <property type="method" value="X-ray"/>
    <property type="resolution" value="2.25 A"/>
    <property type="chains" value="A/B=233-505"/>
</dbReference>
<dbReference type="PDB" id="5TWO">
    <property type="method" value="X-ray"/>
    <property type="resolution" value="1.93 A"/>
    <property type="chains" value="A=234-505"/>
</dbReference>
<dbReference type="PDB" id="5U5L">
    <property type="method" value="X-ray"/>
    <property type="resolution" value="2.55 A"/>
    <property type="chains" value="A/B=233-505"/>
</dbReference>
<dbReference type="PDB" id="5UGM">
    <property type="method" value="X-ray"/>
    <property type="resolution" value="2.10 A"/>
    <property type="chains" value="A/B=235-505"/>
</dbReference>
<dbReference type="PDB" id="5WQX">
    <property type="method" value="X-ray"/>
    <property type="resolution" value="2.29 A"/>
    <property type="chains" value="A/B=232-505"/>
</dbReference>
<dbReference type="PDB" id="5WR0">
    <property type="method" value="X-ray"/>
    <property type="resolution" value="2.85 A"/>
    <property type="chains" value="A/B=232-505"/>
</dbReference>
<dbReference type="PDB" id="5WR1">
    <property type="method" value="X-ray"/>
    <property type="resolution" value="2.34 A"/>
    <property type="chains" value="A/B=232-505"/>
</dbReference>
<dbReference type="PDB" id="5Y2O">
    <property type="method" value="X-ray"/>
    <property type="resolution" value="1.80 A"/>
    <property type="chains" value="A/B=235-505"/>
</dbReference>
<dbReference type="PDB" id="5Y2T">
    <property type="method" value="X-ray"/>
    <property type="resolution" value="1.70 A"/>
    <property type="chains" value="A/B=235-505"/>
</dbReference>
<dbReference type="PDB" id="5YCN">
    <property type="method" value="X-ray"/>
    <property type="resolution" value="2.15 A"/>
    <property type="chains" value="A=223-505"/>
</dbReference>
<dbReference type="PDB" id="5YCP">
    <property type="method" value="X-ray"/>
    <property type="resolution" value="2.00 A"/>
    <property type="chains" value="A=223-505"/>
</dbReference>
<dbReference type="PDB" id="5Z5S">
    <property type="method" value="X-ray"/>
    <property type="resolution" value="1.80 A"/>
    <property type="chains" value="A=234-505"/>
</dbReference>
<dbReference type="PDB" id="5Z6S">
    <property type="method" value="X-ray"/>
    <property type="resolution" value="1.80 A"/>
    <property type="chains" value="A=234-505"/>
</dbReference>
<dbReference type="PDB" id="6AD9">
    <property type="method" value="X-ray"/>
    <property type="resolution" value="2.20 A"/>
    <property type="chains" value="A=223-505"/>
</dbReference>
<dbReference type="PDB" id="6AN1">
    <property type="method" value="X-ray"/>
    <property type="resolution" value="2.69 A"/>
    <property type="chains" value="A/B=224-505"/>
</dbReference>
<dbReference type="PDB" id="6AUG">
    <property type="method" value="X-ray"/>
    <property type="resolution" value="2.73 A"/>
    <property type="chains" value="A/B=231-505"/>
</dbReference>
<dbReference type="PDB" id="6AVI">
    <property type="method" value="X-ray"/>
    <property type="resolution" value="2.29 A"/>
    <property type="chains" value="A/B=231-505"/>
</dbReference>
<dbReference type="PDB" id="6C1I">
    <property type="method" value="X-ray"/>
    <property type="resolution" value="2.26 A"/>
    <property type="chains" value="A/B=231-504"/>
</dbReference>
<dbReference type="PDB" id="6C5Q">
    <property type="method" value="X-ray"/>
    <property type="resolution" value="2.40 A"/>
    <property type="chains" value="A=235-505"/>
</dbReference>
<dbReference type="PDB" id="6C5T">
    <property type="method" value="X-ray"/>
    <property type="resolution" value="2.75 A"/>
    <property type="chains" value="A=235-505"/>
</dbReference>
<dbReference type="PDB" id="6D3E">
    <property type="method" value="X-ray"/>
    <property type="resolution" value="2.40 A"/>
    <property type="chains" value="A/B=235-504"/>
</dbReference>
<dbReference type="PDB" id="6D8X">
    <property type="method" value="X-ray"/>
    <property type="resolution" value="1.90 A"/>
    <property type="chains" value="A=231-505"/>
</dbReference>
<dbReference type="PDB" id="6D94">
    <property type="method" value="X-ray"/>
    <property type="resolution" value="1.90 A"/>
    <property type="chains" value="A=231-505"/>
</dbReference>
<dbReference type="PDB" id="6DBH">
    <property type="method" value="X-ray"/>
    <property type="resolution" value="2.60 A"/>
    <property type="chains" value="A/B=231-505"/>
</dbReference>
<dbReference type="PDB" id="6DCU">
    <property type="method" value="X-ray"/>
    <property type="resolution" value="2.95 A"/>
    <property type="chains" value="A/B=231-505"/>
</dbReference>
<dbReference type="PDB" id="6DGL">
    <property type="method" value="X-ray"/>
    <property type="resolution" value="1.95 A"/>
    <property type="chains" value="A/B=231-505"/>
</dbReference>
<dbReference type="PDB" id="6DGO">
    <property type="method" value="X-ray"/>
    <property type="resolution" value="3.10 A"/>
    <property type="chains" value="A/B=231-505"/>
</dbReference>
<dbReference type="PDB" id="6DGP">
    <property type="method" value="X-ray"/>
    <property type="resolution" value="3.10 A"/>
    <property type="chains" value="A/B=231-505"/>
</dbReference>
<dbReference type="PDB" id="6DGQ">
    <property type="method" value="X-ray"/>
    <property type="resolution" value="2.45 A"/>
    <property type="chains" value="A/B=231-505"/>
</dbReference>
<dbReference type="PDB" id="6DGR">
    <property type="method" value="X-ray"/>
    <property type="resolution" value="2.15 A"/>
    <property type="chains" value="A/B=231-505"/>
</dbReference>
<dbReference type="PDB" id="6DH9">
    <property type="method" value="X-ray"/>
    <property type="resolution" value="2.70 A"/>
    <property type="chains" value="A/B=235-505"/>
</dbReference>
<dbReference type="PDB" id="6DHA">
    <property type="method" value="X-ray"/>
    <property type="resolution" value="1.88 A"/>
    <property type="chains" value="A/B=235-505"/>
</dbReference>
<dbReference type="PDB" id="6E5A">
    <property type="method" value="X-ray"/>
    <property type="resolution" value="2.40 A"/>
    <property type="chains" value="A/B=233-505"/>
</dbReference>
<dbReference type="PDB" id="6ENQ">
    <property type="method" value="X-ray"/>
    <property type="resolution" value="2.20 A"/>
    <property type="chains" value="A/B=224-505"/>
</dbReference>
<dbReference type="PDB" id="6F2L">
    <property type="method" value="X-ray"/>
    <property type="resolution" value="2.10 A"/>
    <property type="chains" value="A/B=223-505"/>
</dbReference>
<dbReference type="PDB" id="6FZF">
    <property type="method" value="X-ray"/>
    <property type="resolution" value="1.95 A"/>
    <property type="chains" value="A/B=231-505"/>
</dbReference>
<dbReference type="PDB" id="6FZG">
    <property type="method" value="X-ray"/>
    <property type="resolution" value="2.10 A"/>
    <property type="chains" value="A=231-505"/>
</dbReference>
<dbReference type="PDB" id="6FZJ">
    <property type="method" value="X-ray"/>
    <property type="resolution" value="2.01 A"/>
    <property type="chains" value="A/B=231-505"/>
</dbReference>
<dbReference type="PDB" id="6FZP">
    <property type="method" value="X-ray"/>
    <property type="resolution" value="2.30 A"/>
    <property type="chains" value="A=231-505"/>
</dbReference>
<dbReference type="PDB" id="6FZY">
    <property type="method" value="X-ray"/>
    <property type="resolution" value="3.10 A"/>
    <property type="chains" value="A/B=231-505"/>
</dbReference>
<dbReference type="PDB" id="6ICJ">
    <property type="method" value="X-ray"/>
    <property type="resolution" value="2.48 A"/>
    <property type="chains" value="A=234-505"/>
</dbReference>
<dbReference type="PDB" id="6IJR">
    <property type="method" value="X-ray"/>
    <property type="resolution" value="2.85 A"/>
    <property type="chains" value="A/C=223-505"/>
</dbReference>
<dbReference type="PDB" id="6IJS">
    <property type="method" value="X-ray"/>
    <property type="resolution" value="2.15 A"/>
    <property type="chains" value="A=232-505"/>
</dbReference>
<dbReference type="PDB" id="6ILQ">
    <property type="method" value="X-ray"/>
    <property type="resolution" value="2.41 A"/>
    <property type="chains" value="A=234-505"/>
</dbReference>
<dbReference type="PDB" id="6IZM">
    <property type="method" value="X-ray"/>
    <property type="resolution" value="1.80 A"/>
    <property type="chains" value="A=234-505"/>
</dbReference>
<dbReference type="PDB" id="6IZN">
    <property type="method" value="X-ray"/>
    <property type="resolution" value="1.75 A"/>
    <property type="chains" value="A=234-505"/>
</dbReference>
<dbReference type="PDB" id="6JEY">
    <property type="method" value="X-ray"/>
    <property type="resolution" value="2.20 A"/>
    <property type="chains" value="A/B=232-505"/>
</dbReference>
<dbReference type="PDB" id="6JF0">
    <property type="method" value="X-ray"/>
    <property type="resolution" value="3.40 A"/>
    <property type="chains" value="A/B=232-505"/>
</dbReference>
<dbReference type="PDB" id="6JQ7">
    <property type="method" value="X-ray"/>
    <property type="resolution" value="2.55 A"/>
    <property type="chains" value="A=223-505"/>
</dbReference>
<dbReference type="PDB" id="6K0T">
    <property type="method" value="X-ray"/>
    <property type="resolution" value="1.84 A"/>
    <property type="chains" value="A/C=223-505"/>
</dbReference>
<dbReference type="PDB" id="6KTM">
    <property type="method" value="X-ray"/>
    <property type="resolution" value="2.70 A"/>
    <property type="chains" value="A=223-505"/>
</dbReference>
<dbReference type="PDB" id="6KTN">
    <property type="method" value="X-ray"/>
    <property type="resolution" value="2.75 A"/>
    <property type="chains" value="A=223-505"/>
</dbReference>
<dbReference type="PDB" id="6L89">
    <property type="method" value="X-ray"/>
    <property type="resolution" value="2.10 A"/>
    <property type="chains" value="A/B=223-505"/>
</dbReference>
<dbReference type="PDB" id="6L8B">
    <property type="method" value="X-ray"/>
    <property type="resolution" value="2.10 A"/>
    <property type="chains" value="A/B=223-505"/>
</dbReference>
<dbReference type="PDB" id="6MCZ">
    <property type="method" value="X-ray"/>
    <property type="resolution" value="2.10 A"/>
    <property type="chains" value="A/B=231-505"/>
</dbReference>
<dbReference type="PDB" id="6MD0">
    <property type="method" value="X-ray"/>
    <property type="resolution" value="1.95 A"/>
    <property type="chains" value="A/B=231-505"/>
</dbReference>
<dbReference type="PDB" id="6MD1">
    <property type="method" value="X-ray"/>
    <property type="resolution" value="2.20 A"/>
    <property type="chains" value="A/B=231-505"/>
</dbReference>
<dbReference type="PDB" id="6MD2">
    <property type="method" value="X-ray"/>
    <property type="resolution" value="2.20 A"/>
    <property type="chains" value="A/B=231-505"/>
</dbReference>
<dbReference type="PDB" id="6MD4">
    <property type="method" value="X-ray"/>
    <property type="resolution" value="2.24 A"/>
    <property type="chains" value="A/B=231-505"/>
</dbReference>
<dbReference type="PDB" id="6MS7">
    <property type="method" value="X-ray"/>
    <property type="resolution" value="1.43 A"/>
    <property type="chains" value="A=234-505"/>
</dbReference>
<dbReference type="PDB" id="6O67">
    <property type="method" value="X-ray"/>
    <property type="resolution" value="2.52 A"/>
    <property type="chains" value="A/B=231-505"/>
</dbReference>
<dbReference type="PDB" id="6O68">
    <property type="method" value="X-ray"/>
    <property type="resolution" value="2.78 A"/>
    <property type="chains" value="A/B=231-505"/>
</dbReference>
<dbReference type="PDB" id="6ONI">
    <property type="method" value="X-ray"/>
    <property type="resolution" value="1.80 A"/>
    <property type="chains" value="B=231-505"/>
</dbReference>
<dbReference type="PDB" id="6ONJ">
    <property type="method" value="X-ray"/>
    <property type="resolution" value="2.30 A"/>
    <property type="chains" value="A=231-505"/>
</dbReference>
<dbReference type="PDB" id="6PDZ">
    <property type="method" value="X-ray"/>
    <property type="resolution" value="2.10 A"/>
    <property type="chains" value="A/B=231-505"/>
</dbReference>
<dbReference type="PDB" id="6QJ5">
    <property type="method" value="X-ray"/>
    <property type="resolution" value="2.00 A"/>
    <property type="chains" value="A/B=223-505"/>
</dbReference>
<dbReference type="PDB" id="6T1S">
    <property type="method" value="X-ray"/>
    <property type="resolution" value="1.65 A"/>
    <property type="chains" value="A=231-505"/>
</dbReference>
<dbReference type="PDB" id="6T1V">
    <property type="method" value="X-ray"/>
    <property type="resolution" value="2.21 A"/>
    <property type="chains" value="A=231-505"/>
</dbReference>
<dbReference type="PDB" id="6T6B">
    <property type="method" value="X-ray"/>
    <property type="resolution" value="2.80 A"/>
    <property type="chains" value="A=231-505"/>
</dbReference>
<dbReference type="PDB" id="6T9C">
    <property type="method" value="X-ray"/>
    <property type="resolution" value="1.95 A"/>
    <property type="chains" value="A/B=223-505"/>
</dbReference>
<dbReference type="PDB" id="6TDC">
    <property type="method" value="X-ray"/>
    <property type="resolution" value="2.33 A"/>
    <property type="chains" value="A=235-505"/>
</dbReference>
<dbReference type="PDB" id="6TSG">
    <property type="method" value="X-ray"/>
    <property type="resolution" value="2.98 A"/>
    <property type="chains" value="A=231-505"/>
</dbReference>
<dbReference type="PDB" id="6VZL">
    <property type="method" value="X-ray"/>
    <property type="resolution" value="2.07 A"/>
    <property type="chains" value="A/B=231-505"/>
</dbReference>
<dbReference type="PDB" id="6VZM">
    <property type="method" value="X-ray"/>
    <property type="resolution" value="2.40 A"/>
    <property type="chains" value="A/B=231-505"/>
</dbReference>
<dbReference type="PDB" id="6VZN">
    <property type="method" value="X-ray"/>
    <property type="resolution" value="2.30 A"/>
    <property type="chains" value="A/B=231-505"/>
</dbReference>
<dbReference type="PDB" id="6VZO">
    <property type="method" value="X-ray"/>
    <property type="resolution" value="2.27 A"/>
    <property type="chains" value="A/B=231-505"/>
</dbReference>
<dbReference type="PDB" id="6Y3U">
    <property type="method" value="X-ray"/>
    <property type="resolution" value="2.62 A"/>
    <property type="chains" value="A=231-505"/>
</dbReference>
<dbReference type="PDB" id="6ZLY">
    <property type="method" value="X-ray"/>
    <property type="resolution" value="1.79 A"/>
    <property type="chains" value="A/B=223-505"/>
</dbReference>
<dbReference type="PDB" id="7A7H">
    <property type="method" value="X-ray"/>
    <property type="resolution" value="2.40 A"/>
    <property type="chains" value="A=231-505"/>
</dbReference>
<dbReference type="PDB" id="7AHJ">
    <property type="method" value="X-ray"/>
    <property type="resolution" value="2.10 A"/>
    <property type="chains" value="A/B=232-505"/>
</dbReference>
<dbReference type="PDB" id="7AWC">
    <property type="method" value="X-ray"/>
    <property type="resolution" value="1.74 A"/>
    <property type="chains" value="A=231-505"/>
</dbReference>
<dbReference type="PDB" id="7AWD">
    <property type="method" value="X-ray"/>
    <property type="resolution" value="1.93 A"/>
    <property type="chains" value="A=231-505"/>
</dbReference>
<dbReference type="PDB" id="7CXE">
    <property type="method" value="X-ray"/>
    <property type="resolution" value="2.50 A"/>
    <property type="chains" value="A/B=223-505"/>
</dbReference>
<dbReference type="PDB" id="7CXF">
    <property type="method" value="X-ray"/>
    <property type="resolution" value="2.35 A"/>
    <property type="chains" value="A=223-505"/>
</dbReference>
<dbReference type="PDB" id="7CXG">
    <property type="method" value="X-ray"/>
    <property type="resolution" value="1.88 A"/>
    <property type="chains" value="A/B=223-505"/>
</dbReference>
<dbReference type="PDB" id="7CXH">
    <property type="method" value="X-ray"/>
    <property type="resolution" value="2.30 A"/>
    <property type="chains" value="A=223-505"/>
</dbReference>
<dbReference type="PDB" id="7CXI">
    <property type="method" value="X-ray"/>
    <property type="resolution" value="2.30 A"/>
    <property type="chains" value="A=223-505"/>
</dbReference>
<dbReference type="PDB" id="7CXJ">
    <property type="method" value="X-ray"/>
    <property type="resolution" value="2.65 A"/>
    <property type="chains" value="A=223-505"/>
</dbReference>
<dbReference type="PDB" id="7CXK">
    <property type="method" value="X-ray"/>
    <property type="resolution" value="2.20 A"/>
    <property type="chains" value="A=223-505"/>
</dbReference>
<dbReference type="PDB" id="7CXL">
    <property type="method" value="X-ray"/>
    <property type="resolution" value="2.70 A"/>
    <property type="chains" value="A=223-505"/>
</dbReference>
<dbReference type="PDB" id="7E0A">
    <property type="method" value="X-ray"/>
    <property type="resolution" value="1.77 A"/>
    <property type="chains" value="A=230-505"/>
</dbReference>
<dbReference type="PDB" id="7E2O">
    <property type="method" value="X-ray"/>
    <property type="resolution" value="3.20 A"/>
    <property type="chains" value="A/B=232-505"/>
</dbReference>
<dbReference type="PDB" id="7EFQ">
    <property type="method" value="X-ray"/>
    <property type="resolution" value="2.30 A"/>
    <property type="chains" value="A/B=232-505"/>
</dbReference>
<dbReference type="PDB" id="7JQG">
    <property type="method" value="X-ray"/>
    <property type="resolution" value="2.15 A"/>
    <property type="chains" value="A/B=231-505"/>
</dbReference>
<dbReference type="PDB" id="7LOT">
    <property type="method" value="X-ray"/>
    <property type="resolution" value="2.29 A"/>
    <property type="chains" value="A/B=232-505"/>
</dbReference>
<dbReference type="PDB" id="7P4E">
    <property type="method" value="X-ray"/>
    <property type="resolution" value="2.40 A"/>
    <property type="chains" value="A=231-505"/>
</dbReference>
<dbReference type="PDB" id="7QB1">
    <property type="method" value="X-ray"/>
    <property type="resolution" value="2.20 A"/>
    <property type="chains" value="AAA/BBB=223-505"/>
</dbReference>
<dbReference type="PDB" id="7RLE">
    <property type="method" value="X-ray"/>
    <property type="resolution" value="2.50 A"/>
    <property type="chains" value="A/C=231-505"/>
</dbReference>
<dbReference type="PDB" id="7SQA">
    <property type="method" value="X-ray"/>
    <property type="resolution" value="2.50 A"/>
    <property type="chains" value="A/B=231-505"/>
</dbReference>
<dbReference type="PDB" id="7SQB">
    <property type="method" value="X-ray"/>
    <property type="resolution" value="2.60 A"/>
    <property type="chains" value="A=231-505"/>
</dbReference>
<dbReference type="PDB" id="7WGO">
    <property type="method" value="X-ray"/>
    <property type="resolution" value="2.36 A"/>
    <property type="chains" value="A=231-505"/>
</dbReference>
<dbReference type="PDB" id="7WGP">
    <property type="method" value="X-ray"/>
    <property type="resolution" value="2.53 A"/>
    <property type="chains" value="A=231-505"/>
</dbReference>
<dbReference type="PDB" id="7WGQ">
    <property type="method" value="X-ray"/>
    <property type="resolution" value="2.43 A"/>
    <property type="chains" value="A=231-505"/>
</dbReference>
<dbReference type="PDB" id="7WOX">
    <property type="method" value="X-ray"/>
    <property type="resolution" value="3.20 A"/>
    <property type="chains" value="A/B=232-505"/>
</dbReference>
<dbReference type="PDB" id="8ADF">
    <property type="method" value="X-ray"/>
    <property type="resolution" value="2.13 A"/>
    <property type="chains" value="A/B=223-504"/>
</dbReference>
<dbReference type="PDB" id="8AQM">
    <property type="method" value="X-ray"/>
    <property type="resolution" value="2.30 A"/>
    <property type="chains" value="A/B=231-505"/>
</dbReference>
<dbReference type="PDB" id="8AQN">
    <property type="method" value="X-ray"/>
    <property type="resolution" value="1.90 A"/>
    <property type="chains" value="A/B=231-505"/>
</dbReference>
<dbReference type="PDB" id="8ATY">
    <property type="method" value="X-ray"/>
    <property type="resolution" value="1.90 A"/>
    <property type="chains" value="A=231-505"/>
</dbReference>
<dbReference type="PDB" id="8ATZ">
    <property type="method" value="X-ray"/>
    <property type="resolution" value="1.95 A"/>
    <property type="chains" value="A=231-505"/>
</dbReference>
<dbReference type="PDB" id="8B8W">
    <property type="method" value="X-ray"/>
    <property type="resolution" value="1.86 A"/>
    <property type="chains" value="A/B=231-505"/>
</dbReference>
<dbReference type="PDB" id="8B8X">
    <property type="method" value="X-ray"/>
    <property type="resolution" value="1.78 A"/>
    <property type="chains" value="A/B=231-505"/>
</dbReference>
<dbReference type="PDB" id="8B8Y">
    <property type="method" value="X-ray"/>
    <property type="resolution" value="2.00 A"/>
    <property type="chains" value="A/B=231-505"/>
</dbReference>
<dbReference type="PDB" id="8B8Z">
    <property type="method" value="X-ray"/>
    <property type="resolution" value="2.22 A"/>
    <property type="chains" value="A/B=231-505"/>
</dbReference>
<dbReference type="PDB" id="8B90">
    <property type="method" value="X-ray"/>
    <property type="resolution" value="2.10 A"/>
    <property type="chains" value="A/B=231-505"/>
</dbReference>
<dbReference type="PDB" id="8B91">
    <property type="method" value="X-ray"/>
    <property type="resolution" value="2.23 A"/>
    <property type="chains" value="A/B=231-505"/>
</dbReference>
<dbReference type="PDB" id="8B92">
    <property type="method" value="X-ray"/>
    <property type="resolution" value="1.66 A"/>
    <property type="chains" value="A/B=231-505"/>
</dbReference>
<dbReference type="PDB" id="8B93">
    <property type="method" value="X-ray"/>
    <property type="resolution" value="2.21 A"/>
    <property type="chains" value="A/B=231-505"/>
</dbReference>
<dbReference type="PDB" id="8B94">
    <property type="method" value="X-ray"/>
    <property type="resolution" value="1.55 A"/>
    <property type="chains" value="A/B=231-505"/>
</dbReference>
<dbReference type="PDB" id="8B95">
    <property type="method" value="X-ray"/>
    <property type="resolution" value="1.72 A"/>
    <property type="chains" value="A/B=231-505"/>
</dbReference>
<dbReference type="PDB" id="8BF1">
    <property type="method" value="X-ray"/>
    <property type="resolution" value="1.36 A"/>
    <property type="chains" value="A=234-505"/>
</dbReference>
<dbReference type="PDB" id="8BF2">
    <property type="method" value="X-ray"/>
    <property type="resolution" value="2.18 A"/>
    <property type="chains" value="A/B=234-505"/>
</dbReference>
<dbReference type="PDB" id="8BFF">
    <property type="method" value="X-ray"/>
    <property type="resolution" value="2.60 A"/>
    <property type="chains" value="A/B/C=234-505"/>
</dbReference>
<dbReference type="PDB" id="8C0C">
    <property type="method" value="X-ray"/>
    <property type="resolution" value="2.20 A"/>
    <property type="chains" value="A/B=223-504"/>
</dbReference>
<dbReference type="PDB" id="8CPH">
    <property type="method" value="X-ray"/>
    <property type="resolution" value="2.40 A"/>
    <property type="chains" value="A/B=231-505"/>
</dbReference>
<dbReference type="PDB" id="8CPI">
    <property type="method" value="X-ray"/>
    <property type="resolution" value="2.10 A"/>
    <property type="chains" value="A=231-505"/>
</dbReference>
<dbReference type="PDB" id="8CPJ">
    <property type="method" value="X-ray"/>
    <property type="resolution" value="2.40 A"/>
    <property type="chains" value="A=231-505"/>
</dbReference>
<dbReference type="PDB" id="8DK4">
    <property type="method" value="X-ray"/>
    <property type="resolution" value="2.60 A"/>
    <property type="chains" value="A=234-505"/>
</dbReference>
<dbReference type="PDB" id="8DKN">
    <property type="method" value="X-ray"/>
    <property type="resolution" value="1.95 A"/>
    <property type="chains" value="A=234-505"/>
</dbReference>
<dbReference type="PDB" id="8DKV">
    <property type="method" value="X-ray"/>
    <property type="resolution" value="1.59 A"/>
    <property type="chains" value="A=234-505"/>
</dbReference>
<dbReference type="PDB" id="8DSY">
    <property type="method" value="X-ray"/>
    <property type="resolution" value="2.95 A"/>
    <property type="chains" value="A/B=234-505"/>
</dbReference>
<dbReference type="PDB" id="8DSZ">
    <property type="method" value="X-ray"/>
    <property type="resolution" value="2.50 A"/>
    <property type="chains" value="A/B=234-505"/>
</dbReference>
<dbReference type="PDB" id="8FHE">
    <property type="method" value="X-ray"/>
    <property type="resolution" value="1.80 A"/>
    <property type="chains" value="B=231-505"/>
</dbReference>
<dbReference type="PDB" id="8FHF">
    <property type="method" value="X-ray"/>
    <property type="resolution" value="2.10 A"/>
    <property type="chains" value="A/B=231-505"/>
</dbReference>
<dbReference type="PDB" id="8FHG">
    <property type="method" value="X-ray"/>
    <property type="resolution" value="1.80 A"/>
    <property type="chains" value="B=231-505"/>
</dbReference>
<dbReference type="PDB" id="8FKC">
    <property type="method" value="X-ray"/>
    <property type="resolution" value="1.42 A"/>
    <property type="chains" value="A=231-505"/>
</dbReference>
<dbReference type="PDB" id="8FKD">
    <property type="method" value="X-ray"/>
    <property type="resolution" value="2.22 A"/>
    <property type="chains" value="A=231-505"/>
</dbReference>
<dbReference type="PDB" id="8FKE">
    <property type="method" value="X-ray"/>
    <property type="resolution" value="2.02 A"/>
    <property type="chains" value="A=231-505"/>
</dbReference>
<dbReference type="PDB" id="8FKF">
    <property type="method" value="X-ray"/>
    <property type="resolution" value="1.82 A"/>
    <property type="chains" value="A=231-505"/>
</dbReference>
<dbReference type="PDB" id="8FKG">
    <property type="method" value="X-ray"/>
    <property type="resolution" value="2.12 A"/>
    <property type="chains" value="A=231-505"/>
</dbReference>
<dbReference type="PDB" id="8HHP">
    <property type="method" value="X-ray"/>
    <property type="resolution" value="2.45 A"/>
    <property type="chains" value="A=232-505"/>
</dbReference>
<dbReference type="PDB" id="8HHQ">
    <property type="method" value="X-ray"/>
    <property type="resolution" value="2.40 A"/>
    <property type="chains" value="A/B=232-505"/>
</dbReference>
<dbReference type="PDB" id="8HUM">
    <property type="method" value="X-ray"/>
    <property type="resolution" value="2.29 A"/>
    <property type="chains" value="A=231-505"/>
</dbReference>
<dbReference type="PDB" id="8HUP">
    <property type="method" value="X-ray"/>
    <property type="resolution" value="2.36 A"/>
    <property type="chains" value="A=231-505"/>
</dbReference>
<dbReference type="PDB" id="8PBO">
    <property type="method" value="X-ray"/>
    <property type="resolution" value="1.85 A"/>
    <property type="chains" value="A/B=232-505"/>
</dbReference>
<dbReference type="PDB" id="8REJ">
    <property type="method" value="X-ray"/>
    <property type="resolution" value="3.16 A"/>
    <property type="chains" value="A/B=223-505"/>
</dbReference>
<dbReference type="PDB" id="8SC9">
    <property type="method" value="X-ray"/>
    <property type="resolution" value="1.85 A"/>
    <property type="chains" value="A/B=232-505"/>
</dbReference>
<dbReference type="PDB" id="8U57">
    <property type="method" value="X-ray"/>
    <property type="resolution" value="2.00 A"/>
    <property type="chains" value="A=231-505"/>
</dbReference>
<dbReference type="PDB" id="8WFE">
    <property type="method" value="X-ray"/>
    <property type="resolution" value="2.20 A"/>
    <property type="chains" value="A/B=234-505"/>
</dbReference>
<dbReference type="PDB" id="8ZFN">
    <property type="method" value="X-ray"/>
    <property type="resolution" value="2.54 A"/>
    <property type="chains" value="A/B=231-505"/>
</dbReference>
<dbReference type="PDB" id="8ZFO">
    <property type="method" value="X-ray"/>
    <property type="resolution" value="3.15 A"/>
    <property type="chains" value="A/B=231-505"/>
</dbReference>
<dbReference type="PDB" id="8ZFP">
    <property type="method" value="X-ray"/>
    <property type="resolution" value="2.48 A"/>
    <property type="chains" value="A/B=231-505"/>
</dbReference>
<dbReference type="PDB" id="8ZFQ">
    <property type="method" value="X-ray"/>
    <property type="resolution" value="2.49 A"/>
    <property type="chains" value="A/B=231-505"/>
</dbReference>
<dbReference type="PDB" id="8ZFR">
    <property type="method" value="X-ray"/>
    <property type="resolution" value="2.73 A"/>
    <property type="chains" value="A/B=231-505"/>
</dbReference>
<dbReference type="PDB" id="8ZFS">
    <property type="method" value="X-ray"/>
    <property type="resolution" value="2.56 A"/>
    <property type="chains" value="A/B=231-505"/>
</dbReference>
<dbReference type="PDB" id="8ZFT">
    <property type="method" value="X-ray"/>
    <property type="resolution" value="3.20 A"/>
    <property type="chains" value="A/B=231-505"/>
</dbReference>
<dbReference type="PDB" id="9CK0">
    <property type="method" value="X-ray"/>
    <property type="resolution" value="2.60 A"/>
    <property type="chains" value="A=231-505"/>
</dbReference>
<dbReference type="PDB" id="9CWN">
    <property type="method" value="X-ray"/>
    <property type="resolution" value="2.70 A"/>
    <property type="chains" value="A=231-505"/>
</dbReference>
<dbReference type="PDB" id="9F7W">
    <property type="method" value="X-ray"/>
    <property type="resolution" value="1.25 A"/>
    <property type="chains" value="A=234-505"/>
</dbReference>
<dbReference type="PDB" id="9F7X">
    <property type="method" value="X-ray"/>
    <property type="resolution" value="1.63 A"/>
    <property type="chains" value="A=234-505"/>
</dbReference>
<dbReference type="PDBsum" id="1FM6"/>
<dbReference type="PDBsum" id="1FM9"/>
<dbReference type="PDBsum" id="1I7I"/>
<dbReference type="PDBsum" id="1K74"/>
<dbReference type="PDBsum" id="1KNU"/>
<dbReference type="PDBsum" id="1NYX"/>
<dbReference type="PDBsum" id="1PRG"/>
<dbReference type="PDBsum" id="1RDT"/>
<dbReference type="PDBsum" id="1WM0"/>
<dbReference type="PDBsum" id="1ZEO"/>
<dbReference type="PDBsum" id="1ZGY"/>
<dbReference type="PDBsum" id="2ATH"/>
<dbReference type="PDBsum" id="2F4B"/>
<dbReference type="PDBsum" id="2FVJ"/>
<dbReference type="PDBsum" id="2G0G"/>
<dbReference type="PDBsum" id="2G0H"/>
<dbReference type="PDBsum" id="2GTK"/>
<dbReference type="PDBsum" id="2HFP"/>
<dbReference type="PDBsum" id="2HWQ"/>
<dbReference type="PDBsum" id="2HWR"/>
<dbReference type="PDBsum" id="2I4J"/>
<dbReference type="PDBsum" id="2I4P"/>
<dbReference type="PDBsum" id="2I4Z"/>
<dbReference type="PDBsum" id="2OM9"/>
<dbReference type="PDBsum" id="2P4Y"/>
<dbReference type="PDBsum" id="2POB"/>
<dbReference type="PDBsum" id="2PRG"/>
<dbReference type="PDBsum" id="2Q59"/>
<dbReference type="PDBsum" id="2Q5P"/>
<dbReference type="PDBsum" id="2Q5S"/>
<dbReference type="PDBsum" id="2Q61"/>
<dbReference type="PDBsum" id="2Q6R"/>
<dbReference type="PDBsum" id="2Q6S"/>
<dbReference type="PDBsum" id="2Q8S"/>
<dbReference type="PDBsum" id="2QMV"/>
<dbReference type="PDBsum" id="2VSR"/>
<dbReference type="PDBsum" id="2VST"/>
<dbReference type="PDBsum" id="2VV0"/>
<dbReference type="PDBsum" id="2VV1"/>
<dbReference type="PDBsum" id="2VV2"/>
<dbReference type="PDBsum" id="2VV3"/>
<dbReference type="PDBsum" id="2VV4"/>
<dbReference type="PDBsum" id="2XKW"/>
<dbReference type="PDBsum" id="2YFE"/>
<dbReference type="PDBsum" id="2ZK0"/>
<dbReference type="PDBsum" id="2ZK1"/>
<dbReference type="PDBsum" id="2ZK2"/>
<dbReference type="PDBsum" id="2ZK3"/>
<dbReference type="PDBsum" id="2ZK4"/>
<dbReference type="PDBsum" id="2ZK5"/>
<dbReference type="PDBsum" id="2ZK6"/>
<dbReference type="PDBsum" id="2ZNO"/>
<dbReference type="PDBsum" id="2ZVT"/>
<dbReference type="PDBsum" id="3ADS"/>
<dbReference type="PDBsum" id="3ADT"/>
<dbReference type="PDBsum" id="3ADU"/>
<dbReference type="PDBsum" id="3ADV"/>
<dbReference type="PDBsum" id="3ADW"/>
<dbReference type="PDBsum" id="3ADX"/>
<dbReference type="PDBsum" id="3AN3"/>
<dbReference type="PDBsum" id="3AN4"/>
<dbReference type="PDBsum" id="3B0Q"/>
<dbReference type="PDBsum" id="3B0R"/>
<dbReference type="PDBsum" id="3B1M"/>
<dbReference type="PDBsum" id="3B3K"/>
<dbReference type="PDBsum" id="3BC5"/>
<dbReference type="PDBsum" id="3CDP"/>
<dbReference type="PDBsum" id="3CDS"/>
<dbReference type="PDBsum" id="3CS8"/>
<dbReference type="PDBsum" id="3CWD"/>
<dbReference type="PDBsum" id="3D6D"/>
<dbReference type="PDBsum" id="3DZU"/>
<dbReference type="PDBsum" id="3DZY"/>
<dbReference type="PDBsum" id="3E00"/>
<dbReference type="PDBsum" id="3ET0"/>
<dbReference type="PDBsum" id="3ET3"/>
<dbReference type="PDBsum" id="3FEJ"/>
<dbReference type="PDBsum" id="3FUR"/>
<dbReference type="PDBsum" id="3G9E"/>
<dbReference type="PDBsum" id="3GBK"/>
<dbReference type="PDBsum" id="3H0A"/>
<dbReference type="PDBsum" id="3HO0"/>
<dbReference type="PDBsum" id="3HOD"/>
<dbReference type="PDBsum" id="3IA6"/>
<dbReference type="PDBsum" id="3K8S"/>
<dbReference type="PDBsum" id="3KMG"/>
<dbReference type="PDBsum" id="3LMP"/>
<dbReference type="PDBsum" id="3NOA"/>
<dbReference type="PDBsum" id="3OSI"/>
<dbReference type="PDBsum" id="3OSW"/>
<dbReference type="PDBsum" id="3PBA"/>
<dbReference type="PDBsum" id="3PO9"/>
<dbReference type="PDBsum" id="3PRG"/>
<dbReference type="PDBsum" id="3QT0"/>
<dbReference type="PDBsum" id="3R5N"/>
<dbReference type="PDBsum" id="3R8A"/>
<dbReference type="PDBsum" id="3R8I"/>
<dbReference type="PDBsum" id="3S9S"/>
<dbReference type="PDBsum" id="3SZ1"/>
<dbReference type="PDBsum" id="3T03"/>
<dbReference type="PDBsum" id="3TY0"/>
<dbReference type="PDBsum" id="3U9Q"/>
<dbReference type="PDBsum" id="3V9T"/>
<dbReference type="PDBsum" id="3V9V"/>
<dbReference type="PDBsum" id="3V9Y"/>
<dbReference type="PDBsum" id="3VJH"/>
<dbReference type="PDBsum" id="3VJI"/>
<dbReference type="PDBsum" id="3VN2"/>
<dbReference type="PDBsum" id="3VSO"/>
<dbReference type="PDBsum" id="3VSP"/>
<dbReference type="PDBsum" id="3WJ4"/>
<dbReference type="PDBsum" id="3WJ5"/>
<dbReference type="PDBsum" id="3WMH"/>
<dbReference type="PDBsum" id="3X1H"/>
<dbReference type="PDBsum" id="3X1I"/>
<dbReference type="PDBsum" id="4A4V"/>
<dbReference type="PDBsum" id="4A4W"/>
<dbReference type="PDBsum" id="4CI5"/>
<dbReference type="PDBsum" id="4E4K"/>
<dbReference type="PDBsum" id="4E4Q"/>
<dbReference type="PDBsum" id="4EM9"/>
<dbReference type="PDBsum" id="4EMA"/>
<dbReference type="PDBsum" id="4F9M"/>
<dbReference type="PDBsum" id="4FGY"/>
<dbReference type="PDBsum" id="4HEE"/>
<dbReference type="PDBsum" id="4JAZ"/>
<dbReference type="PDBsum" id="4JL4"/>
<dbReference type="PDBsum" id="4L96"/>
<dbReference type="PDBsum" id="4L98"/>
<dbReference type="PDBsum" id="4O8F"/>
<dbReference type="PDBsum" id="4OJ4"/>
<dbReference type="PDBsum" id="4PRG"/>
<dbReference type="PDBsum" id="4PVU"/>
<dbReference type="PDBsum" id="4PWL"/>
<dbReference type="PDBsum" id="4R06"/>
<dbReference type="PDBsum" id="4R2U"/>
<dbReference type="PDBsum" id="4R6S"/>
<dbReference type="PDBsum" id="4XLD"/>
<dbReference type="PDBsum" id="4XTA"/>
<dbReference type="PDBsum" id="4XUH"/>
<dbReference type="PDBsum" id="4XUM"/>
<dbReference type="PDBsum" id="4Y29"/>
<dbReference type="PDBsum" id="4YT1"/>
<dbReference type="PDBsum" id="5AZV"/>
<dbReference type="PDBsum" id="5DSH"/>
<dbReference type="PDBsum" id="5DV3"/>
<dbReference type="PDBsum" id="5DV6"/>
<dbReference type="PDBsum" id="5DV8"/>
<dbReference type="PDBsum" id="5DVC"/>
<dbReference type="PDBsum" id="5DWL"/>
<dbReference type="PDBsum" id="5F9B"/>
<dbReference type="PDBsum" id="5GTN"/>
<dbReference type="PDBsum" id="5GTO"/>
<dbReference type="PDBsum" id="5GTP"/>
<dbReference type="PDBsum" id="5HZC"/>
<dbReference type="PDBsum" id="5JI0"/>
<dbReference type="PDBsum" id="5LSG"/>
<dbReference type="PDBsum" id="5TTO"/>
<dbReference type="PDBsum" id="5TWO"/>
<dbReference type="PDBsum" id="5U5L"/>
<dbReference type="PDBsum" id="5UGM"/>
<dbReference type="PDBsum" id="5WQX"/>
<dbReference type="PDBsum" id="5WR0"/>
<dbReference type="PDBsum" id="5WR1"/>
<dbReference type="PDBsum" id="5Y2O"/>
<dbReference type="PDBsum" id="5Y2T"/>
<dbReference type="PDBsum" id="5YCN"/>
<dbReference type="PDBsum" id="5YCP"/>
<dbReference type="PDBsum" id="5Z5S"/>
<dbReference type="PDBsum" id="5Z6S"/>
<dbReference type="PDBsum" id="6AD9"/>
<dbReference type="PDBsum" id="6AN1"/>
<dbReference type="PDBsum" id="6AUG"/>
<dbReference type="PDBsum" id="6AVI"/>
<dbReference type="PDBsum" id="6C1I"/>
<dbReference type="PDBsum" id="6C5Q"/>
<dbReference type="PDBsum" id="6C5T"/>
<dbReference type="PDBsum" id="6D3E"/>
<dbReference type="PDBsum" id="6D8X"/>
<dbReference type="PDBsum" id="6D94"/>
<dbReference type="PDBsum" id="6DBH"/>
<dbReference type="PDBsum" id="6DCU"/>
<dbReference type="PDBsum" id="6DGL"/>
<dbReference type="PDBsum" id="6DGO"/>
<dbReference type="PDBsum" id="6DGP"/>
<dbReference type="PDBsum" id="6DGQ"/>
<dbReference type="PDBsum" id="6DGR"/>
<dbReference type="PDBsum" id="6DH9"/>
<dbReference type="PDBsum" id="6DHA"/>
<dbReference type="PDBsum" id="6E5A"/>
<dbReference type="PDBsum" id="6ENQ"/>
<dbReference type="PDBsum" id="6F2L"/>
<dbReference type="PDBsum" id="6FZF"/>
<dbReference type="PDBsum" id="6FZG"/>
<dbReference type="PDBsum" id="6FZJ"/>
<dbReference type="PDBsum" id="6FZP"/>
<dbReference type="PDBsum" id="6FZY"/>
<dbReference type="PDBsum" id="6ICJ"/>
<dbReference type="PDBsum" id="6IJR"/>
<dbReference type="PDBsum" id="6IJS"/>
<dbReference type="PDBsum" id="6ILQ"/>
<dbReference type="PDBsum" id="6IZM"/>
<dbReference type="PDBsum" id="6IZN"/>
<dbReference type="PDBsum" id="6JEY"/>
<dbReference type="PDBsum" id="6JF0"/>
<dbReference type="PDBsum" id="6JQ7"/>
<dbReference type="PDBsum" id="6K0T"/>
<dbReference type="PDBsum" id="6KTM"/>
<dbReference type="PDBsum" id="6KTN"/>
<dbReference type="PDBsum" id="6L89"/>
<dbReference type="PDBsum" id="6L8B"/>
<dbReference type="PDBsum" id="6MCZ"/>
<dbReference type="PDBsum" id="6MD0"/>
<dbReference type="PDBsum" id="6MD1"/>
<dbReference type="PDBsum" id="6MD2"/>
<dbReference type="PDBsum" id="6MD4"/>
<dbReference type="PDBsum" id="6MS7"/>
<dbReference type="PDBsum" id="6O67"/>
<dbReference type="PDBsum" id="6O68"/>
<dbReference type="PDBsum" id="6ONI"/>
<dbReference type="PDBsum" id="6ONJ"/>
<dbReference type="PDBsum" id="6PDZ"/>
<dbReference type="PDBsum" id="6QJ5"/>
<dbReference type="PDBsum" id="6T1S"/>
<dbReference type="PDBsum" id="6T1V"/>
<dbReference type="PDBsum" id="6T6B"/>
<dbReference type="PDBsum" id="6T9C"/>
<dbReference type="PDBsum" id="6TDC"/>
<dbReference type="PDBsum" id="6TSG"/>
<dbReference type="PDBsum" id="6VZL"/>
<dbReference type="PDBsum" id="6VZM"/>
<dbReference type="PDBsum" id="6VZN"/>
<dbReference type="PDBsum" id="6VZO"/>
<dbReference type="PDBsum" id="6Y3U"/>
<dbReference type="PDBsum" id="6ZLY"/>
<dbReference type="PDBsum" id="7A7H"/>
<dbReference type="PDBsum" id="7AHJ"/>
<dbReference type="PDBsum" id="7AWC"/>
<dbReference type="PDBsum" id="7AWD"/>
<dbReference type="PDBsum" id="7CXE"/>
<dbReference type="PDBsum" id="7CXF"/>
<dbReference type="PDBsum" id="7CXG"/>
<dbReference type="PDBsum" id="7CXH"/>
<dbReference type="PDBsum" id="7CXI"/>
<dbReference type="PDBsum" id="7CXJ"/>
<dbReference type="PDBsum" id="7CXK"/>
<dbReference type="PDBsum" id="7CXL"/>
<dbReference type="PDBsum" id="7E0A"/>
<dbReference type="PDBsum" id="7E2O"/>
<dbReference type="PDBsum" id="7EFQ"/>
<dbReference type="PDBsum" id="7JQG"/>
<dbReference type="PDBsum" id="7LOT"/>
<dbReference type="PDBsum" id="7P4E"/>
<dbReference type="PDBsum" id="7QB1"/>
<dbReference type="PDBsum" id="7RLE"/>
<dbReference type="PDBsum" id="7SQA"/>
<dbReference type="PDBsum" id="7SQB"/>
<dbReference type="PDBsum" id="7WGO"/>
<dbReference type="PDBsum" id="7WGP"/>
<dbReference type="PDBsum" id="7WGQ"/>
<dbReference type="PDBsum" id="7WOX"/>
<dbReference type="PDBsum" id="8ADF"/>
<dbReference type="PDBsum" id="8AQM"/>
<dbReference type="PDBsum" id="8AQN"/>
<dbReference type="PDBsum" id="8ATY"/>
<dbReference type="PDBsum" id="8ATZ"/>
<dbReference type="PDBsum" id="8B8W"/>
<dbReference type="PDBsum" id="8B8X"/>
<dbReference type="PDBsum" id="8B8Y"/>
<dbReference type="PDBsum" id="8B8Z"/>
<dbReference type="PDBsum" id="8B90"/>
<dbReference type="PDBsum" id="8B91"/>
<dbReference type="PDBsum" id="8B92"/>
<dbReference type="PDBsum" id="8B93"/>
<dbReference type="PDBsum" id="8B94"/>
<dbReference type="PDBsum" id="8B95"/>
<dbReference type="PDBsum" id="8BF1"/>
<dbReference type="PDBsum" id="8BF2"/>
<dbReference type="PDBsum" id="8BFF"/>
<dbReference type="PDBsum" id="8C0C"/>
<dbReference type="PDBsum" id="8CPH"/>
<dbReference type="PDBsum" id="8CPI"/>
<dbReference type="PDBsum" id="8CPJ"/>
<dbReference type="PDBsum" id="8DK4"/>
<dbReference type="PDBsum" id="8DKN"/>
<dbReference type="PDBsum" id="8DKV"/>
<dbReference type="PDBsum" id="8DSY"/>
<dbReference type="PDBsum" id="8DSZ"/>
<dbReference type="PDBsum" id="8FHE"/>
<dbReference type="PDBsum" id="8FHF"/>
<dbReference type="PDBsum" id="8FHG"/>
<dbReference type="PDBsum" id="8FKC"/>
<dbReference type="PDBsum" id="8FKD"/>
<dbReference type="PDBsum" id="8FKE"/>
<dbReference type="PDBsum" id="8FKF"/>
<dbReference type="PDBsum" id="8FKG"/>
<dbReference type="PDBsum" id="8HHP"/>
<dbReference type="PDBsum" id="8HHQ"/>
<dbReference type="PDBsum" id="8HUM"/>
<dbReference type="PDBsum" id="8HUP"/>
<dbReference type="PDBsum" id="8PBO"/>
<dbReference type="PDBsum" id="8REJ"/>
<dbReference type="PDBsum" id="8SC9"/>
<dbReference type="PDBsum" id="8U57"/>
<dbReference type="PDBsum" id="8WFE"/>
<dbReference type="PDBsum" id="8ZFN"/>
<dbReference type="PDBsum" id="8ZFO"/>
<dbReference type="PDBsum" id="8ZFP"/>
<dbReference type="PDBsum" id="8ZFQ"/>
<dbReference type="PDBsum" id="8ZFR"/>
<dbReference type="PDBsum" id="8ZFS"/>
<dbReference type="PDBsum" id="8ZFT"/>
<dbReference type="PDBsum" id="9CK0"/>
<dbReference type="PDBsum" id="9CWN"/>
<dbReference type="PDBsum" id="9F7W"/>
<dbReference type="PDBsum" id="9F7X"/>
<dbReference type="SMR" id="P37231"/>
<dbReference type="BioGRID" id="111464">
    <property type="interactions" value="301"/>
</dbReference>
<dbReference type="ComplexPortal" id="CPX-702">
    <property type="entry name" value="PPARgamma-NCOA2 activated nuclear receptor complex"/>
</dbReference>
<dbReference type="ComplexPortal" id="CPX-711">
    <property type="entry name" value="PPARgamma-NCOA1 activated nuclear receptor complex"/>
</dbReference>
<dbReference type="CORUM" id="P37231"/>
<dbReference type="DIP" id="DIP-35528N"/>
<dbReference type="ELM" id="P37231"/>
<dbReference type="FunCoup" id="P37231">
    <property type="interactions" value="1983"/>
</dbReference>
<dbReference type="IntAct" id="P37231">
    <property type="interactions" value="91"/>
</dbReference>
<dbReference type="MINT" id="P37231"/>
<dbReference type="STRING" id="9606.ENSP00000287820"/>
<dbReference type="BindingDB" id="P37231"/>
<dbReference type="ChEMBL" id="CHEMBL235"/>
<dbReference type="DrugBank" id="DB08760">
    <property type="generic name" value="(2S)-2-(4-chlorophenoxy)-3-phenylpropanoic acid"/>
</dbReference>
<dbReference type="DrugBank" id="DB07842">
    <property type="generic name" value="(2S)-2-(4-ethylphenoxy)-3-phenylpropanoic acid"/>
</dbReference>
<dbReference type="DrugBank" id="DB08121">
    <property type="generic name" value="(2S)-2-(biphenyl-4-yloxy)-3-phenylpropanoic acid"/>
</dbReference>
<dbReference type="DrugBank" id="DB07675">
    <property type="generic name" value="(2S)-2-ETHOXY-3-{4-[2-(10H-PHENOXAZIN-10-YL)ETHOXY]PHENYL}PROPANOIC ACID"/>
</dbReference>
<dbReference type="DrugBank" id="DB06908">
    <property type="generic name" value="(2S)-3-(1-{[2-(2-CHLOROPHENYL)-5-METHYL-1,3-OXAZOL-4-YL]METHYL}-1H-INDOL-5-YL)-2-ETHOXYPROPANOIC ACID"/>
</dbReference>
<dbReference type="DrugBank" id="DB07111">
    <property type="generic name" value="(4S,5E,7Z,10Z,13Z,16Z,19Z)-4-hydroxydocosa-5,7,10,13,16,19-hexaenoic acid"/>
</dbReference>
<dbReference type="DrugBank" id="DB08435">
    <property type="generic name" value="(5E,14E)-11-oxoprosta-5,9,12,14-tetraen-1-oic acid"/>
</dbReference>
<dbReference type="DrugBank" id="DB07172">
    <property type="generic name" value="(5R,6E,8Z,11Z,14Z,17Z)-5-hydroxyicosa-6,8,11,14,17-pentaenoic acid"/>
</dbReference>
<dbReference type="DrugBank" id="DB07208">
    <property type="generic name" value="(8E,10S,12Z)-10-hydroxy-6-oxooctadeca-8,12-dienoic acid"/>
</dbReference>
<dbReference type="DrugBank" id="DB07209">
    <property type="generic name" value="(8R,9Z,12Z)-8-hydroxy-6-oxooctadeca-9,12-dienoic acid"/>
</dbReference>
<dbReference type="DrugBank" id="DB06926">
    <property type="generic name" value="(9Z,11E,13S)-13-hydroxyoctadeca-9,11-dienoic acid"/>
</dbReference>
<dbReference type="DrugBank" id="DB04270">
    <property type="generic name" value="(S)-3-(4-(2-Carbazol-9-Yl-Ethoxy)-Phenyl)-2-Ethoxy-Propionic Acid"/>
</dbReference>
<dbReference type="DrugBank" id="DB11898">
    <property type="generic name" value="2,4-thiazolidinedione"/>
</dbReference>
<dbReference type="DrugBank" id="DB08402">
    <property type="generic name" value="2-[(2,4-DICHLOROBENZOYL)AMINO]-5-(PYRIMIDIN-2-YLOXY)BENZOIC ACID"/>
</dbReference>
<dbReference type="DrugBank" id="DB07863">
    <property type="generic name" value="2-chloro-5-nitro-N-phenylbenzamide"/>
</dbReference>
<dbReference type="DrugBank" id="DB04689">
    <property type="generic name" value="2-{5-[3-(6-BENZOYL-1-PROPYLNAPHTHALEN-2-YLOXY)PROPOXY]INDOL-1-YL}ETHANOIC ACID"/>
</dbReference>
<dbReference type="DrugBank" id="DB07053">
    <property type="generic name" value="2-{5-[3-(7-PROPYL-3-TRIFLUOROMETHYLBENZO[D]ISOXAZOL-6-YLOXY)PROPOXY]INDOL-1-YL}ETHANOIC ACID"/>
</dbReference>
<dbReference type="DrugBank" id="DB07723">
    <property type="generic name" value="3-(5-methoxy-1H-indol-3-yl)propanoic acid"/>
</dbReference>
<dbReference type="DrugBank" id="DB08302">
    <property type="generic name" value="3-[5-(2-nitropent-1-en-1-yl)furan-2-yl]benzoic acid"/>
</dbReference>
<dbReference type="DrugBank" id="DB08560">
    <property type="generic name" value="3-FLUORO-N-[1-(4-FLUOROPHENYL)-3-(2-THIENYL)-1H-PYRAZOL-5-YL]BENZENESULFONAMIDE"/>
</dbReference>
<dbReference type="DrugBank" id="DB07302">
    <property type="generic name" value="9(S)-HODE"/>
</dbReference>
<dbReference type="DrugBank" id="DB08915">
    <property type="generic name" value="Aleglitazar"/>
</dbReference>
<dbReference type="DrugBank" id="DB00132">
    <property type="generic name" value="alpha-Linolenic acid"/>
</dbReference>
<dbReference type="DrugBank" id="DB05490">
    <property type="generic name" value="AMG-131"/>
</dbReference>
<dbReference type="DrugBank" id="DB01118">
    <property type="generic name" value="Amiodarone"/>
</dbReference>
<dbReference type="DrugBank" id="DB11811">
    <property type="generic name" value="Arhalofenate"/>
</dbReference>
<dbReference type="DrugBank" id="DB12781">
    <property type="generic name" value="Balaglitazone"/>
</dbReference>
<dbReference type="DrugBank" id="DB01014">
    <property type="generic name" value="Balsalazide"/>
</dbReference>
<dbReference type="DrugBank" id="DB01393">
    <property type="generic name" value="Bezafibrate"/>
</dbReference>
<dbReference type="DrugBank" id="DB09061">
    <property type="generic name" value="Cannabidiol"/>
</dbReference>
<dbReference type="DrugBank" id="DB03600">
    <property type="generic name" value="Capric acid"/>
</dbReference>
<dbReference type="DrugBank" id="DB19023">
    <property type="generic name" value="Chiglitazar"/>
</dbReference>
<dbReference type="DrugBank" id="DB09201">
    <property type="generic name" value="Ciglitazone"/>
</dbReference>
<dbReference type="DrugBank" id="DB09006">
    <property type="generic name" value="Clinofibrate"/>
</dbReference>
<dbReference type="DrugBank" id="DB00845">
    <property type="generic name" value="Clofazimine"/>
</dbReference>
<dbReference type="DrugBank" id="DB05854">
    <property type="generic name" value="CLX-0921"/>
</dbReference>
<dbReference type="DrugBank" id="DB11672">
    <property type="generic name" value="Curcumin"/>
</dbReference>
<dbReference type="DrugBank" id="DB14635">
    <property type="generic name" value="Curcumin sulfate"/>
</dbReference>
<dbReference type="DrugBank" id="DB14034">
    <property type="generic name" value="Darglitazone"/>
</dbReference>
<dbReference type="DrugBank" id="DB09213">
    <property type="generic name" value="Dexibuprofen"/>
</dbReference>
<dbReference type="DrugBank" id="DB07509">
    <property type="generic name" value="difluoro(5-{2-[(5-octyl-1H-pyrrol-2-yl-kappaN)methylidene]-2H-pyrrol-5-yl-kappaN}pentanoato)boron"/>
</dbReference>
<dbReference type="DrugBank" id="DB03756">
    <property type="generic name" value="Doconexent"/>
</dbReference>
<dbReference type="DrugBank" id="DB06519">
    <property type="generic name" value="Edaglitazone"/>
</dbReference>
<dbReference type="DrugBank" id="DB11894">
    <property type="generic name" value="Efatutazone"/>
</dbReference>
<dbReference type="DrugBank" id="DB05187">
    <property type="generic name" value="Elafibranor"/>
</dbReference>
<dbReference type="DrugBank" id="DB14035">
    <property type="generic name" value="Englitazone"/>
</dbReference>
<dbReference type="DrugBank" id="DB06521">
    <property type="generic name" value="Ertiprotafib"/>
</dbReference>
<dbReference type="DrugBank" id="DB19311">
    <property type="generic name" value="Farglitazar"/>
</dbReference>
<dbReference type="DrugBank" id="DB13873">
    <property type="generic name" value="Fenofibric acid"/>
</dbReference>
<dbReference type="DrugBank" id="DB00573">
    <property type="generic name" value="Fenoprofen"/>
</dbReference>
<dbReference type="DrugBank" id="DB13961">
    <property type="generic name" value="Fish oil"/>
</dbReference>
<dbReference type="DrugBank" id="DB12557">
    <property type="generic name" value="FK-614"/>
</dbReference>
<dbReference type="DrugBank" id="DB02266">
    <property type="generic name" value="Flufenamic acid"/>
</dbReference>
<dbReference type="DrugBank" id="DB16109">
    <property type="generic name" value="GED-0507-34-Levo"/>
</dbReference>
<dbReference type="DrugBank" id="DB01067">
    <property type="generic name" value="Glipizide"/>
</dbReference>
<dbReference type="DrugBank" id="DB01050">
    <property type="generic name" value="Ibuprofen"/>
</dbReference>
<dbReference type="DrugBank" id="DB00159">
    <property type="generic name" value="Icosapent"/>
</dbReference>
<dbReference type="DrugBank" id="DB12511">
    <property type="generic name" value="Imiglitazar"/>
</dbReference>
<dbReference type="DrugBank" id="DB07724">
    <property type="generic name" value="Indeglitazar"/>
</dbReference>
<dbReference type="DrugBank" id="DB00328">
    <property type="generic name" value="Indomethacin"/>
</dbReference>
<dbReference type="DrugBank" id="DB12007">
    <property type="generic name" value="Isoflavone"/>
</dbReference>
<dbReference type="DrugBank" id="DB14801">
    <property type="generic name" value="Lanifibranor"/>
</dbReference>
<dbReference type="DrugBank" id="DB15021">
    <property type="generic name" value="Leriglitazone"/>
</dbReference>
<dbReference type="DrugBank" id="DB09198">
    <property type="generic name" value="Lobeglitazone"/>
</dbReference>
<dbReference type="DrugBank" id="DB14009">
    <property type="generic name" value="Medical Cannabis"/>
</dbReference>
<dbReference type="DrugBank" id="DB00244">
    <property type="generic name" value="Mesalazine"/>
</dbReference>
<dbReference type="DrugBank" id="DB01252">
    <property type="generic name" value="Mitiglinide"/>
</dbReference>
<dbReference type="DrugBank" id="DB06510">
    <property type="generic name" value="Muraglitazar"/>
</dbReference>
<dbReference type="DrugBank" id="DB14011">
    <property type="generic name" value="Nabiximols"/>
</dbReference>
<dbReference type="DrugBank" id="DB00731">
    <property type="generic name" value="Nateglinide"/>
</dbReference>
<dbReference type="DrugBank" id="DB12662">
    <property type="generic name" value="Naveglitazar"/>
</dbReference>
<dbReference type="DrugBank" id="DB09199">
    <property type="generic name" value="Netoglitazone"/>
</dbReference>
<dbReference type="DrugBank" id="DB04224">
    <property type="generic name" value="Oleic Acid"/>
</dbReference>
<dbReference type="DrugBank" id="DB11133">
    <property type="generic name" value="Omega-3 fatty acids"/>
</dbReference>
<dbReference type="DrugBank" id="DB12072">
    <property type="generic name" value="Orantinib"/>
</dbReference>
<dbReference type="DrugBank" id="DB02746">
    <property type="generic name" value="Phthalic Acid"/>
</dbReference>
<dbReference type="DrugBank" id="DB01132">
    <property type="generic name" value="Pioglitazone"/>
</dbReference>
<dbReference type="DrugBank" id="DB06533">
    <property type="generic name" value="Ragaglitazar"/>
</dbReference>
<dbReference type="DrugBank" id="DB04971">
    <property type="generic name" value="Reglitazar"/>
</dbReference>
<dbReference type="DrugBank" id="DB00912">
    <property type="generic name" value="Repaglinide"/>
</dbReference>
<dbReference type="DrugBank" id="DB02709">
    <property type="generic name" value="Resveratrol"/>
</dbReference>
<dbReference type="DrugBank" id="DB09200">
    <property type="generic name" value="Rivoglitazone"/>
</dbReference>
<dbReference type="DrugBank" id="DB00412">
    <property type="generic name" value="Rosiglitazone"/>
</dbReference>
<dbReference type="DrugBank" id="DB19312">
    <property type="generic name" value="Sipoglitazar"/>
</dbReference>
<dbReference type="DrugBank" id="DB16332">
    <property type="generic name" value="Sodelglitazar"/>
</dbReference>
<dbReference type="DrugBank" id="DB00795">
    <property type="generic name" value="Sulfasalazine"/>
</dbReference>
<dbReference type="DrugBank" id="DB00966">
    <property type="generic name" value="Telmisartan"/>
</dbReference>
<dbReference type="DrugBank" id="DB06536">
    <property type="generic name" value="Tesaglitazar"/>
</dbReference>
<dbReference type="DrugBank" id="DB08604">
    <property type="generic name" value="Triclosan"/>
</dbReference>
<dbReference type="DrugBank" id="DB00197">
    <property type="generic name" value="Troglitazone"/>
</dbReference>
<dbReference type="DrugBank" id="DB00313">
    <property type="generic name" value="Valproic acid"/>
</dbReference>
<dbReference type="DrugCentral" id="P37231"/>
<dbReference type="GuidetoPHARMACOLOGY" id="595"/>
<dbReference type="SwissLipids" id="SLP:000000396"/>
<dbReference type="MoonDB" id="P37231">
    <property type="type" value="Predicted"/>
</dbReference>
<dbReference type="GlyCosmos" id="P37231">
    <property type="glycosylation" value="1 site, No reported glycans"/>
</dbReference>
<dbReference type="GlyGen" id="P37231">
    <property type="glycosylation" value="2 sites"/>
</dbReference>
<dbReference type="iPTMnet" id="P37231"/>
<dbReference type="PhosphoSitePlus" id="P37231"/>
<dbReference type="BioMuta" id="PPARG"/>
<dbReference type="DMDM" id="13432234"/>
<dbReference type="jPOST" id="P37231"/>
<dbReference type="MassIVE" id="P37231"/>
<dbReference type="PaxDb" id="9606-ENSP00000287820"/>
<dbReference type="PeptideAtlas" id="P37231"/>
<dbReference type="ProteomicsDB" id="55267">
    <molecule id="P37231-1"/>
</dbReference>
<dbReference type="ProteomicsDB" id="55268">
    <molecule id="P37231-2"/>
</dbReference>
<dbReference type="ProteomicsDB" id="55269">
    <molecule id="P37231-3"/>
</dbReference>
<dbReference type="Antibodypedia" id="3799">
    <property type="antibodies" value="1087 antibodies from 46 providers"/>
</dbReference>
<dbReference type="DNASU" id="5468"/>
<dbReference type="Ensembl" id="ENST00000287820.10">
    <molecule id="P37231-1"/>
    <property type="protein sequence ID" value="ENSP00000287820.6"/>
    <property type="gene ID" value="ENSG00000132170.24"/>
</dbReference>
<dbReference type="GeneID" id="5468"/>
<dbReference type="KEGG" id="hsa:5468"/>
<dbReference type="UCSC" id="uc003bwr.4">
    <molecule id="P37231-1"/>
    <property type="organism name" value="human"/>
</dbReference>
<dbReference type="AGR" id="HGNC:9236"/>
<dbReference type="CTD" id="5468"/>
<dbReference type="DisGeNET" id="5468"/>
<dbReference type="GeneCards" id="PPARG"/>
<dbReference type="HGNC" id="HGNC:9236">
    <property type="gene designation" value="PPARG"/>
</dbReference>
<dbReference type="HPA" id="ENSG00000132170">
    <property type="expression patterns" value="Tissue enhanced (adipose)"/>
</dbReference>
<dbReference type="MalaCards" id="PPARG"/>
<dbReference type="MIM" id="137800">
    <property type="type" value="phenotype"/>
</dbReference>
<dbReference type="MIM" id="601487">
    <property type="type" value="gene"/>
</dbReference>
<dbReference type="MIM" id="601665">
    <property type="type" value="phenotype"/>
</dbReference>
<dbReference type="MIM" id="604367">
    <property type="type" value="phenotype"/>
</dbReference>
<dbReference type="MIM" id="606641">
    <property type="type" value="phenotype"/>
</dbReference>
<dbReference type="neXtProt" id="NX_P37231"/>
<dbReference type="OpenTargets" id="ENSG00000132170"/>
<dbReference type="Orphanet" id="528">
    <property type="disease" value="Congenital generalized lipodystrophy"/>
</dbReference>
<dbReference type="Orphanet" id="146">
    <property type="disease" value="Differentiated thyroid carcinoma"/>
</dbReference>
<dbReference type="Orphanet" id="251579">
    <property type="disease" value="Giant cell glioblastoma"/>
</dbReference>
<dbReference type="Orphanet" id="251576">
    <property type="disease" value="Gliosarcoma"/>
</dbReference>
<dbReference type="Orphanet" id="79083">
    <property type="disease" value="PPARG-related familial partial lipodystrophy"/>
</dbReference>
<dbReference type="PharmGKB" id="PA281"/>
<dbReference type="VEuPathDB" id="HostDB:ENSG00000132170"/>
<dbReference type="eggNOG" id="KOG3575">
    <property type="taxonomic scope" value="Eukaryota"/>
</dbReference>
<dbReference type="GeneTree" id="ENSGT00940000158273"/>
<dbReference type="HOGENOM" id="CLU_007368_4_2_1"/>
<dbReference type="InParanoid" id="P37231"/>
<dbReference type="OrthoDB" id="7634782at2759"/>
<dbReference type="PAN-GO" id="P37231">
    <property type="GO annotations" value="12 GO annotations based on evolutionary models"/>
</dbReference>
<dbReference type="PhylomeDB" id="P37231"/>
<dbReference type="TreeFam" id="TF316304"/>
<dbReference type="PathwayCommons" id="P37231"/>
<dbReference type="Reactome" id="R-HSA-1989781">
    <property type="pathway name" value="PPARA activates gene expression"/>
</dbReference>
<dbReference type="Reactome" id="R-HSA-381340">
    <property type="pathway name" value="Transcriptional regulation of white adipocyte differentiation"/>
</dbReference>
<dbReference type="Reactome" id="R-HSA-383280">
    <property type="pathway name" value="Nuclear Receptor transcription pathway"/>
</dbReference>
<dbReference type="Reactome" id="R-HSA-4090294">
    <property type="pathway name" value="SUMOylation of intracellular receptors"/>
</dbReference>
<dbReference type="Reactome" id="R-HSA-8943724">
    <property type="pathway name" value="Regulation of PTEN gene transcription"/>
</dbReference>
<dbReference type="Reactome" id="R-HSA-9022707">
    <property type="pathway name" value="MECP2 regulates transcription factors"/>
</dbReference>
<dbReference type="Reactome" id="R-HSA-9841922">
    <property type="pathway name" value="MLL4 and MLL3 complexes regulate expression of PPARG target genes in adipogenesis and hepatic steatosis"/>
</dbReference>
<dbReference type="Reactome" id="R-HSA-9844594">
    <property type="pathway name" value="Transcriptional regulation of brown and beige adipocyte differentiation by EBF2"/>
</dbReference>
<dbReference type="SignaLink" id="P37231"/>
<dbReference type="SIGNOR" id="P37231"/>
<dbReference type="BioGRID-ORCS" id="5468">
    <property type="hits" value="33 hits in 1190 CRISPR screens"/>
</dbReference>
<dbReference type="ChiTaRS" id="PPARG">
    <property type="organism name" value="human"/>
</dbReference>
<dbReference type="EvolutionaryTrace" id="P37231"/>
<dbReference type="GeneWiki" id="Peroxisome_proliferator-activated_receptor_gamma"/>
<dbReference type="GenomeRNAi" id="5468"/>
<dbReference type="Pharos" id="P37231">
    <property type="development level" value="Tclin"/>
</dbReference>
<dbReference type="PRO" id="PR:P37231"/>
<dbReference type="Proteomes" id="UP000005640">
    <property type="component" value="Chromosome 3"/>
</dbReference>
<dbReference type="RNAct" id="P37231">
    <property type="molecule type" value="protein"/>
</dbReference>
<dbReference type="Bgee" id="ENSG00000132170">
    <property type="expression patterns" value="Expressed in omental fat pad and 118 other cell types or tissues"/>
</dbReference>
<dbReference type="ExpressionAtlas" id="P37231">
    <property type="expression patterns" value="baseline and differential"/>
</dbReference>
<dbReference type="GO" id="GO:0000785">
    <property type="term" value="C:chromatin"/>
    <property type="evidence" value="ECO:0000247"/>
    <property type="project" value="NTNU_SB"/>
</dbReference>
<dbReference type="GO" id="GO:0005829">
    <property type="term" value="C:cytosol"/>
    <property type="evidence" value="ECO:0000250"/>
    <property type="project" value="BHF-UCL"/>
</dbReference>
<dbReference type="GO" id="GO:0043231">
    <property type="term" value="C:intracellular membrane-bounded organelle"/>
    <property type="evidence" value="ECO:0000314"/>
    <property type="project" value="HPA"/>
</dbReference>
<dbReference type="GO" id="GO:0005654">
    <property type="term" value="C:nucleoplasm"/>
    <property type="evidence" value="ECO:0000314"/>
    <property type="project" value="HPA"/>
</dbReference>
<dbReference type="GO" id="GO:0005634">
    <property type="term" value="C:nucleus"/>
    <property type="evidence" value="ECO:0000314"/>
    <property type="project" value="BHF-UCL"/>
</dbReference>
<dbReference type="GO" id="GO:0043235">
    <property type="term" value="C:receptor complex"/>
    <property type="evidence" value="ECO:0000314"/>
    <property type="project" value="UniProtKB"/>
</dbReference>
<dbReference type="GO" id="GO:0090575">
    <property type="term" value="C:RNA polymerase II transcription regulator complex"/>
    <property type="evidence" value="ECO:0000314"/>
    <property type="project" value="BHF-UCL"/>
</dbReference>
<dbReference type="GO" id="GO:0051393">
    <property type="term" value="F:alpha-actinin binding"/>
    <property type="evidence" value="ECO:0000353"/>
    <property type="project" value="UniProtKB"/>
</dbReference>
<dbReference type="GO" id="GO:0050544">
    <property type="term" value="F:arachidonate binding"/>
    <property type="evidence" value="ECO:0000250"/>
    <property type="project" value="BHF-UCL"/>
</dbReference>
<dbReference type="GO" id="GO:0003682">
    <property type="term" value="F:chromatin binding"/>
    <property type="evidence" value="ECO:0000250"/>
    <property type="project" value="UniProtKB"/>
</dbReference>
<dbReference type="GO" id="GO:0003677">
    <property type="term" value="F:DNA binding"/>
    <property type="evidence" value="ECO:0000314"/>
    <property type="project" value="BHF-UCL"/>
</dbReference>
<dbReference type="GO" id="GO:0050692">
    <property type="term" value="F:DNA binding domain binding"/>
    <property type="evidence" value="ECO:0000314"/>
    <property type="project" value="CAFA"/>
</dbReference>
<dbReference type="GO" id="GO:0001228">
    <property type="term" value="F:DNA-binding transcription activator activity, RNA polymerase II-specific"/>
    <property type="evidence" value="ECO:0000314"/>
    <property type="project" value="BHF-UCL"/>
</dbReference>
<dbReference type="GO" id="GO:0003700">
    <property type="term" value="F:DNA-binding transcription factor activity"/>
    <property type="evidence" value="ECO:0000314"/>
    <property type="project" value="BHF-UCL"/>
</dbReference>
<dbReference type="GO" id="GO:0000981">
    <property type="term" value="F:DNA-binding transcription factor activity, RNA polymerase II-specific"/>
    <property type="evidence" value="ECO:0000247"/>
    <property type="project" value="NTNU_SB"/>
</dbReference>
<dbReference type="GO" id="GO:0140297">
    <property type="term" value="F:DNA-binding transcription factor binding"/>
    <property type="evidence" value="ECO:0000314"/>
    <property type="project" value="BHF-UCL"/>
</dbReference>
<dbReference type="GO" id="GO:0001227">
    <property type="term" value="F:DNA-binding transcription repressor activity, RNA polymerase II-specific"/>
    <property type="evidence" value="ECO:0000318"/>
    <property type="project" value="GO_Central"/>
</dbReference>
<dbReference type="GO" id="GO:0003690">
    <property type="term" value="F:double-stranded DNA binding"/>
    <property type="evidence" value="ECO:0000315"/>
    <property type="project" value="CAFA"/>
</dbReference>
<dbReference type="GO" id="GO:0070888">
    <property type="term" value="F:E-box binding"/>
    <property type="evidence" value="ECO:0000250"/>
    <property type="project" value="UniProtKB"/>
</dbReference>
<dbReference type="GO" id="GO:0019899">
    <property type="term" value="F:enzyme binding"/>
    <property type="evidence" value="ECO:0000353"/>
    <property type="project" value="UniProtKB"/>
</dbReference>
<dbReference type="GO" id="GO:0042802">
    <property type="term" value="F:identical protein binding"/>
    <property type="evidence" value="ECO:0000353"/>
    <property type="project" value="IntAct"/>
</dbReference>
<dbReference type="GO" id="GO:0050693">
    <property type="term" value="F:LBD domain binding"/>
    <property type="evidence" value="ECO:0000314"/>
    <property type="project" value="CAFA"/>
</dbReference>
<dbReference type="GO" id="GO:0004879">
    <property type="term" value="F:nuclear receptor activity"/>
    <property type="evidence" value="ECO:0000314"/>
    <property type="project" value="BHF-UCL"/>
</dbReference>
<dbReference type="GO" id="GO:0046965">
    <property type="term" value="F:nuclear retinoid X receptor binding"/>
    <property type="evidence" value="ECO:0000314"/>
    <property type="project" value="BHF-UCL"/>
</dbReference>
<dbReference type="GO" id="GO:0003676">
    <property type="term" value="F:nucleic acid binding"/>
    <property type="evidence" value="ECO:0000269"/>
    <property type="project" value="DisProt"/>
</dbReference>
<dbReference type="GO" id="GO:0042277">
    <property type="term" value="F:peptide binding"/>
    <property type="evidence" value="ECO:0000314"/>
    <property type="project" value="CAFA"/>
</dbReference>
<dbReference type="GO" id="GO:0004955">
    <property type="term" value="F:prostaglandin receptor activity"/>
    <property type="evidence" value="ECO:0000304"/>
    <property type="project" value="BHF-UCL"/>
</dbReference>
<dbReference type="GO" id="GO:0070412">
    <property type="term" value="F:R-SMAD binding"/>
    <property type="evidence" value="ECO:0000353"/>
    <property type="project" value="BHF-UCL"/>
</dbReference>
<dbReference type="GO" id="GO:0000978">
    <property type="term" value="F:RNA polymerase II cis-regulatory region sequence-specific DNA binding"/>
    <property type="evidence" value="ECO:0000314"/>
    <property type="project" value="BHF-UCL"/>
</dbReference>
<dbReference type="GO" id="GO:0043565">
    <property type="term" value="F:sequence-specific DNA binding"/>
    <property type="evidence" value="ECO:0000314"/>
    <property type="project" value="BHF-UCL"/>
</dbReference>
<dbReference type="GO" id="GO:0097677">
    <property type="term" value="F:STAT family protein binding"/>
    <property type="evidence" value="ECO:0000353"/>
    <property type="project" value="ARUK-UCL"/>
</dbReference>
<dbReference type="GO" id="GO:0000976">
    <property type="term" value="F:transcription cis-regulatory region binding"/>
    <property type="evidence" value="ECO:0000314"/>
    <property type="project" value="BHF-UCL"/>
</dbReference>
<dbReference type="GO" id="GO:0001221">
    <property type="term" value="F:transcription coregulator binding"/>
    <property type="evidence" value="ECO:0000353"/>
    <property type="project" value="UniProtKB"/>
</dbReference>
<dbReference type="GO" id="GO:0050699">
    <property type="term" value="F:WW domain binding"/>
    <property type="evidence" value="ECO:0000315"/>
    <property type="project" value="MGI"/>
</dbReference>
<dbReference type="GO" id="GO:0008270">
    <property type="term" value="F:zinc ion binding"/>
    <property type="evidence" value="ECO:0000314"/>
    <property type="project" value="CAFA"/>
</dbReference>
<dbReference type="GO" id="GO:0030509">
    <property type="term" value="P:BMP signaling pathway"/>
    <property type="evidence" value="ECO:0000316"/>
    <property type="project" value="BHF-UCL"/>
</dbReference>
<dbReference type="GO" id="GO:0030154">
    <property type="term" value="P:cell differentiation"/>
    <property type="evidence" value="ECO:0000318"/>
    <property type="project" value="GO_Central"/>
</dbReference>
<dbReference type="GO" id="GO:0045165">
    <property type="term" value="P:cell fate commitment"/>
    <property type="evidence" value="ECO:0000250"/>
    <property type="project" value="BHF-UCL"/>
</dbReference>
<dbReference type="GO" id="GO:0048469">
    <property type="term" value="P:cell maturation"/>
    <property type="evidence" value="ECO:0000314"/>
    <property type="project" value="BHF-UCL"/>
</dbReference>
<dbReference type="GO" id="GO:0071456">
    <property type="term" value="P:cellular response to hypoxia"/>
    <property type="evidence" value="ECO:0000250"/>
    <property type="project" value="BHF-UCL"/>
</dbReference>
<dbReference type="GO" id="GO:0032869">
    <property type="term" value="P:cellular response to insulin stimulus"/>
    <property type="evidence" value="ECO:0000315"/>
    <property type="project" value="BHF-UCL"/>
</dbReference>
<dbReference type="GO" id="GO:0071404">
    <property type="term" value="P:cellular response to low-density lipoprotein particle stimulus"/>
    <property type="evidence" value="ECO:0000314"/>
    <property type="project" value="BHF-UCL"/>
</dbReference>
<dbReference type="GO" id="GO:0030855">
    <property type="term" value="P:epithelial cell differentiation"/>
    <property type="evidence" value="ECO:0000250"/>
    <property type="project" value="BHF-UCL"/>
</dbReference>
<dbReference type="GO" id="GO:0006631">
    <property type="term" value="P:fatty acid metabolic process"/>
    <property type="evidence" value="ECO:0000318"/>
    <property type="project" value="GO_Central"/>
</dbReference>
<dbReference type="GO" id="GO:0042593">
    <property type="term" value="P:glucose homeostasis"/>
    <property type="evidence" value="ECO:0000315"/>
    <property type="project" value="BHF-UCL"/>
</dbReference>
<dbReference type="GO" id="GO:0009755">
    <property type="term" value="P:hormone-mediated signaling pathway"/>
    <property type="evidence" value="ECO:0000318"/>
    <property type="project" value="GO_Central"/>
</dbReference>
<dbReference type="GO" id="GO:0045087">
    <property type="term" value="P:innate immune response"/>
    <property type="evidence" value="ECO:0000304"/>
    <property type="project" value="BHF-UCL"/>
</dbReference>
<dbReference type="GO" id="GO:0030522">
    <property type="term" value="P:intracellular receptor signaling pathway"/>
    <property type="evidence" value="ECO:0000318"/>
    <property type="project" value="GO_Central"/>
</dbReference>
<dbReference type="GO" id="GO:0055088">
    <property type="term" value="P:lipid homeostasis"/>
    <property type="evidence" value="ECO:0000304"/>
    <property type="project" value="BHF-UCL"/>
</dbReference>
<dbReference type="GO" id="GO:0006629">
    <property type="term" value="P:lipid metabolic process"/>
    <property type="evidence" value="ECO:0000304"/>
    <property type="project" value="ProtInc"/>
</dbReference>
<dbReference type="GO" id="GO:0042953">
    <property type="term" value="P:lipoprotein transport"/>
    <property type="evidence" value="ECO:0000314"/>
    <property type="project" value="BHF-UCL"/>
</dbReference>
<dbReference type="GO" id="GO:0015909">
    <property type="term" value="P:long-chain fatty acid transport"/>
    <property type="evidence" value="ECO:0000250"/>
    <property type="project" value="BHF-UCL"/>
</dbReference>
<dbReference type="GO" id="GO:0030224">
    <property type="term" value="P:monocyte differentiation"/>
    <property type="evidence" value="ECO:0000314"/>
    <property type="project" value="BHF-UCL"/>
</dbReference>
<dbReference type="GO" id="GO:0042789">
    <property type="term" value="P:mRNA transcription by RNA polymerase II"/>
    <property type="evidence" value="ECO:0000314"/>
    <property type="project" value="ComplexPortal"/>
</dbReference>
<dbReference type="GO" id="GO:0016525">
    <property type="term" value="P:negative regulation of angiogenesis"/>
    <property type="evidence" value="ECO:0000314"/>
    <property type="project" value="BHF-UCL"/>
</dbReference>
<dbReference type="GO" id="GO:0043537">
    <property type="term" value="P:negative regulation of blood vessel endothelial cell migration"/>
    <property type="evidence" value="ECO:0000314"/>
    <property type="project" value="BHF-UCL"/>
</dbReference>
<dbReference type="GO" id="GO:0030514">
    <property type="term" value="P:negative regulation of BMP signaling pathway"/>
    <property type="evidence" value="ECO:0000315"/>
    <property type="project" value="ARUK-UCL"/>
</dbReference>
<dbReference type="GO" id="GO:1903243">
    <property type="term" value="P:negative regulation of cardiac muscle hypertrophy in response to stress"/>
    <property type="evidence" value="ECO:0000250"/>
    <property type="project" value="BHF-UCL"/>
</dbReference>
<dbReference type="GO" id="GO:1903845">
    <property type="term" value="P:negative regulation of cellular response to transforming growth factor beta stimulus"/>
    <property type="evidence" value="ECO:0000316"/>
    <property type="project" value="ARUK-UCL"/>
</dbReference>
<dbReference type="GO" id="GO:0010887">
    <property type="term" value="P:negative regulation of cholesterol storage"/>
    <property type="evidence" value="ECO:0000314"/>
    <property type="project" value="BHF-UCL"/>
</dbReference>
<dbReference type="GO" id="GO:1904597">
    <property type="term" value="P:negative regulation of connective tissue replacement involved in inflammatory response wound healing"/>
    <property type="evidence" value="ECO:0000250"/>
    <property type="project" value="BHF-UCL"/>
</dbReference>
<dbReference type="GO" id="GO:0045892">
    <property type="term" value="P:negative regulation of DNA-templated transcription"/>
    <property type="evidence" value="ECO:0000250"/>
    <property type="project" value="BHF-UCL"/>
</dbReference>
<dbReference type="GO" id="GO:1901202">
    <property type="term" value="P:negative regulation of extracellular matrix assembly"/>
    <property type="evidence" value="ECO:0000314"/>
    <property type="project" value="BHF-UCL"/>
</dbReference>
<dbReference type="GO" id="GO:0010629">
    <property type="term" value="P:negative regulation of gene expression"/>
    <property type="evidence" value="ECO:0000314"/>
    <property type="project" value="ARUK-UCL"/>
</dbReference>
<dbReference type="GO" id="GO:0050728">
    <property type="term" value="P:negative regulation of inflammatory response"/>
    <property type="evidence" value="ECO:0000318"/>
    <property type="project" value="GO_Central"/>
</dbReference>
<dbReference type="GO" id="GO:0010888">
    <property type="term" value="P:negative regulation of lipid storage"/>
    <property type="evidence" value="ECO:0000250"/>
    <property type="project" value="BHF-UCL"/>
</dbReference>
<dbReference type="GO" id="GO:0010745">
    <property type="term" value="P:negative regulation of macrophage derived foam cell differentiation"/>
    <property type="evidence" value="ECO:0000314"/>
    <property type="project" value="BHF-UCL"/>
</dbReference>
<dbReference type="GO" id="GO:0043409">
    <property type="term" value="P:negative regulation of MAPK cascade"/>
    <property type="evidence" value="ECO:0000314"/>
    <property type="project" value="BHF-UCL"/>
</dbReference>
<dbReference type="GO" id="GO:1902894">
    <property type="term" value="P:negative regulation of miRNA transcription"/>
    <property type="evidence" value="ECO:0000314"/>
    <property type="project" value="BHF-UCL"/>
</dbReference>
<dbReference type="GO" id="GO:0090258">
    <property type="term" value="P:negative regulation of mitochondrial fission"/>
    <property type="evidence" value="ECO:0000315"/>
    <property type="project" value="BHF-UCL"/>
</dbReference>
<dbReference type="GO" id="GO:0045668">
    <property type="term" value="P:negative regulation of osteoblast differentiation"/>
    <property type="evidence" value="ECO:0000315"/>
    <property type="project" value="ARUK-UCL"/>
</dbReference>
<dbReference type="GO" id="GO:1904893">
    <property type="term" value="P:negative regulation of receptor signaling pathway via STAT"/>
    <property type="evidence" value="ECO:0000314"/>
    <property type="project" value="ARUK-UCL"/>
</dbReference>
<dbReference type="GO" id="GO:0060392">
    <property type="term" value="P:negative regulation of SMAD protein signal transduction"/>
    <property type="evidence" value="ECO:0000316"/>
    <property type="project" value="ARUK-UCL"/>
</dbReference>
<dbReference type="GO" id="GO:0048662">
    <property type="term" value="P:negative regulation of smooth muscle cell proliferation"/>
    <property type="evidence" value="ECO:0000314"/>
    <property type="project" value="BHF-UCL"/>
</dbReference>
<dbReference type="GO" id="GO:0000122">
    <property type="term" value="P:negative regulation of transcription by RNA polymerase II"/>
    <property type="evidence" value="ECO:0000314"/>
    <property type="project" value="BHF-UCL"/>
</dbReference>
<dbReference type="GO" id="GO:0030512">
    <property type="term" value="P:negative regulation of transforming growth factor beta receptor signaling pathway"/>
    <property type="evidence" value="ECO:0000314"/>
    <property type="project" value="BHF-UCL"/>
</dbReference>
<dbReference type="GO" id="GO:0060336">
    <property type="term" value="P:negative regulation of type II interferon-mediated signaling pathway"/>
    <property type="evidence" value="ECO:0000315"/>
    <property type="project" value="BHF-UCL"/>
</dbReference>
<dbReference type="GO" id="GO:1904706">
    <property type="term" value="P:negative regulation of vascular associated smooth muscle cell proliferation"/>
    <property type="evidence" value="ECO:0000314"/>
    <property type="project" value="BHF-UCL"/>
</dbReference>
<dbReference type="GO" id="GO:1905563">
    <property type="term" value="P:negative regulation of vascular endothelial cell proliferation"/>
    <property type="evidence" value="ECO:0000315"/>
    <property type="project" value="BHF-UCL"/>
</dbReference>
<dbReference type="GO" id="GO:0035357">
    <property type="term" value="P:peroxisome proliferator activated receptor signaling pathway"/>
    <property type="evidence" value="ECO:0000314"/>
    <property type="project" value="BHF-UCL"/>
</dbReference>
<dbReference type="GO" id="GO:0001890">
    <property type="term" value="P:placenta development"/>
    <property type="evidence" value="ECO:0000250"/>
    <property type="project" value="BHF-UCL"/>
</dbReference>
<dbReference type="GO" id="GO:0070165">
    <property type="term" value="P:positive regulation of adiponectin secretion"/>
    <property type="evidence" value="ECO:0000250"/>
    <property type="project" value="BHF-UCL"/>
</dbReference>
<dbReference type="GO" id="GO:1904179">
    <property type="term" value="P:positive regulation of adipose tissue development"/>
    <property type="evidence" value="ECO:0000303"/>
    <property type="project" value="ComplexPortal"/>
</dbReference>
<dbReference type="GO" id="GO:2001235">
    <property type="term" value="P:positive regulation of apoptotic signaling pathway"/>
    <property type="evidence" value="ECO:0000314"/>
    <property type="project" value="BHF-UCL"/>
</dbReference>
<dbReference type="GO" id="GO:0010875">
    <property type="term" value="P:positive regulation of cholesterol efflux"/>
    <property type="evidence" value="ECO:0000314"/>
    <property type="project" value="BHF-UCL"/>
</dbReference>
<dbReference type="GO" id="GO:0032376">
    <property type="term" value="P:positive regulation of cholesterol transport"/>
    <property type="evidence" value="ECO:0000314"/>
    <property type="project" value="BHF-UCL"/>
</dbReference>
<dbReference type="GO" id="GO:0045893">
    <property type="term" value="P:positive regulation of DNA-templated transcription"/>
    <property type="evidence" value="ECO:0000315"/>
    <property type="project" value="CAFA"/>
</dbReference>
<dbReference type="GO" id="GO:0045600">
    <property type="term" value="P:positive regulation of fat cell differentiation"/>
    <property type="evidence" value="ECO:0000250"/>
    <property type="project" value="ARUK-UCL"/>
</dbReference>
<dbReference type="GO" id="GO:0045923">
    <property type="term" value="P:positive regulation of fatty acid metabolic process"/>
    <property type="evidence" value="ECO:0000318"/>
    <property type="project" value="GO_Central"/>
</dbReference>
<dbReference type="GO" id="GO:0010628">
    <property type="term" value="P:positive regulation of gene expression"/>
    <property type="evidence" value="ECO:0000314"/>
    <property type="project" value="BHF-UCL"/>
</dbReference>
<dbReference type="GO" id="GO:1905599">
    <property type="term" value="P:positive regulation of low-density lipoprotein receptor activity"/>
    <property type="evidence" value="ECO:0000314"/>
    <property type="project" value="BHF-UCL"/>
</dbReference>
<dbReference type="GO" id="GO:1902895">
    <property type="term" value="P:positive regulation of miRNA transcription"/>
    <property type="evidence" value="ECO:0000314"/>
    <property type="project" value="BHF-UCL"/>
</dbReference>
<dbReference type="GO" id="GO:0045944">
    <property type="term" value="P:positive regulation of transcription by RNA polymerase II"/>
    <property type="evidence" value="ECO:0000314"/>
    <property type="project" value="UniProtKB"/>
</dbReference>
<dbReference type="GO" id="GO:1905461">
    <property type="term" value="P:positive regulation of vascular associated smooth muscle cell apoptotic process"/>
    <property type="evidence" value="ECO:0000315"/>
    <property type="project" value="BHF-UCL"/>
</dbReference>
<dbReference type="GO" id="GO:0008217">
    <property type="term" value="P:regulation of blood pressure"/>
    <property type="evidence" value="ECO:0000315"/>
    <property type="project" value="BHF-UCL"/>
</dbReference>
<dbReference type="GO" id="GO:1900076">
    <property type="term" value="P:regulation of cellular response to insulin stimulus"/>
    <property type="evidence" value="ECO:0000303"/>
    <property type="project" value="ComplexPortal"/>
</dbReference>
<dbReference type="GO" id="GO:0042752">
    <property type="term" value="P:regulation of circadian rhythm"/>
    <property type="evidence" value="ECO:0000250"/>
    <property type="project" value="UniProtKB"/>
</dbReference>
<dbReference type="GO" id="GO:0006357">
    <property type="term" value="P:regulation of transcription by RNA polymerase II"/>
    <property type="evidence" value="ECO:0000250"/>
    <property type="project" value="UniProtKB"/>
</dbReference>
<dbReference type="GO" id="GO:0033993">
    <property type="term" value="P:response to lipid"/>
    <property type="evidence" value="ECO:0000250"/>
    <property type="project" value="BHF-UCL"/>
</dbReference>
<dbReference type="GO" id="GO:0007584">
    <property type="term" value="P:response to nutrient"/>
    <property type="evidence" value="ECO:0000304"/>
    <property type="project" value="ProtInc"/>
</dbReference>
<dbReference type="GO" id="GO:0048384">
    <property type="term" value="P:retinoic acid receptor signaling pathway"/>
    <property type="evidence" value="ECO:0000314"/>
    <property type="project" value="GO_Central"/>
</dbReference>
<dbReference type="GO" id="GO:0048511">
    <property type="term" value="P:rhythmic process"/>
    <property type="evidence" value="ECO:0007669"/>
    <property type="project" value="UniProtKB-KW"/>
</dbReference>
<dbReference type="GO" id="GO:0007165">
    <property type="term" value="P:signal transduction"/>
    <property type="evidence" value="ECO:0000314"/>
    <property type="project" value="BHF-UCL"/>
</dbReference>
<dbReference type="GO" id="GO:0050872">
    <property type="term" value="P:white fat cell differentiation"/>
    <property type="evidence" value="ECO:0000304"/>
    <property type="project" value="UniProtKB"/>
</dbReference>
<dbReference type="CDD" id="cd06965">
    <property type="entry name" value="NR_DBD_Ppar"/>
    <property type="match status" value="1"/>
</dbReference>
<dbReference type="CDD" id="cd06932">
    <property type="entry name" value="NR_LBD_PPAR"/>
    <property type="match status" value="1"/>
</dbReference>
<dbReference type="DisProt" id="DP00718"/>
<dbReference type="FunFam" id="1.10.565.10:FF:000017">
    <property type="entry name" value="Peroxisome proliferator-activated receptor gamma"/>
    <property type="match status" value="1"/>
</dbReference>
<dbReference type="FunFam" id="3.30.50.10:FF:000010">
    <property type="entry name" value="Peroxisome proliferator-activated receptor gamma"/>
    <property type="match status" value="1"/>
</dbReference>
<dbReference type="Gene3D" id="3.30.50.10">
    <property type="entry name" value="Erythroid Transcription Factor GATA-1, subunit A"/>
    <property type="match status" value="1"/>
</dbReference>
<dbReference type="Gene3D" id="1.10.565.10">
    <property type="entry name" value="Retinoid X Receptor"/>
    <property type="match status" value="1"/>
</dbReference>
<dbReference type="IDEAL" id="IID00041"/>
<dbReference type="InterPro" id="IPR003074">
    <property type="entry name" value="1Cnucl_rcpt"/>
</dbReference>
<dbReference type="InterPro" id="IPR035500">
    <property type="entry name" value="NHR-like_dom_sf"/>
</dbReference>
<dbReference type="InterPro" id="IPR000536">
    <property type="entry name" value="Nucl_hrmn_rcpt_lig-bd"/>
</dbReference>
<dbReference type="InterPro" id="IPR050234">
    <property type="entry name" value="Nuclear_hormone_rcpt_NR1"/>
</dbReference>
<dbReference type="InterPro" id="IPR001723">
    <property type="entry name" value="Nuclear_hrmn_rcpt"/>
</dbReference>
<dbReference type="InterPro" id="IPR003077">
    <property type="entry name" value="PPAR-gamma"/>
</dbReference>
<dbReference type="InterPro" id="IPR022590">
    <property type="entry name" value="PPARgamma_N"/>
</dbReference>
<dbReference type="InterPro" id="IPR001628">
    <property type="entry name" value="Znf_hrmn_rcpt"/>
</dbReference>
<dbReference type="InterPro" id="IPR013088">
    <property type="entry name" value="Znf_NHR/GATA"/>
</dbReference>
<dbReference type="PANTHER" id="PTHR24082">
    <property type="entry name" value="NUCLEAR HORMONE RECEPTOR"/>
    <property type="match status" value="1"/>
</dbReference>
<dbReference type="PANTHER" id="PTHR24082:SF488">
    <property type="entry name" value="PEROXISOME PROLIFERATOR-ACTIVATED RECEPTOR GAMMA"/>
    <property type="match status" value="1"/>
</dbReference>
<dbReference type="Pfam" id="PF00104">
    <property type="entry name" value="Hormone_recep"/>
    <property type="match status" value="1"/>
</dbReference>
<dbReference type="Pfam" id="PF12577">
    <property type="entry name" value="PPARgamma_N"/>
    <property type="match status" value="1"/>
</dbReference>
<dbReference type="Pfam" id="PF00105">
    <property type="entry name" value="zf-C4"/>
    <property type="match status" value="1"/>
</dbReference>
<dbReference type="PRINTS" id="PR01288">
    <property type="entry name" value="PROXISOMEPAR"/>
</dbReference>
<dbReference type="PRINTS" id="PR01291">
    <property type="entry name" value="PROXISOMPAGR"/>
</dbReference>
<dbReference type="PRINTS" id="PR00398">
    <property type="entry name" value="STRDHORMONER"/>
</dbReference>
<dbReference type="PRINTS" id="PR00047">
    <property type="entry name" value="STROIDFINGER"/>
</dbReference>
<dbReference type="SMART" id="SM00430">
    <property type="entry name" value="HOLI"/>
    <property type="match status" value="1"/>
</dbReference>
<dbReference type="SMART" id="SM00399">
    <property type="entry name" value="ZnF_C4"/>
    <property type="match status" value="1"/>
</dbReference>
<dbReference type="SUPFAM" id="SSF57716">
    <property type="entry name" value="Glucocorticoid receptor-like (DNA-binding domain)"/>
    <property type="match status" value="1"/>
</dbReference>
<dbReference type="SUPFAM" id="SSF48508">
    <property type="entry name" value="Nuclear receptor ligand-binding domain"/>
    <property type="match status" value="1"/>
</dbReference>
<dbReference type="PROSITE" id="PS51843">
    <property type="entry name" value="NR_LBD"/>
    <property type="match status" value="1"/>
</dbReference>
<dbReference type="PROSITE" id="PS00031">
    <property type="entry name" value="NUCLEAR_REC_DBD_1"/>
    <property type="match status" value="1"/>
</dbReference>
<dbReference type="PROSITE" id="PS51030">
    <property type="entry name" value="NUCLEAR_REC_DBD_2"/>
    <property type="match status" value="1"/>
</dbReference>
<name>PPARG_HUMAN</name>